<reference key="1">
    <citation type="journal article" date="1989" name="Science">
        <title>Identification of the cystic fibrosis gene: cloning and characterization of complementary DNA.</title>
        <authorList>
            <person name="Riordan J.R."/>
            <person name="Rommens J.M."/>
            <person name="Kerem B."/>
            <person name="Alon N."/>
            <person name="Rozmahel R."/>
            <person name="Grzelczak Z."/>
            <person name="Zielenski J."/>
            <person name="Lok S."/>
            <person name="Plavsic N."/>
            <person name="Chou J.-L."/>
            <person name="Drumm M.L."/>
            <person name="Iannuzzi M.C."/>
            <person name="Collins F.S."/>
            <person name="Tsui L.-C."/>
        </authorList>
    </citation>
    <scope>NUCLEOTIDE SEQUENCE [MRNA] (ISOFORM 1)</scope>
    <scope>VARIANT MET-470</scope>
</reference>
<reference key="2">
    <citation type="journal article" date="1991" name="Genomics">
        <title>Genomic DNA sequence of the cystic fibrosis transmembrane conductance regulator (CFTR) gene.</title>
        <authorList>
            <person name="Zielenski J."/>
            <person name="Rozmahel R."/>
            <person name="Bozon D."/>
            <person name="Kerem B."/>
            <person name="Grzelczak Z."/>
            <person name="Riordan J.R."/>
            <person name="Rommens J."/>
            <person name="Tsui L.-C."/>
        </authorList>
    </citation>
    <scope>NUCLEOTIDE SEQUENCE [GENOMIC DNA]</scope>
    <scope>VARIANT MET-470</scope>
</reference>
<reference key="3">
    <citation type="submission" date="2006-01" db="EMBL/GenBank/DDBJ databases">
        <authorList>
            <person name="Stacy R."/>
            <person name="Subramanian S."/>
            <person name="Deodato C."/>
            <person name="Burkhardt P."/>
            <person name="Song Y."/>
            <person name="Paddock M."/>
            <person name="Chang J."/>
            <person name="Zhou Y."/>
            <person name="Haugen E."/>
            <person name="Waring D."/>
            <person name="Chapman P."/>
            <person name="Hayden H."/>
            <person name="Levy R."/>
            <person name="Wu Z."/>
            <person name="Rouse G."/>
            <person name="James R."/>
            <person name="Phelps K."/>
            <person name="Olson M.V."/>
            <person name="Kaul R."/>
        </authorList>
    </citation>
    <scope>NUCLEOTIDE SEQUENCE [GENOMIC DNA]</scope>
    <scope>VARIANTS MET-470 AND TRP-1453</scope>
</reference>
<reference key="4">
    <citation type="journal article" date="2003" name="Nature">
        <title>The DNA sequence of human chromosome 7.</title>
        <authorList>
            <person name="Hillier L.W."/>
            <person name="Fulton R.S."/>
            <person name="Fulton L.A."/>
            <person name="Graves T.A."/>
            <person name="Pepin K.H."/>
            <person name="Wagner-McPherson C."/>
            <person name="Layman D."/>
            <person name="Maas J."/>
            <person name="Jaeger S."/>
            <person name="Walker R."/>
            <person name="Wylie K."/>
            <person name="Sekhon M."/>
            <person name="Becker M.C."/>
            <person name="O'Laughlin M.D."/>
            <person name="Schaller M.E."/>
            <person name="Fewell G.A."/>
            <person name="Delehaunty K.D."/>
            <person name="Miner T.L."/>
            <person name="Nash W.E."/>
            <person name="Cordes M."/>
            <person name="Du H."/>
            <person name="Sun H."/>
            <person name="Edwards J."/>
            <person name="Bradshaw-Cordum H."/>
            <person name="Ali J."/>
            <person name="Andrews S."/>
            <person name="Isak A."/>
            <person name="Vanbrunt A."/>
            <person name="Nguyen C."/>
            <person name="Du F."/>
            <person name="Lamar B."/>
            <person name="Courtney L."/>
            <person name="Kalicki J."/>
            <person name="Ozersky P."/>
            <person name="Bielicki L."/>
            <person name="Scott K."/>
            <person name="Holmes A."/>
            <person name="Harkins R."/>
            <person name="Harris A."/>
            <person name="Strong C.M."/>
            <person name="Hou S."/>
            <person name="Tomlinson C."/>
            <person name="Dauphin-Kohlberg S."/>
            <person name="Kozlowicz-Reilly A."/>
            <person name="Leonard S."/>
            <person name="Rohlfing T."/>
            <person name="Rock S.M."/>
            <person name="Tin-Wollam A.-M."/>
            <person name="Abbott A."/>
            <person name="Minx P."/>
            <person name="Maupin R."/>
            <person name="Strowmatt C."/>
            <person name="Latreille P."/>
            <person name="Miller N."/>
            <person name="Johnson D."/>
            <person name="Murray J."/>
            <person name="Woessner J.P."/>
            <person name="Wendl M.C."/>
            <person name="Yang S.-P."/>
            <person name="Schultz B.R."/>
            <person name="Wallis J.W."/>
            <person name="Spieth J."/>
            <person name="Bieri T.A."/>
            <person name="Nelson J.O."/>
            <person name="Berkowicz N."/>
            <person name="Wohldmann P.E."/>
            <person name="Cook L.L."/>
            <person name="Hickenbotham M.T."/>
            <person name="Eldred J."/>
            <person name="Williams D."/>
            <person name="Bedell J.A."/>
            <person name="Mardis E.R."/>
            <person name="Clifton S.W."/>
            <person name="Chissoe S.L."/>
            <person name="Marra M.A."/>
            <person name="Raymond C."/>
            <person name="Haugen E."/>
            <person name="Gillett W."/>
            <person name="Zhou Y."/>
            <person name="James R."/>
            <person name="Phelps K."/>
            <person name="Iadanoto S."/>
            <person name="Bubb K."/>
            <person name="Simms E."/>
            <person name="Levy R."/>
            <person name="Clendenning J."/>
            <person name="Kaul R."/>
            <person name="Kent W.J."/>
            <person name="Furey T.S."/>
            <person name="Baertsch R.A."/>
            <person name="Brent M.R."/>
            <person name="Keibler E."/>
            <person name="Flicek P."/>
            <person name="Bork P."/>
            <person name="Suyama M."/>
            <person name="Bailey J.A."/>
            <person name="Portnoy M.E."/>
            <person name="Torrents D."/>
            <person name="Chinwalla A.T."/>
            <person name="Gish W.R."/>
            <person name="Eddy S.R."/>
            <person name="McPherson J.D."/>
            <person name="Olson M.V."/>
            <person name="Eichler E.E."/>
            <person name="Green E.D."/>
            <person name="Waterston R.H."/>
            <person name="Wilson R.K."/>
        </authorList>
    </citation>
    <scope>NUCLEOTIDE SEQUENCE [LARGE SCALE GENOMIC DNA]</scope>
</reference>
<reference key="5">
    <citation type="journal article" date="2003" name="Science">
        <title>Human chromosome 7: DNA sequence and biology.</title>
        <authorList>
            <person name="Scherer S.W."/>
            <person name="Cheung J."/>
            <person name="MacDonald J.R."/>
            <person name="Osborne L.R."/>
            <person name="Nakabayashi K."/>
            <person name="Herbrick J.-A."/>
            <person name="Carson A.R."/>
            <person name="Parker-Katiraee L."/>
            <person name="Skaug J."/>
            <person name="Khaja R."/>
            <person name="Zhang J."/>
            <person name="Hudek A.K."/>
            <person name="Li M."/>
            <person name="Haddad M."/>
            <person name="Duggan G.E."/>
            <person name="Fernandez B.A."/>
            <person name="Kanematsu E."/>
            <person name="Gentles S."/>
            <person name="Christopoulos C.C."/>
            <person name="Choufani S."/>
            <person name="Kwasnicka D."/>
            <person name="Zheng X.H."/>
            <person name="Lai Z."/>
            <person name="Nusskern D.R."/>
            <person name="Zhang Q."/>
            <person name="Gu Z."/>
            <person name="Lu F."/>
            <person name="Zeesman S."/>
            <person name="Nowaczyk M.J."/>
            <person name="Teshima I."/>
            <person name="Chitayat D."/>
            <person name="Shuman C."/>
            <person name="Weksberg R."/>
            <person name="Zackai E.H."/>
            <person name="Grebe T.A."/>
            <person name="Cox S.R."/>
            <person name="Kirkpatrick S.J."/>
            <person name="Rahman N."/>
            <person name="Friedman J.M."/>
            <person name="Heng H.H.Q."/>
            <person name="Pelicci P.G."/>
            <person name="Lo-Coco F."/>
            <person name="Belloni E."/>
            <person name="Shaffer L.G."/>
            <person name="Pober B."/>
            <person name="Morton C.C."/>
            <person name="Gusella J.F."/>
            <person name="Bruns G.A.P."/>
            <person name="Korf B.R."/>
            <person name="Quade B.J."/>
            <person name="Ligon A.H."/>
            <person name="Ferguson H."/>
            <person name="Higgins A.W."/>
            <person name="Leach N.T."/>
            <person name="Herrick S.R."/>
            <person name="Lemyre E."/>
            <person name="Farra C.G."/>
            <person name="Kim H.-G."/>
            <person name="Summers A.M."/>
            <person name="Gripp K.W."/>
            <person name="Roberts W."/>
            <person name="Szatmari P."/>
            <person name="Winsor E.J.T."/>
            <person name="Grzeschik K.-H."/>
            <person name="Teebi A."/>
            <person name="Minassian B.A."/>
            <person name="Kere J."/>
            <person name="Armengol L."/>
            <person name="Pujana M.A."/>
            <person name="Estivill X."/>
            <person name="Wilson M.D."/>
            <person name="Koop B.F."/>
            <person name="Tosi S."/>
            <person name="Moore G.E."/>
            <person name="Boright A.P."/>
            <person name="Zlotorynski E."/>
            <person name="Kerem B."/>
            <person name="Kroisel P.M."/>
            <person name="Petek E."/>
            <person name="Oscier D.G."/>
            <person name="Mould S.J."/>
            <person name="Doehner H."/>
            <person name="Doehner K."/>
            <person name="Rommens J.M."/>
            <person name="Vincent J.B."/>
            <person name="Venter J.C."/>
            <person name="Li P.W."/>
            <person name="Mural R.J."/>
            <person name="Adams M.D."/>
            <person name="Tsui L.-C."/>
        </authorList>
    </citation>
    <scope>NUCLEOTIDE SEQUENCE [LARGE SCALE GENOMIC DNA]</scope>
</reference>
<reference key="6">
    <citation type="journal article" date="1992" name="J. Biol. Chem.">
        <title>Phosphorylation of the cystic fibrosis transmembrane conductance regulator.</title>
        <authorList>
            <person name="Picciotto M.R."/>
            <person name="Cohn J.A."/>
            <person name="Bertuzzi G."/>
            <person name="Greenguard P."/>
            <person name="Nairn A.C."/>
        </authorList>
    </citation>
    <scope>PHOSPHORYLATION AT SER-660; SER-686; SER-700; SER-737; SER-768; SER-790; SER-795 AND SER-813</scope>
</reference>
<reference key="7">
    <citation type="journal article" date="1994" name="J. Biol. Chem.">
        <title>Mapping of cystic fibrosis transmembrane conductance regulator membrane topology by glycosylation site insertion.</title>
        <authorList>
            <person name="Chang X.-B."/>
            <person name="Hou Y.-X."/>
            <person name="Jensen T.J."/>
            <person name="Riordan J.R."/>
        </authorList>
    </citation>
    <scope>GLYCOSYLATION AT ASN-894 AND ASN-900</scope>
    <scope>TOPOLOGY</scope>
</reference>
<reference key="8">
    <citation type="journal article" date="1997" name="Protein Sci.">
        <title>Evidence for phosphorylation of serine 753 in CFTR using a novel metal-ion affinity resin and matrix-assisted laser desorption mass spectrometry.</title>
        <authorList>
            <person name="Neville D.C.A."/>
            <person name="Rozanas C.R."/>
            <person name="Rice E.M."/>
            <person name="Gruis D.B."/>
            <person name="Verkman A.S."/>
            <person name="Townsend R.R."/>
        </authorList>
    </citation>
    <scope>PHOSPHORYLATION AT SER-660; SER-700; SER-712; SER-737; SER-753; SER-768; SER-795 AND SER-813</scope>
</reference>
<reference key="9">
    <citation type="journal article" date="2000" name="J. Biol. Chem.">
        <title>Splicing factors induce cystic fibrosis transmembrane regulator exon 9 skipping through a nonevolutionary conserved intronic element.</title>
        <authorList>
            <person name="Pagani F."/>
            <person name="Buratti E."/>
            <person name="Stuani C."/>
            <person name="Romano M."/>
            <person name="Zuccato E."/>
            <person name="Niksic M."/>
            <person name="Giglio L."/>
            <person name="Faraguna D."/>
            <person name="Baralle F.E."/>
        </authorList>
    </citation>
    <scope>ALTERNATIVE SPLICING (ISOFORM 2)</scope>
</reference>
<reference key="10">
    <citation type="journal article" date="2000" name="Proc. Natl. Acad. Sci. U.S.A.">
        <title>A functional R domain from cystic fibrosis transmembrane conductance regulator is predominantly unstructured in solution.</title>
        <authorList>
            <person name="Ostedgaard L.S."/>
            <person name="Baldursson O."/>
            <person name="Vermeer D.W."/>
            <person name="Welsh M.J."/>
            <person name="Robertson A.D."/>
        </authorList>
    </citation>
    <scope>DOMAIN</scope>
    <scope>FUNCTION</scope>
    <scope>TRANSPORTER ACTIVITY</scope>
    <scope>SUBCELLULAR LOCATION</scope>
    <scope>PHOSPHORYLATION</scope>
</reference>
<reference key="11">
    <citation type="journal article" date="2001" name="Biochemistry">
        <title>A monomer is the minimum functional unit required for channel and ATPase activity of the cystic fibrosis transmembrane conductance regulator.</title>
        <authorList>
            <person name="Ramjeesingh M."/>
            <person name="Li C."/>
            <person name="Kogan I."/>
            <person name="Wang Y."/>
            <person name="Huan L.J."/>
            <person name="Bear C.E."/>
        </authorList>
    </citation>
    <scope>FUNCTION</scope>
    <scope>TRANSPORTER ACTIVITY</scope>
    <scope>CATALYTIC ACTIVITY</scope>
    <scope>SUBCELLULAR LOCATION</scope>
    <scope>SUBUNIT</scope>
</reference>
<reference key="12">
    <citation type="journal article" date="2002" name="J. Biol. Chem.">
        <title>A Golgi-associated PDZ domain protein modulates cystic fibrosis transmembrane regulator plasma membrane expression.</title>
        <authorList>
            <person name="Cheng J."/>
            <person name="Moyer B.D."/>
            <person name="Milewski M."/>
            <person name="Loffing J."/>
            <person name="Ikeda M."/>
            <person name="Mickle J.E."/>
            <person name="Cutting G.R."/>
            <person name="Li M."/>
            <person name="Stanton B.A."/>
            <person name="Guggino W.B."/>
        </authorList>
    </citation>
    <scope>INTERACTION WITH GOPC</scope>
    <scope>FUNCTION</scope>
    <scope>TRANSPORTER ACTIVITY</scope>
    <scope>SUBCELLULAR LOCATION</scope>
</reference>
<reference key="13">
    <citation type="journal article" date="2002" name="J. Biol. Chem.">
        <title>The cystic fibrosis transmembrane conductance regulator interacts with and regulates the activity of the HCO3- salvage transporter human Na+-HCO3-cotransport isoform 3.</title>
        <authorList>
            <person name="Park M."/>
            <person name="Ko S.B.H."/>
            <person name="Choi J.Y."/>
            <person name="Muallem G."/>
            <person name="Thomas P.J."/>
            <person name="Pushkin A."/>
            <person name="Lee M.-S."/>
            <person name="Kim J.Y."/>
            <person name="Lee M.G."/>
            <person name="Muallem S."/>
            <person name="Kurtz I."/>
        </authorList>
    </citation>
    <scope>INTERACTION WITH SLC4A7 AND NHERF1</scope>
    <scope>FUNCTION</scope>
</reference>
<reference key="14">
    <citation type="journal article" date="2003" name="Am. J. Physiol.">
        <title>Physiological modulation of CFTR activity by AMP-activated protein kinase in polarized T84 cells.</title>
        <authorList>
            <person name="Hallows K.R."/>
            <person name="Kobinger G.P."/>
            <person name="Wilson J.M."/>
            <person name="Witters L.A."/>
            <person name="Foskett J.K."/>
        </authorList>
    </citation>
    <scope>FUNCTION</scope>
    <scope>TRANSPORTER ACTIVITY</scope>
    <scope>SUBCELLULAR LOCATION</scope>
    <scope>PHOSPHORYLATION BY AMPK</scope>
</reference>
<reference key="15">
    <citation type="journal article" date="2003" name="EMBO J.">
        <title>CFTR directly mediates nucleotide-regulated glutathione flux.</title>
        <authorList>
            <person name="Kogan I."/>
            <person name="Ramjeesingh M."/>
            <person name="Li C."/>
            <person name="Kidd J.F."/>
            <person name="Wang Y."/>
            <person name="Leslie E.M."/>
            <person name="Cole S.P."/>
            <person name="Bear C.E."/>
        </authorList>
    </citation>
    <scope>FUNCTION</scope>
    <scope>TRANSPORTER ACTIVITY</scope>
    <scope>BIOPHYSICOCHEMICAL PROPERTIES</scope>
    <scope>MUTAGENESIS OF ARG-347; LYS-464 AND LYS-1250</scope>
</reference>
<reference key="16">
    <citation type="journal article" date="2004" name="J. Biol. Chem.">
        <title>Dynamic control of cystic fibrosis transmembrane conductance regulator Cl(-)/HCO3(-) selectivity by external Cl(-).</title>
        <authorList>
            <person name="Shcheynikov N."/>
            <person name="Kim K.H."/>
            <person name="Kim K.M."/>
            <person name="Dorwart M.R."/>
            <person name="Ko S.B."/>
            <person name="Goto H."/>
            <person name="Naruse S."/>
            <person name="Thomas P.J."/>
            <person name="Muallem S."/>
        </authorList>
    </citation>
    <scope>FUNCTION</scope>
    <scope>TRANSPORTER ACTIVITY</scope>
    <scope>SUBCELLULAR LOCATION</scope>
</reference>
<reference key="17">
    <citation type="journal article" date="2004" name="J. Biol. Chem.">
        <title>Myosin VI regulates endocytosis of the cystic fibrosis transmembrane conductance regulator.</title>
        <authorList>
            <person name="Swiatecka-Urban A."/>
            <person name="Boyd C."/>
            <person name="Coutermarsh B."/>
            <person name="Karlson K.H."/>
            <person name="Barnaby R."/>
            <person name="Aschenbrenner L."/>
            <person name="Langford G.M."/>
            <person name="Hasson T."/>
            <person name="Stanton B.A."/>
        </authorList>
    </citation>
    <scope>INTERACTION WITH MYO6</scope>
    <scope>SUBCELLULAR LOCATION</scope>
</reference>
<reference key="18">
    <citation type="journal article" date="1992" name="FASEB J.">
        <title>Cystic fibrosis transmembrane conductance regulator and the etiology and pathogenesis of cystic fibrosis.</title>
        <authorList>
            <person name="McIntosh I."/>
            <person name="Cutting G.R."/>
        </authorList>
    </citation>
    <scope>REVIEW</scope>
</reference>
<reference key="19">
    <citation type="journal article" date="2003" name="Hum. Mol. Genet.">
        <title>Characterization of disease-associated mutations affecting an exonic splicing enhancer and two cryptic splice sites in exon 13 of the cystic fibrosis transmembrane conductance regulator gene.</title>
        <authorList>
            <person name="Aznarez I."/>
            <person name="Chan E.M."/>
            <person name="Zielenski J."/>
            <person name="Blencowe B.J."/>
            <person name="Tsui L.-C."/>
        </authorList>
    </citation>
    <scope>ALTERNATIVE SPLICING (ISOFORM 3)</scope>
</reference>
<reference key="20">
    <citation type="journal article" date="2003" name="J. Physiol. (Lond.)">
        <title>Phosphorylation of protein kinase C sites in NBD1 and the R domain control CFTR channel activation by PKA.</title>
        <authorList>
            <person name="Chappe V."/>
            <person name="Hinkson D.A."/>
            <person name="Zhu T."/>
            <person name="Chang X.B."/>
            <person name="Riordan J.R."/>
            <person name="Hanrahan J.W."/>
        </authorList>
    </citation>
    <scope>FUNCTION</scope>
    <scope>TRANSPORTER ACTIVITY</scope>
    <scope>CHANNEL GATING REGULATION</scope>
    <scope>PHOSPHORYLATION</scope>
    <scope>SUBCELLULAR LOCATION</scope>
</reference>
<reference key="21">
    <citation type="journal article" date="2003" name="Proc. Natl. Acad. Sci. U.S.A.">
        <title>Abnormal surface liquid pH regulation by cultured cystic fibrosis bronchial epithelium.</title>
        <authorList>
            <person name="Coakley R.D."/>
            <person name="Grubb B.R."/>
            <person name="Paradiso A.M."/>
            <person name="Gatzy J.T."/>
            <person name="Johnson L.G."/>
            <person name="Kreda S.M."/>
            <person name="O'Neal W.K."/>
            <person name="Boucher R.C."/>
        </authorList>
    </citation>
    <scope>FUNCTION</scope>
</reference>
<reference key="22">
    <citation type="journal article" date="2004" name="J. Biol. Chem.">
        <title>A heteromeric complex of the two nucleotide binding domains of cystic fibrosis transmembrane conductance regulator (CFTR) mediates ATPase activity.</title>
        <authorList>
            <person name="Kidd J.F."/>
            <person name="Ramjeesingh M."/>
            <person name="Stratford F."/>
            <person name="Huan L.J."/>
            <person name="Bear C.E."/>
        </authorList>
    </citation>
    <scope>FUNCTION</scope>
    <scope>CATALYTIC ACTIVITY</scope>
    <scope>DOMAIN</scope>
</reference>
<reference key="23">
    <citation type="journal article" date="2006" name="Am. J. Respir. Crit. Care Med.">
        <title>Ion and fluid transport properties of small airways in cystic fibrosis.</title>
        <authorList>
            <person name="Blouquit S."/>
            <person name="Regnier A."/>
            <person name="Dannhoffer L."/>
            <person name="Fermanian C."/>
            <person name="Naline E."/>
            <person name="Boucher R."/>
            <person name="Chinet T."/>
        </authorList>
    </citation>
    <scope>FUNCTION</scope>
</reference>
<reference key="24">
    <citation type="journal article" date="2006" name="EMBO J.">
        <title>In vivo phosphorylation of CFTR promotes formation of a nucleotide-binding domain heterodimer.</title>
        <authorList>
            <person name="Mense M."/>
            <person name="Vergani P."/>
            <person name="White D.M."/>
            <person name="Altberg G."/>
            <person name="Nairn A.C."/>
            <person name="Gadsby D.C."/>
        </authorList>
    </citation>
    <scope>DOMAIN</scope>
    <scope>PHOSPHORYLATION</scope>
    <scope>SUBCELLULAR LOCATION</scope>
    <scope>FUNCTION</scope>
    <scope>TRANSPORTER ACTIVITY</scope>
</reference>
<reference key="25">
    <citation type="journal article" date="2007" name="J. Biol. Chem.">
        <title>Myosin Vb is required for trafficking of the cystic fibrosis transmembrane conductance regulator in Rab11a-specific apical recycling endosomes in polarized human airway epithelial cells.</title>
        <authorList>
            <person name="Swiatecka-Urban A."/>
            <person name="Talebian L."/>
            <person name="Kanno E."/>
            <person name="Moreau-Marquis S."/>
            <person name="Coutermarsh B."/>
            <person name="Hansen K."/>
            <person name="Karlson K.H."/>
            <person name="Barnaby R."/>
            <person name="Cheney R.E."/>
            <person name="Langford G.M."/>
            <person name="Fukuda M."/>
            <person name="Stanton B.A."/>
        </authorList>
    </citation>
    <scope>IDENTIFICATION IN A COMPLEX WITH RAB11A AND MYO5B</scope>
    <scope>SUBCELLULAR LOCATION</scope>
</reference>
<reference key="26">
    <citation type="journal article" date="2007" name="J. Cyst. Fibros.">
        <title>CFTR stabilizes ENaC at the plasma membrane.</title>
        <authorList>
            <person name="Lu C."/>
            <person name="Jiang C."/>
            <person name="Pribanic S."/>
            <person name="Rotin D."/>
        </authorList>
    </citation>
    <scope>FUNCTION</scope>
</reference>
<reference key="27">
    <citation type="journal article" date="2007" name="Nat. Struct. Mol. Biol.">
        <title>CFTR regulatory region interacts with NBD1 predominantly via multiple transient helices.</title>
        <authorList>
            <person name="Baker J.M."/>
            <person name="Hudson R.P."/>
            <person name="Kanelis V."/>
            <person name="Choy W.Y."/>
            <person name="Thibodeau P.H."/>
            <person name="Thomas P.J."/>
            <person name="Forman-Kay J.D."/>
        </authorList>
    </citation>
    <scope>DOMAIN</scope>
</reference>
<reference key="28">
    <citation type="journal article" date="2009" name="J. Biol. Chem.">
        <title>The deubiquitinating enzyme USP10 regulates the post-endocytic sorting of cystic fibrosis transmembrane conductance regulator in airway epithelial cells.</title>
        <authorList>
            <person name="Bomberger J.M."/>
            <person name="Barnaby R.L."/>
            <person name="Stanton B.A."/>
        </authorList>
    </citation>
    <scope>FUNCTION</scope>
    <scope>TRANSPORTER ACTIVITY</scope>
    <scope>UBIQUITINATION</scope>
    <scope>SUBCELLULAR LOCATION</scope>
</reference>
<reference key="29">
    <citation type="journal article" date="2009" name="J. Cyst. Fibros.">
        <title>Mechanism of direct bicarbonate transport by the CFTR anion channel.</title>
        <authorList>
            <person name="Tang L."/>
            <person name="Fatehi M."/>
            <person name="Linsdell P."/>
        </authorList>
    </citation>
    <scope>FUNCTION</scope>
    <scope>TRANSPORTER ACTIVITY</scope>
    <scope>SUBCELLULAR LOCATION</scope>
</reference>
<reference key="30">
    <citation type="journal article" date="2009" name="PLoS Biol.">
        <title>CFTR delivery to 25% of surface epithelial cells restores normal rates of mucus transport to human cystic fibrosis airway epithelium.</title>
        <authorList>
            <person name="Zhang L."/>
            <person name="Button B."/>
            <person name="Gabriel S.E."/>
            <person name="Burkett S."/>
            <person name="Yan Y."/>
            <person name="Skiadopoulos M.H."/>
            <person name="Dang Y.L."/>
            <person name="Vogel L.N."/>
            <person name="McKay T."/>
            <person name="Mengos A."/>
            <person name="Boucher R.C."/>
            <person name="Collins P.L."/>
            <person name="Pickles R.J."/>
        </authorList>
    </citation>
    <scope>FUNCTION</scope>
    <scope>TRANSPORTER ACTIVITY</scope>
    <scope>SUBCELLULAR LOCATION</scope>
</reference>
<reference key="31">
    <citation type="journal article" date="2010" name="Curr. Biol.">
        <title>Cse1l is a negative regulator of CFTR-dependent fluid secretion.</title>
        <authorList>
            <person name="Bagnat M."/>
            <person name="Navis A."/>
            <person name="Herbstreith S."/>
            <person name="Brand-Arzamendi K."/>
            <person name="Curado S."/>
            <person name="Gabriel S."/>
            <person name="Mostov K."/>
            <person name="Huisken J."/>
            <person name="Stainier D.Y."/>
        </authorList>
    </citation>
    <scope>INTERACTION WITH CSE1L</scope>
</reference>
<reference key="32">
    <citation type="journal article" date="2010" name="Am. J. Physiol.">
        <title>Modulation of endocytic trafficking and apical stability of CFTR in primary human airway epithelial cultures.</title>
        <authorList>
            <person name="Cholon D.M."/>
            <person name="O'Neal W.K."/>
            <person name="Randell S.H."/>
            <person name="Riordan J.R."/>
            <person name="Gentzsch M."/>
        </authorList>
    </citation>
    <scope>SUBCELLULAR LOCATION</scope>
    <scope>CHARACTERIZATION OF VARIANT CF PHE-508 DEL</scope>
    <scope>MUTAGENESIS OF ASN-894 AND ASN-900</scope>
    <scope>GLYCOSYLATION AT ASN-894 AND ASN-900</scope>
</reference>
<reference key="33">
    <citation type="journal article" date="2010" name="Hum. Reprod.">
        <title>CFTR is essential for sperm fertilizing capacity and is correlated with sperm quality in humans.</title>
        <authorList>
            <person name="Li C.Y."/>
            <person name="Jiang L.Y."/>
            <person name="Chen W.Y."/>
            <person name="Li K."/>
            <person name="Sheng H.Q."/>
            <person name="Ni Y."/>
            <person name="Lu J.X."/>
            <person name="Xu W.X."/>
            <person name="Zhang S.Y."/>
            <person name="Shi Q.X."/>
        </authorList>
    </citation>
    <scope>FUNCTION</scope>
    <scope>TISSUE SPECIFICITY</scope>
</reference>
<reference key="34">
    <citation type="journal article" date="2010" name="Sci. Signal.">
        <title>Quantitative phosphoproteomics reveals widespread full phosphorylation site occupancy during mitosis.</title>
        <authorList>
            <person name="Olsen J.V."/>
            <person name="Vermeulen M."/>
            <person name="Santamaria A."/>
            <person name="Kumar C."/>
            <person name="Miller M.L."/>
            <person name="Jensen L.J."/>
            <person name="Gnad F."/>
            <person name="Cox J."/>
            <person name="Jensen T.S."/>
            <person name="Nigg E.A."/>
            <person name="Brunak S."/>
            <person name="Mann M."/>
        </authorList>
    </citation>
    <scope>PHOSPHORYLATION [LARGE SCALE ANALYSIS] AT SER-549</scope>
    <scope>IDENTIFICATION BY MASS SPECTROMETRY [LARGE SCALE ANALYSIS]</scope>
    <source>
        <tissue>Cervix carcinoma</tissue>
    </source>
</reference>
<reference key="35">
    <citation type="journal article" date="2011" name="Cell. Physiol. Biochem.">
        <title>CFTR and TMEM16A are separate but functionally related Cl-channels.</title>
        <authorList>
            <person name="Ousingsawat J."/>
            <person name="Kongsuphol P."/>
            <person name="Schreiber R."/>
            <person name="Kunzelmann K."/>
        </authorList>
    </citation>
    <scope>FUNCTION</scope>
    <scope>TRANSPORTER ACTIVITY</scope>
    <scope>SUBCELLULAR LOCATION</scope>
    <scope>INTERACTION WITH ANO1</scope>
</reference>
<reference key="36">
    <citation type="journal article" date="2012" name="Histochem. Cell Biol.">
        <title>Epithelial sodium channels (ENaC) are uniformly distributed on motile cilia in the oviduct and the respiratory airways.</title>
        <authorList>
            <person name="Enuka Y."/>
            <person name="Hanukoglu I."/>
            <person name="Edelheit O."/>
            <person name="Vaknine H."/>
            <person name="Hanukoglu A."/>
        </authorList>
    </citation>
    <scope>SUBCELLULAR LOCATION</scope>
    <scope>TISSUE SPECIFICITY</scope>
</reference>
<reference key="37">
    <citation type="journal article" date="2012" name="Hum. Mol. Genet.">
        <title>The testis anion transporter TAT1 (SLC26A8) physically and functionally interacts with the cystic fibrosis transmembrane conductance regulator channel: a potential role during sperm capacitation.</title>
        <authorList>
            <person name="Rode B."/>
            <person name="Dirami T."/>
            <person name="Bakouh N."/>
            <person name="Rizk-Rabin M."/>
            <person name="Norez C."/>
            <person name="Lhuillier P."/>
            <person name="Lores P."/>
            <person name="Jollivet M."/>
            <person name="Melin P."/>
            <person name="Zvetkova I."/>
            <person name="Bienvenu T."/>
            <person name="Becq F."/>
            <person name="Planelles G."/>
            <person name="Edelman A."/>
            <person name="Gacon G."/>
            <person name="Toure A."/>
        </authorList>
    </citation>
    <scope>INTERACTION WITH SLC26A8</scope>
</reference>
<reference key="38">
    <citation type="journal article" date="2012" name="Protein Eng. Des. Sel.">
        <title>Purification of CFTR for mass spectrometry analysis: identification of palmitoylation and other post-translational modifications.</title>
        <authorList>
            <person name="McClure M."/>
            <person name="Delucas L.J."/>
            <person name="Wilson L."/>
            <person name="Ray M."/>
            <person name="Rowe S.M."/>
            <person name="Wu X."/>
            <person name="Dai Q."/>
            <person name="Hong J.S."/>
            <person name="Sorscher E.J."/>
            <person name="Kappes J.C."/>
            <person name="Barnes S."/>
        </authorList>
    </citation>
    <scope>PHOSPHORYLATION AT SER-660; SER-686; SER-700; SER-712; THR-717; SER-737; SER-795; SER-1444 AND SER-1456</scope>
    <scope>UBIQUITINATION AT LYS-688</scope>
    <scope>PALMITOYLATION AT CYS-524 AND CYS-1395</scope>
    <scope>IDENTIFICATION BY MASS SPECTROMETRY</scope>
</reference>
<reference key="39">
    <citation type="journal article" date="2013" name="J. Biol. Chem.">
        <title>RNF185 is a novel E3 ligase of endoplasmic reticulum-associated degradation (ERAD) that targets cystic fibrosis transmembrane conductance regulator (CFTR).</title>
        <authorList>
            <person name="El Khouri E."/>
            <person name="Le Pavec G."/>
            <person name="Toledano M.B."/>
            <person name="Delaunay-Moisan A."/>
        </authorList>
    </citation>
    <scope>UBIQUITINATION BY RNF185</scope>
</reference>
<reference key="40">
    <citation type="journal article" date="2013" name="PLoS ONE">
        <title>Ubiquitination and degradation of CFTR by the E3 ubiquitin ligase MARCH2 through its association with adaptor proteins CAL and STX6.</title>
        <authorList>
            <person name="Cheng J."/>
            <person name="Guggino W."/>
        </authorList>
    </citation>
    <scope>INTERACTION WITH MARCHF2</scope>
    <scope>UBIQUITINATION</scope>
    <scope>CHARACTERIZATION OF VARIANT CF PHE-508 DEL</scope>
    <scope>MUTAGENESIS OF 1478-TYR--LEU-1480</scope>
</reference>
<reference key="41">
    <citation type="journal article" date="2015" name="Proteomics">
        <title>The major cystic fibrosis causing mutation exhibits defective propensity for phosphorylation.</title>
        <authorList>
            <person name="Pasyk S."/>
            <person name="Molinski S."/>
            <person name="Ahmadi S."/>
            <person name="Ramjeesingh M."/>
            <person name="Huan L.J."/>
            <person name="Chin S."/>
            <person name="Du K."/>
            <person name="Yeger H."/>
            <person name="Taylor P."/>
            <person name="Moran M.F."/>
            <person name="Bear C.E."/>
        </authorList>
    </citation>
    <scope>FUNCTION</scope>
    <scope>TRANSPORTER ACTIVITY</scope>
    <scope>CHARACTERIZATION OF CF VARIANT PHE-508 DEL</scope>
    <scope>SUBCELLULAR LOCATION</scope>
    <scope>PHOSPHORYLATION AT SER-660; SER-670; SER-700; SER-712; SER-737; SER-753; SER-768; SER-795 AND SER-813</scope>
    <scope>IDENTIFICATION BY MASS SPECTROMETRY</scope>
</reference>
<reference key="42">
    <citation type="journal article" date="2016" name="J. Biol. Chem.">
        <title>Channel gating regulation by the cystic fibrosis transmembrane conductance regulator (CFTR) first cytosolic loop.</title>
        <authorList>
            <person name="Ehrhardt A."/>
            <person name="Chung W.J."/>
            <person name="Pyle L.C."/>
            <person name="Wang W."/>
            <person name="Nowotarski K."/>
            <person name="Mulvihill C.M."/>
            <person name="Ramjeesingh M."/>
            <person name="Hong J."/>
            <person name="Velu S.E."/>
            <person name="Lewis H.A."/>
            <person name="Atwell S."/>
            <person name="Aller S."/>
            <person name="Bear C.E."/>
            <person name="Lukacs G.L."/>
            <person name="Kirk K.L."/>
            <person name="Sorscher E.J."/>
        </authorList>
    </citation>
    <scope>FUNCTION</scope>
    <scope>CATALYTIC ACTIVITY</scope>
</reference>
<reference key="43">
    <citation type="journal article" date="2016" name="Science">
        <title>Airway acidification initiates host defense abnormalities in cystic fibrosis mice.</title>
        <authorList>
            <person name="Shah V.S."/>
            <person name="Meyerholz D.K."/>
            <person name="Tang X.X."/>
            <person name="Reznikov L."/>
            <person name="Abou Alaiwa M."/>
            <person name="Ernst S.E."/>
            <person name="Karp P.H."/>
            <person name="Wohlford-Lenane C.L."/>
            <person name="Heilmann K.P."/>
            <person name="Leidinger M.R."/>
            <person name="Allen P.D."/>
            <person name="Zabner J."/>
            <person name="McCray P.B. Jr."/>
            <person name="Ostedgaard L.S."/>
            <person name="Stoltz D.A."/>
            <person name="Randak C.O."/>
            <person name="Welsh M.J."/>
        </authorList>
    </citation>
    <scope>FUNCTION</scope>
</reference>
<reference key="44">
    <citation type="journal article" date="2017" name="Am. J. Physiol.">
        <title>deltabetagamma-ENaC is inhibited by CFTR but stimulated by cAMP in Xenopus laevis oocytes.</title>
        <authorList>
            <person name="Rauh R."/>
            <person name="Hoerner C."/>
            <person name="Korbmacher C."/>
        </authorList>
    </citation>
    <scope>FUNCTION</scope>
</reference>
<reference key="45">
    <citation type="journal article" date="2017" name="Histochem. Cell Biol.">
        <title>Expression of epithelial sodium channel (ENaC) and CFTR in the human epidermis and epidermal appendages.</title>
        <authorList>
            <person name="Hanukoglu I."/>
            <person name="Boggula V.R."/>
            <person name="Vaknine H."/>
            <person name="Sharma S."/>
            <person name="Kleyman T."/>
            <person name="Hanukoglu A."/>
        </authorList>
    </citation>
    <scope>SUBCELLULAR LOCATION</scope>
    <scope>TISSUE SPECIFICITY</scope>
</reference>
<reference key="46">
    <citation type="journal article" date="2017" name="J. Cell. Physiol.">
        <title>Essential role of CFTR in PKA-dependent phosphorylation, alkalinization, and hyperpolarization during human sperm capacitation.</title>
        <authorList>
            <person name="Puga Molina L.C."/>
            <person name="Pinto N.A."/>
            <person name="Torres Rodriguez P."/>
            <person name="Romarowski A."/>
            <person name="Vicens Sanchez A."/>
            <person name="Visconti P.E."/>
            <person name="Darszon A."/>
            <person name="Trevino C.L."/>
            <person name="Buffone M.G."/>
        </authorList>
    </citation>
    <scope>FUNCTION</scope>
</reference>
<reference key="47">
    <citation type="journal article" date="2018" name="Elife">
        <title>Gq activity- and beta-arrestin-1 scaffolding-mediated ADGRG2/CFTR coupling are required for male fertility.</title>
        <authorList>
            <person name="Zhang D.L."/>
            <person name="Sun Y.J."/>
            <person name="Ma M.L."/>
            <person name="Wang Y.J."/>
            <person name="Lin H."/>
            <person name="Li R.R."/>
            <person name="Liang Z.L."/>
            <person name="Gao Y."/>
            <person name="Yang Z."/>
            <person name="He D.F."/>
            <person name="Lin A."/>
            <person name="Mo H."/>
            <person name="Lu Y.J."/>
            <person name="Li M.J."/>
            <person name="Kong W."/>
            <person name="Chung K.Y."/>
            <person name="Yi F."/>
            <person name="Li J.Y."/>
            <person name="Qin Y.Y."/>
            <person name="Li J."/>
            <person name="Thomsen A.R.B."/>
            <person name="Kahsai A.W."/>
            <person name="Chen Z.J."/>
            <person name="Xu Z.G."/>
            <person name="Liu M."/>
            <person name="Li D."/>
            <person name="Yu X."/>
            <person name="Sun J.P."/>
        </authorList>
    </citation>
    <scope>INTERACTION WITH ADGRG2</scope>
</reference>
<reference key="48">
    <citation type="journal article" date="1998" name="Proteins">
        <title>A model for the nucleotide-binding domains of ABC transporters based on the large domain of aspartate aminotransferase.</title>
        <authorList>
            <person name="Hoedemaeker F.J."/>
            <person name="Davidson A.R."/>
            <person name="Rose D.R."/>
        </authorList>
    </citation>
    <scope>3D-STRUCTURE MODELING OF 425-638</scope>
</reference>
<reference key="49">
    <citation type="journal article" date="2001" name="J. Biol. Chem.">
        <title>Structural basis of the Na+/H+ exchanger regulatory factor PDZ1 interaction with the carboxyl-terminal region of the cystic fibrosis transmembrane conductance regulator.</title>
        <authorList>
            <person name="Karthikeyan S."/>
            <person name="Leung T."/>
            <person name="Ladias J.A.A."/>
        </authorList>
    </citation>
    <scope>X-RAY CRYSTALLOGRAPHY (1.7 ANGSTROMS) OF 1476-1480 IN COMPLEX WITH NHERF1</scope>
</reference>
<reference evidence="147" key="50">
    <citation type="journal article" date="2005" name="Biochemistry">
        <title>Association of the cystic fibrosis transmembrane regulator with CAL: structural features and molecular dynamics.</title>
        <authorList>
            <person name="Piserchio A."/>
            <person name="Fellows A."/>
            <person name="Madden D.R."/>
            <person name="Mierke D.F."/>
        </authorList>
    </citation>
    <scope>STRUCTURE BY NMR OF 1473-1480 IN COMPLEX WITH GOPC</scope>
</reference>
<reference evidence="142 143" key="51">
    <citation type="journal article" date="2005" name="J. Biol. Chem.">
        <title>Impact of the deltaF508 mutation in first nucleotide-binding domain of human cystic fibrosis transmembrane conductance regulator on domain folding and structure.</title>
        <authorList>
            <person name="Lewis H.A."/>
            <person name="Zhao X."/>
            <person name="Wang C."/>
            <person name="Sauder J.M."/>
            <person name="Rooney I."/>
            <person name="Noland B.W."/>
            <person name="Lorimer D."/>
            <person name="Kearins M.C."/>
            <person name="Conners K."/>
            <person name="Condon B."/>
            <person name="Maloney P.C."/>
            <person name="Guggino W.B."/>
            <person name="Hunt J.F."/>
            <person name="Emtage S."/>
        </authorList>
    </citation>
    <scope>X-RAY CRYSTALLOGRAPHY (2.25 ANGSTROMS) OF 389-678 OF WILD-TYPE AND VARIANT CF PHE-508 DEL IN COMPLEX WITH ATP</scope>
    <scope>CHARACTERIZATION OF VARIANT CF PHE-508 DEL</scope>
</reference>
<reference evidence="151" key="52">
    <citation type="submission" date="2009-02" db="PDB data bank">
        <title>Crystal structure of human NBD2 complexed with N6-phenylethyl-ATP (P-ATP).</title>
        <authorList>
            <person name="Atwell S."/>
            <person name="Antonysamy S."/>
            <person name="Guggino W.B."/>
            <person name="Conners K."/>
            <person name="Emtage S."/>
            <person name="Gheyi T."/>
            <person name="Hunt J.F."/>
            <person name="Lewis H.A."/>
            <person name="Lu F."/>
            <person name="Sauder J.M."/>
            <person name="Weber P.C."/>
            <person name="Wetmore D."/>
            <person name="Zhao X."/>
        </authorList>
    </citation>
    <scope>X-RAY CRYSTALLOGRAPHY (2.70 ANGSTROMS) OF 1193-1435 AND 1458-1470 IN COMPLEX WITH ATP ANALOG</scope>
</reference>
<reference evidence="144 145 146" key="53">
    <citation type="journal article" date="2010" name="J. Mol. Biol.">
        <title>Structure and dynamics of NBD1 from CFTR characterized using crystallography and hydrogen/deuterium exchange mass spectrometry.</title>
        <authorList>
            <person name="Lewis H.A."/>
            <person name="Wang C."/>
            <person name="Zhao X."/>
            <person name="Hamuro Y."/>
            <person name="Conners K."/>
            <person name="Kearins M.C."/>
            <person name="Lu F."/>
            <person name="Sauder J.M."/>
            <person name="Molnar K.S."/>
            <person name="Coales S.J."/>
            <person name="Maloney P.C."/>
            <person name="Guggino W.B."/>
            <person name="Wetmore D.R."/>
            <person name="Weber P.C."/>
            <person name="Hunt J.F."/>
        </authorList>
    </citation>
    <scope>X-RAY CRYSTALLOGRAPHY (2.05 ANGSTROMS) OF 389-677 IN COMPLEX WITH ATP</scope>
</reference>
<reference evidence="148 149 150" key="54">
    <citation type="journal article" date="2010" name="Protein Eng. Des. Sel.">
        <title>Structures of a minimal human CFTR first nucleotide-binding domain as a monomer, head-to-tail homodimer, and pathogenic mutant.</title>
        <authorList>
            <person name="Atwell S."/>
            <person name="Brouillette C.G."/>
            <person name="Conners K."/>
            <person name="Emtage S."/>
            <person name="Gheyi T."/>
            <person name="Guggino W.B."/>
            <person name="Hendle J."/>
            <person name="Hunt J.F."/>
            <person name="Lewis H.A."/>
            <person name="Lu F."/>
            <person name="Protasevich I.I."/>
            <person name="Rodgers L.A."/>
            <person name="Romero R."/>
            <person name="Wasserman S.R."/>
            <person name="Weber P.C."/>
            <person name="Wetmore D."/>
            <person name="Zhang F.F."/>
            <person name="Zhao X."/>
        </authorList>
    </citation>
    <scope>X-RAY CRYSTALLOGRAPHY (1.70 ANGSTROMS) OF 387-646 IN COMPLEX WITH ATP</scope>
    <scope>CHARACTERIZATION OF VARIANT CF PHE-508 DEL</scope>
</reference>
<reference key="55">
    <citation type="journal article" date="2011" name="J. Biol. Chem.">
        <title>The cystic fibrosis transmembrane conductance regulator (CFTR): three-dimensional structure and localization of a channel gate.</title>
        <authorList>
            <person name="Rosenberg M.F."/>
            <person name="O'Ryan L.P."/>
            <person name="Hughes G."/>
            <person name="Zhao Z."/>
            <person name="Aleksandrov L.A."/>
            <person name="Riordan J.R."/>
            <person name="Ford R.C."/>
        </authorList>
    </citation>
    <scope>STRUCTURE BY ELECTRON MICROSCOPY (9 ANGSTROMS)</scope>
</reference>
<reference evidence="152" key="56">
    <citation type="journal article" date="2016" name="Protein Sci.">
        <title>Binding screen for cystic fibrosis transmembrane conductance regulator correctors finds new chemical matter and yields insights into cystic fibrosis therapeutic strategy.</title>
        <authorList>
            <person name="Hall J.D."/>
            <person name="Wang H."/>
            <person name="Byrnes L.J."/>
            <person name="Shanker S."/>
            <person name="Wang K."/>
            <person name="Efremov I.V."/>
            <person name="Chong P.A."/>
            <person name="Forman-Kay J.D."/>
            <person name="Aulabaugh A.E."/>
        </authorList>
    </citation>
    <scope>X-RAY CRYSTALLOGRAPHY (2.05 ANGSTROMS) OF 389-678</scope>
</reference>
<reference evidence="153" key="57">
    <citation type="submission" date="2016-12" db="PDB data bank">
        <title>Structure of human cystic fibrosis transmembrane conductance regulator (CFTR).</title>
        <authorList>
            <person name="Liu F."/>
            <person name="Zhang Z."/>
            <person name="Chen J."/>
        </authorList>
    </citation>
    <scope>STRUCTURE BY ELECTRON MICROSCOPY (3.87 ANGSTROMS)</scope>
    <scope>TOPOLOGY</scope>
</reference>
<reference key="58">
    <citation type="journal article" date="1992" name="Hum. Mutat.">
        <title>Mutations and sequence variations detected in the cystic fibrosis transmembrane conductance regulator (CFTR) gene: a report from the Cystic Fibrosis Genetic Analysis Consortium.</title>
        <authorList>
            <person name="Tsui L.-C."/>
        </authorList>
    </citation>
    <scope>REVIEW ON VARIANTS</scope>
</reference>
<reference key="59">
    <citation type="journal article" date="1990" name="Cell">
        <title>Defective intracellular transport and processing of CFTR is the molecular basis of most cystic fibrosis.</title>
        <authorList>
            <person name="Cheng S.H."/>
            <person name="Gregory R.J."/>
            <person name="Marshall J."/>
            <person name="Paul S."/>
            <person name="Souza D.W."/>
            <person name="White G.A."/>
            <person name="O'Riordan C.R."/>
            <person name="Smith A.E."/>
        </authorList>
    </citation>
    <scope>CHARACTERIZATION OF VARIANT CF TRP-334; ILE-507 DEL; PHE-508 DEL; ASP-551 AND ILE-549</scope>
    <scope>MUTAGENESIS OF LYS-464; PHE-508 AND LYS-1250</scope>
    <scope>GLYCOSYLATION</scope>
</reference>
<reference key="60">
    <citation type="journal article" date="1990" name="Nature">
        <title>A cluster of cystic fibrosis mutations in the first nucleotide-binding fold of the cystic fibrosis conductance regulator protein.</title>
        <authorList>
            <person name="Cutting G.R."/>
            <person name="Kasch L.M."/>
            <person name="Rosenstein B.J."/>
            <person name="Zielenski J."/>
            <person name="Tsui L.-C."/>
            <person name="Antonarakis S.E."/>
            <person name="Kazazian H.H. Jr."/>
        </authorList>
    </citation>
    <scope>VARIANTS CF ASN-549; ASP-551 AND THR-559</scope>
</reference>
<reference key="61">
    <citation type="journal article" date="1990" name="Proc. Natl. Acad. Sci. U.S.A.">
        <title>Identification of mutations in regions corresponding to the two putative nucleotide (ATP)-binding folds of the cystic fibrosis gene.</title>
        <authorList>
            <person name="Kerem B.-S."/>
            <person name="Zielenski J."/>
            <person name="Markiewicz D."/>
            <person name="Bozon D."/>
            <person name="Gazit E."/>
            <person name="Yahav J."/>
            <person name="Kennedy D."/>
            <person name="Riordan J.R."/>
            <person name="Collins F.S."/>
            <person name="Rommens J.M."/>
            <person name="Tsui L.-C."/>
        </authorList>
    </citation>
    <scope>VARIANTS CF GLU-455; ARG-549; ILE-549; ASP-551; THR-560; ASN-563 AND HIS-574</scope>
</reference>
<reference key="62">
    <citation type="journal article" date="1991" name="Genomics">
        <title>Detection of three rare frameshift mutations in the cystic fibrosis gene in an African-American (CF444delA), an Italian (CF2522insC), and a Soviet (CF3821delT).</title>
        <authorList>
            <person name="White M.B."/>
            <person name="Krueger L.J."/>
            <person name="Holsclaw D.S. Jr."/>
            <person name="Gerrard B.C."/>
            <person name="Stewart C."/>
            <person name="Quittell L."/>
            <person name="Dolganov G."/>
            <person name="Baranov V."/>
            <person name="Ivaschenko T."/>
            <person name="Kapronov N.I."/>
            <person name="Sebastio G."/>
            <person name="Castiglione O."/>
            <person name="Dean M."/>
        </authorList>
    </citation>
    <scope>VARIANTS CF</scope>
</reference>
<reference key="63">
    <citation type="journal article" date="1991" name="Mol. Cell. Biol.">
        <title>Maturation and function of cystic fibrosis transmembrane conductance regulator variants bearing mutations in putative nucleotide-binding domains 1 and 2.</title>
        <authorList>
            <person name="Gregory R.J."/>
            <person name="Rich D.P."/>
            <person name="Cheng S.H."/>
            <person name="Souza D.W."/>
            <person name="Paul S."/>
            <person name="Manavalan P."/>
            <person name="Anderson M.P."/>
            <person name="Welsh M.J."/>
            <person name="Smith A.E."/>
        </authorList>
    </citation>
    <scope>CHARACTERIZATION OF CF VARIANTS ILE-507 DEL; PHE-508 DEL; ILE-549; ARG-549; ASP-551; THR-559; ASN-572; LYS-1303 AND ASP-1349</scope>
    <scope>FUNCTION</scope>
    <scope>TRANSPORTER ACTIVITY</scope>
    <scope>SUBCELLULAR LOCATION</scope>
    <scope>MUTAGENESIS OF PHE-508</scope>
</reference>
<reference key="64">
    <citation type="journal article" date="1992" name="Genomics">
        <title>Molecular characterization of cystic fibrosis: 16 novel mutations identified by analysis of the whole cystic fibrosis conductance transmembrane regulator (CFTR) coding regions and splice site junctions.</title>
        <authorList>
            <person name="Fanen P."/>
            <person name="Ghanem N."/>
            <person name="Vidaud M."/>
            <person name="Besmond C."/>
            <person name="Martin J."/>
            <person name="Costes B."/>
            <person name="Plassa F."/>
            <person name="Goossens M."/>
        </authorList>
    </citation>
    <scope>VARIANTS VAL-44; MET-470; VAL-506; CYS-508; ALA-576; CYS-668; PHE-997; THR-1027 AND LEU-1162</scope>
    <scope>VARIANTS CF GLY-44; ARG-178; ARG-225; TRP-334; PHE-508 DEL; 542-GLY--LEU-1480 DEL; ASP-551; ILE-562; ARG-628; 710-LYS--LEU-1480 DEL; 846-TRP--LEU-1480 DEL; CYS-913; 1063-TRP--LEU-1480 DEL; CYS-1066; 1092-TYR--LEU-1480 DEL; 1162-ARG--LEU-1480 DEL; GLU-1200; 1282-TRP--LEU-1480 DEL AND LYS-1303</scope>
</reference>
<reference key="65">
    <citation type="journal article" date="1992" name="Hum. Mol. Genet.">
        <title>Three novel mutations in the cystic fibrosis gene detected by chemical cleavage: analysis of variant splicing and a nonsense mutation.</title>
        <authorList>
            <person name="Jones C.T."/>
            <person name="McIntosh I."/>
            <person name="Keston M."/>
            <person name="Ferguson A."/>
            <person name="Brock D.J.H."/>
        </authorList>
    </citation>
    <scope>VARIANTS CF PHE-520 AND HIS-1291</scope>
</reference>
<reference key="66">
    <citation type="journal article" date="1992" name="Hum. Mol. Genet.">
        <title>A new missense mutation (R1283M) in exon 20 of the cystic fibrosis transmembrane conductance regulator gene.</title>
        <authorList>
            <person name="Cheadle J.P."/>
            <person name="Meredith A.L."/>
            <person name="Al-Jader L.N."/>
        </authorList>
    </citation>
    <scope>VARIANT CF MET-1283</scope>
</reference>
<reference key="67">
    <citation type="journal article" date="1992" name="Hum. Mol. Genet.">
        <title>A serine to proline substitution (S1255P) in the second nucleotide binding fold of the cystic fibrosis gene.</title>
        <authorList>
            <person name="Lissens W."/>
            <person name="Bonduelle M."/>
            <person name="Malfroot A."/>
            <person name="Dab I."/>
            <person name="Liebaers I."/>
        </authorList>
    </citation>
    <scope>VARIANT CF PRO-1255</scope>
</reference>
<reference key="68">
    <citation type="journal article" date="1992" name="Hum. Mol. Genet.">
        <title>Detection of novel and rare mutations in exon 4 of the cystic fibrosis gene by SSCP.</title>
        <authorList>
            <person name="Shackleton S."/>
            <person name="Beards F."/>
            <person name="Harris A."/>
        </authorList>
    </citation>
    <scope>VARIANTS CF LYS-92 AND CYS-117</scope>
</reference>
<reference key="69">
    <citation type="journal article" date="1992" name="Nat. Genet.">
        <title>Mislocalization of delta F508 CFTR in cystic fibrosis sweat gland.</title>
        <authorList>
            <person name="Kartner N."/>
            <person name="Augustinas O."/>
            <person name="Jensen T.J."/>
            <person name="Naismith A.L."/>
            <person name="Riordan J.R."/>
        </authorList>
    </citation>
    <scope>CHARACTERIZATION OF VARIANT CF PHE-508 DEL AND ASP-551</scope>
    <scope>SUBCELLULAR LOCATION</scope>
    <scope>TISSUE SPECIFICITY</scope>
</reference>
<reference key="70">
    <citation type="journal article" date="1993" name="Am. J. Hum. Genet.">
        <title>Identification of the M1101K mutation in the cystic fibrosis transmembrane conductance regulator (CFTR) gene and complete detection of cystic fibrosis mutations in the Hutterite population.</title>
        <authorList>
            <person name="Zielenski J."/>
            <person name="Fugiwara T.M."/>
            <person name="Markiewicz D."/>
            <person name="Paradis A.J."/>
            <person name="Anacleto A.I."/>
            <person name="Richards B."/>
            <person name="Schwartz R.H."/>
            <person name="Klinger K.W."/>
            <person name="Tsui L.-C."/>
            <person name="Morgan K."/>
        </authorList>
    </citation>
    <scope>VARIANT CF LYS-1101</scope>
</reference>
<reference key="71">
    <citation type="journal article" date="1993" name="Genomics">
        <title>Identification of eight novel mutations in a collaborative analysis of a part of the second transmembrane domain of the CFTR gene.</title>
        <authorList>
            <person name="Mercier B."/>
            <person name="Lissens W."/>
            <person name="Novelli G."/>
            <person name="Kalaydjieva L."/>
            <person name="De Arce M."/>
            <person name="Kapranov N."/>
            <person name="Klain N.C."/>
            <person name="Lenoir G."/>
            <person name="Chauveau P."/>
            <person name="Lenaerts C."/>
            <person name="Rault G."/>
            <person name="Cashman S."/>
            <person name="Sangiuolo F."/>
            <person name="Audrezet M.-P."/>
            <person name="Dallapiccola B."/>
            <person name="Guillermit H."/>
            <person name="Bonduelle M."/>
            <person name="Liebaers I."/>
            <person name="Quere I."/>
            <person name="Verlingue C."/>
            <person name="Ferec C."/>
        </authorList>
    </citation>
    <scope>VARIANTS CF VAL-1052; ARG-1061; LEU-1066; GLN-1070; ARG-1085 AND ARG-1101</scope>
</reference>
<reference key="72">
    <citation type="journal article" date="1993" name="Genomics">
        <title>Detection of 98.5% of the mutations in 200 Belgian cystic fibrosis alleles by reverse dot-blot and sequencing of the complete coding region and exon/intron junctions of the CFTR gene.</title>
        <authorList>
            <person name="Cuppens H."/>
            <person name="Marynen P."/>
            <person name="De Boeck C."/>
            <person name="Cassiman J.J."/>
        </authorList>
    </citation>
    <scope>VARIANTS CF HIS-117; LYS-336; GLU-455; VAL-458; ARG-628; ARG-1235; ASN-1251 AND LYS-1303</scope>
</reference>
<reference key="73">
    <citation type="journal article" date="1993" name="Hum. Hered.">
        <title>Identification of three novel cystic fibrosis mutations in a sample of Italian cystic fibrosis patients.</title>
        <authorList>
            <person name="Audrezet M.P."/>
            <person name="Novelli G."/>
            <person name="Mercier B."/>
            <person name="Sangiuolo F."/>
            <person name="Maceratesi P."/>
            <person name="Ferec C."/>
            <person name="Dallapiccola B."/>
        </authorList>
    </citation>
    <scope>VARIANT CF LEU-693</scope>
</reference>
<reference key="74">
    <citation type="journal article" date="1993" name="Hum. Mol. Genet.">
        <title>A new missense mutation (E92K) in the first transmembrane domain of the CFTR gene causes a benign cystic fibrosis phenotype.</title>
        <authorList>
            <person name="Nunes V."/>
            <person name="Chillon M."/>
            <person name="Doerk T."/>
            <person name="Tuemmler B."/>
            <person name="Casals T."/>
            <person name="Estivill X."/>
        </authorList>
    </citation>
    <scope>VARIANT CF LYS-92</scope>
</reference>
<reference key="75">
    <citation type="journal article" date="1993" name="Hum. Mol. Genet.">
        <title>Identification of a new missense mutation (P205S) in the first transmembrane domain of the CFTR gene associated with a mild cystic fibrosis phenotype.</title>
        <authorList>
            <person name="Chillon M."/>
            <person name="Casals T."/>
            <person name="Nunes V."/>
            <person name="Gimenez J."/>
            <person name="Ruiz E.P."/>
            <person name="Estivill X."/>
        </authorList>
    </citation>
    <scope>VARIANT CF SER-205</scope>
</reference>
<reference key="76">
    <citation type="journal article" date="1993" name="Hum. Mutat.">
        <title>Screening of 62 mutations in a cohort of cystic fibrosis patients from north eastern Italy: their incidence and clinical features of defined genotypes.</title>
        <authorList>
            <person name="Gasparini P."/>
            <person name="Marigo C."/>
            <person name="Bisceglia G."/>
            <person name="Nicolis E."/>
            <person name="Zelante L."/>
            <person name="Bombieri C."/>
            <person name="Borgo G."/>
            <person name="Pignatti P.F."/>
            <person name="Cabrini G."/>
        </authorList>
    </citation>
    <scope>VARIANTS CF HIS-347; LEU-347; GLN-352 AND LYS-359</scope>
</reference>
<reference key="77">
    <citation type="journal article" date="1994" name="Genomics">
        <title>Identification of eight mutations and three sequence variations in the cystic fibrosis transmembrane conductance regulator (CFTR) gene.</title>
        <authorList>
            <person name="Ghanem N."/>
            <person name="Costes B."/>
            <person name="Girodon E."/>
            <person name="Martin J."/>
            <person name="Fanen P."/>
            <person name="Goossens M."/>
        </authorList>
    </citation>
    <scope>VARIANTS CYS-31 AND ILE-1220</scope>
    <scope>VARIANTS CF 890-GLN--LEU-1480 DEL; LEU-912; TYR-949; PRO-1065; PRO-1071 AND 1204-TRP--LEU-1480 DEL</scope>
</reference>
<reference key="78">
    <citation type="journal article" date="1994" name="Hum. Genet.">
        <title>Exon 9 of the CFTR gene: splice site haplotypes and cystic fibrosis mutations.</title>
        <authorList>
            <person name="Doerk T."/>
            <person name="Fislage R."/>
            <person name="Neumann T."/>
            <person name="Wulf B."/>
            <person name="Tuemmler B."/>
        </authorList>
    </citation>
    <scope>VARIANT CF PHE-456</scope>
</reference>
<reference key="79">
    <citation type="journal article" date="1994" name="Hum. Genet.">
        <title>Novel cystic fibrosis mutation associated with mild disease in Cypriot patients.</title>
        <authorList>
            <person name="Boteva K."/>
            <person name="Papageorgiou E."/>
            <person name="Georgiou C."/>
            <person name="Angastiniotis M."/>
            <person name="Middleton L.T."/>
            <person name="Constantinou-Deltas C.D."/>
        </authorList>
    </citation>
    <scope>VARIANT CF PRO-346</scope>
</reference>
<reference key="80">
    <citation type="journal article" date="1994" name="Hum. Genet.">
        <title>Detection of more than 50 different CFTR mutations in a large group of German cystic fibrosis patients.</title>
        <authorList>
            <person name="Doerk T."/>
            <person name="Mekus F."/>
            <person name="Schmidt K."/>
            <person name="Bosshammer J."/>
            <person name="Fislage R."/>
            <person name="Heuer T."/>
            <person name="Dziadek V."/>
            <person name="Neumann T."/>
            <person name="Kaelin N."/>
            <person name="Wulbrand U."/>
            <person name="Wulf B."/>
            <person name="von der Hardt H."/>
            <person name="Maass G."/>
            <person name="Tuemmler B."/>
        </authorList>
    </citation>
    <scope>VARIANTS CF TYR-199; SER-619; ARG-1005 AND ARG-1291</scope>
</reference>
<reference key="81">
    <citation type="journal article" date="1994" name="Hum. Hered.">
        <title>A new missense mutation G1249E in exon 20 of the cystic fibrosis transmembrane conductance regulator (CFTR) gene.</title>
        <authorList>
            <person name="Greil I."/>
            <person name="Wagner K."/>
            <person name="Rosenkranz W."/>
        </authorList>
    </citation>
    <scope>VARIANT CF GLU-1249</scope>
</reference>
<reference key="82">
    <citation type="journal article" date="1994" name="Hum. Mol. Genet.">
        <title>Identification of two new mutations (711 +3A--&gt;G and V1397E) in CF chromosomes of Albanian and Macedonian origin.</title>
        <authorList>
            <person name="Petreska L."/>
            <person name="Koceva S."/>
            <person name="Gordova-Muratovska A."/>
            <person name="Nestorov R."/>
            <person name="Efremov G.D."/>
        </authorList>
    </citation>
    <scope>VARIANT CF GLU-1397</scope>
</reference>
<reference key="83">
    <citation type="journal article" date="1994" name="Hum. Mol. Genet.">
        <title>A novel cystic fibrosis mutation, Y109C, in the first transmembrane domain of CFTR.</title>
        <authorList>
            <person name="Schaedel C."/>
            <person name="Kristoffersson A.-C."/>
            <person name="Kornfaelt R."/>
            <person name="Holmberg L."/>
        </authorList>
    </citation>
    <scope>VARIANT CF CYS-109</scope>
</reference>
<reference key="84">
    <citation type="journal article" date="1994" name="Hum. Mutat.">
        <title>Analysis of the CFTR gene in the Spanish population: SSCP-screening for 60 known mutations and identification of four new mutations (Q30X, A120T, 1812-1 G--&gt;A, and 3667del4).</title>
        <authorList>
            <person name="Chillon M."/>
            <person name="Casals T."/>
            <person name="Gimenez J."/>
            <person name="Nunes V."/>
            <person name="Estivill X."/>
        </authorList>
    </citation>
    <scope>VARIANT CF THR-120</scope>
</reference>
<reference key="85">
    <citation type="journal article" date="1994" name="Hum. Mutat.">
        <title>A missense mutation (F87L) in exon 3 of the cystic fibrosis transmembrane conductance regulator gene.</title>
        <authorList>
            <person name="Bienvenu T."/>
            <person name="Petitpretz P."/>
            <person name="Beldjord C."/>
            <person name="Kaplan J.C."/>
        </authorList>
    </citation>
    <scope>VARIANT CF LEU-87</scope>
</reference>
<reference key="86">
    <citation type="journal article" date="1995" name="Am. J. Hum. Genet.">
        <title>Is congenital bilateral absence of vas deferens a primary form of cystic fibrosis? Analyses of the CFTR gene in 67 patients.</title>
        <authorList>
            <person name="Mercier B."/>
            <person name="Verlingue C."/>
            <person name="Lissens W."/>
            <person name="Silber S.J."/>
            <person name="Novelli G."/>
            <person name="Bonduelle M."/>
            <person name="Audrezet M.-P."/>
            <person name="Ferec C."/>
        </authorList>
    </citation>
    <scope>VARIANTS CBAVD ARG-149; LYS-193; GLY-258 AND GLY-800</scope>
</reference>
<reference key="87">
    <citation type="journal article" date="1995" name="Clin. Chem.">
        <title>Structural analysis of CFTR gene in congenital bilateral absence of vas deferens.</title>
        <authorList>
            <person name="Jezequel P."/>
            <person name="Dorval I."/>
            <person name="Fergelot P."/>
            <person name="Chauvel B."/>
            <person name="Le Treut A."/>
            <person name="Le Gall J.-Y."/>
            <person name="Le Lannou D."/>
            <person name="Blayau M."/>
        </authorList>
    </citation>
    <scope>VARIANTS CBAVD HIS-117 AND TRP-1070</scope>
    <scope>VARIANT VAL-1067</scope>
</reference>
<reference key="88">
    <citation type="journal article" date="1995" name="Clin. Genet.">
        <title>Mild cystic fibrosis disease in three Mexican delta-F508/G551S compound heterozygous siblings.</title>
        <authorList>
            <person name="Orozco L."/>
            <person name="Lezana J.L."/>
            <person name="Villarreal M.T."/>
            <person name="Chavez M."/>
            <person name="Carnevale A."/>
        </authorList>
    </citation>
    <scope>VARIANT CF SER-551</scope>
</reference>
<reference key="89">
    <citation type="journal article" date="1995" name="Hum. Genet.">
        <title>Search for mutations in pancreatic sufficient cystic fibrosis Italian patients: detection of 90% of molecular defects and identification of three novel mutations.</title>
        <authorList>
            <person name="Brancolini V."/>
            <person name="Cremonesi L."/>
            <person name="Belloni E."/>
            <person name="Pappalardo E."/>
            <person name="Bordoni R."/>
            <person name="Seia M."/>
            <person name="Russo S."/>
            <person name="Padoan R."/>
            <person name="Giunta A."/>
            <person name="Ferrari M."/>
        </authorList>
    </citation>
    <scope>VARIANTS CF GLY-57; LYS-193 AND GLY-579</scope>
</reference>
<reference key="90">
    <citation type="journal article" date="1995" name="Hum. Genet.">
        <title>Four adult patients with the missense mutation L206W and a mild cystic fibrosis phenotype.</title>
        <authorList>
            <person name="Desgeorges M."/>
            <person name="Rodier M."/>
            <person name="Piot M."/>
            <person name="Demaille J."/>
            <person name="Claustres M."/>
        </authorList>
    </citation>
    <scope>VARIANT CF TRP-206</scope>
</reference>
<reference key="91">
    <citation type="journal article" date="1995" name="Hum. Mutat.">
        <title>Identification of six mutations (R31L, 441delA, 681delC, 1461ins4, W1089R, E1104X) in the cystic fibrosis transmembrane conductance regulator (CFTR) gene.</title>
        <authorList>
            <person name="Zielenski J."/>
            <person name="Markiewicz D."/>
            <person name="Chen H.S."/>
            <person name="Schappert K.T."/>
            <person name="Seller A."/>
            <person name="Durie P."/>
            <person name="Corey M."/>
            <person name="Tsui L.-C."/>
        </authorList>
    </citation>
    <scope>VARIANTS CF LEU-31 AND ARG-1098</scope>
</reference>
<reference key="92">
    <citation type="journal article" date="1995" name="Hum. Mutat.">
        <title>Complete screening of mutations in the coding sequence of the CFTR gene in a sample of CF patients from Russia: identification of three novel alleles.</title>
        <authorList>
            <person name="Verlingue C."/>
            <person name="Kapranov N.I."/>
            <person name="Mercier B."/>
            <person name="Ginter E.K."/>
            <person name="Petrova N.V."/>
            <person name="Audrezet M.P."/>
            <person name="Ferec C."/>
        </authorList>
    </citation>
    <scope>VARIANT CF ASN-572</scope>
</reference>
<reference key="93">
    <citation type="journal article" date="1995" name="Hum. Mutat.">
        <title>Novel missense mutation in the first transmembrane segment of the CFTR gene (Q98R) identified in a male adult.</title>
        <authorList>
            <person name="Romey M.-C."/>
            <person name="Desgeorges M."/>
            <person name="Ray P."/>
            <person name="Godard P."/>
            <person name="Demaille J."/>
            <person name="Claustres M."/>
        </authorList>
    </citation>
    <scope>VARIANT CF ARG-98</scope>
</reference>
<reference key="94">
    <citation type="journal article" date="1995" name="J. Pediatr.">
        <title>A specific cystic fibrosis mutation (T338I) associated with the phenotype of isolated hypotonic dehydration.</title>
        <authorList>
            <person name="Leoni G.B."/>
            <person name="Pitzalis S."/>
            <person name="Podda R."/>
            <person name="Zanda M."/>
            <person name="Silvetti M."/>
            <person name="Caocci L."/>
            <person name="Cao A."/>
            <person name="Rosatelli M.C."/>
        </authorList>
    </citation>
    <scope>VARIANT CF ILE-338</scope>
</reference>
<reference key="95">
    <citation type="journal article" date="1995" name="Mol. Cell. Probes">
        <title>Identification of six novel CFTR mutations in a sample of Italian cystic fibrosis patients.</title>
        <authorList>
            <person name="Ferec C."/>
            <person name="Novelli G."/>
            <person name="Verlingue C."/>
            <person name="Quere I."/>
            <person name="Dallapiccola B."/>
            <person name="Audrezet M.P."/>
            <person name="Mercier B."/>
        </authorList>
    </citation>
    <scope>VARIANTS CF PHE-42; LEU-117; ARG-139 AND GLU-1006</scope>
</reference>
<reference key="96">
    <citation type="journal article" date="1996" name="Eur. J. Hum. Genet.">
        <title>Distribution of CFTR mutations in cystic fibrosis patients of Tunisian origin: identification of two novel mutations.</title>
        <authorList>
            <person name="Messaoud T."/>
            <person name="Verlingue C."/>
            <person name="Denamur E."/>
            <person name="Pascaud O."/>
            <person name="Quere I."/>
            <person name="Fattoum S."/>
            <person name="Elion J."/>
            <person name="Ferec C."/>
        </authorList>
    </citation>
    <scope>VARIANT CF SER-665</scope>
</reference>
<reference key="97">
    <citation type="journal article" date="1996" name="Hum. Mutat.">
        <title>Novel missense mutation (G314R) in a cystic fibrosis patient with hepatic failure.</title>
        <authorList>
            <person name="Nasr S.Z."/>
            <person name="Strong T.V."/>
            <person name="Mansoura M.K."/>
            <person name="Dawson D.C."/>
            <person name="Collins F.S."/>
        </authorList>
    </citation>
    <scope>VARIANT CF ARG-314</scope>
</reference>
<reference key="98">
    <citation type="journal article" date="1996" name="Hum. Mutat.">
        <title>A novel mutation in exon 12 (Y569C) of the CFTR gene identified in a patient of Croatian origin.</title>
        <authorList>
            <person name="Petreska L."/>
            <person name="Plaseska D."/>
            <person name="Koseva S."/>
            <person name="Stavljenic-Rukavina A."/>
            <person name="Efremov G.D."/>
        </authorList>
    </citation>
    <scope>VARIANT CF CYS-569</scope>
</reference>
<reference key="99">
    <citation type="journal article" date="1996" name="Hum. Mutat.">
        <title>Identification of three novel mutations in the cystic fibrosis transmembrane conductance regulator gene in Argentinian CF patients.</title>
        <authorList>
            <person name="Bienvenu T."/>
            <person name="Chertkoff L."/>
            <person name="Beldjord C."/>
            <person name="Segal E."/>
            <person name="Carniglia L."/>
            <person name="Barreiro C."/>
            <person name="Kaplan J.-C."/>
        </authorList>
    </citation>
    <scope>VARIANT CF ARG-1061</scope>
</reference>
<reference key="100">
    <citation type="journal article" date="1996" name="Hum. Mutat.">
        <title>Mutation characterization of CFTR gene in 206 Northern Irish CF families: thirty mutations, including two novel, account for approximately 94% of CF chromosomes.</title>
        <authorList>
            <person name="Hughes D.J."/>
            <person name="Hill A.J.M."/>
            <person name="Macek M. Jr."/>
            <person name="Redmond A.O."/>
            <person name="Nevin N.C."/>
            <person name="Graham C.A."/>
        </authorList>
    </citation>
    <scope>VARIANT CF LEU-562</scope>
</reference>
<reference key="101">
    <citation type="journal article" date="1996" name="J. Biol. Chem.">
        <title>ATPase activity of the cystic fibrosis transmembrane conductance regulator.</title>
        <authorList>
            <person name="Li C."/>
            <person name="Ramjeesingh M."/>
            <person name="Wang W."/>
            <person name="Garami E."/>
            <person name="Hewryk M."/>
            <person name="Lee D."/>
            <person name="Rommens J.M."/>
            <person name="Galley K."/>
            <person name="Bear C.E."/>
        </authorList>
    </citation>
    <scope>CHARACTERIZATION OF VARIANT CF ASP-551</scope>
    <scope>FUNCTION</scope>
    <scope>TRANSPORTER ACTIVITY</scope>
    <scope>CATALYTIC ACTIVITY</scope>
    <scope>SUBCELLULAR LOCATION</scope>
    <scope>PHOSPHORYLATION</scope>
</reference>
<reference key="102">
    <citation type="journal article" date="1997" name="Hum. Mutat.">
        <title>Identification of two mutations (S50Y and 4173delC) in the CFTR gene from patients with congenital bilateral absence of vas deferens (CBAVD).</title>
        <authorList>
            <person name="Zielenski J."/>
            <person name="Patrizio P."/>
            <person name="Markiewicz D."/>
            <person name="Asch R.H."/>
            <person name="Tsui L.-C."/>
        </authorList>
    </citation>
    <scope>VARIANT CBAVD TYR-50</scope>
</reference>
<reference key="103">
    <citation type="journal article" date="1997" name="Hum. Mutat.">
        <title>Identification of four novel mutations in the cystic fibrosis transmembrane conductance regulator gene: E664X, 2113delA, 306delTAGA, and delta M1140.</title>
        <authorList>
            <person name="Clavel C."/>
            <person name="Pennaforte F."/>
            <person name="Pigeon F."/>
            <person name="Verlingue C."/>
            <person name="Birembaut P."/>
            <person name="Ferec C."/>
        </authorList>
    </citation>
    <scope>VARIANT CF MET-1140 DEL</scope>
</reference>
<reference key="104">
    <citation type="journal article" date="1997" name="Hum. Mutat.">
        <title>Novel mutation (A141D) in exon 4 of the CFTR gene identified in an Algerian patient.</title>
        <authorList>
            <person name="Gouya L."/>
            <person name="Pascaud O."/>
            <person name="Munck A."/>
            <person name="Elion J."/>
            <person name="Denamur E."/>
        </authorList>
    </citation>
    <scope>VARIANT CF ASP-141</scope>
</reference>
<reference key="105">
    <citation type="journal article" date="1997" name="Hum. Mutat.">
        <title>Missense mutation R1066C in the second transmembrane domain of CFTR causes a severe cystic fibrosis phenotype: study of 19 heterozygous and 2 homozygous patients.</title>
        <authorList>
            <person name="Casals T."/>
            <person name="Pacheco P."/>
            <person name="Barreto C."/>
            <person name="Gimenez J."/>
            <person name="Ramos M.D."/>
            <person name="Pereira S."/>
            <person name="Pinheiro J.A."/>
            <person name="Cobos N."/>
            <person name="Curvelo A."/>
            <person name="Vazquez C."/>
            <person name="Rocha H."/>
            <person name="Seculi J.L."/>
            <person name="Perez E."/>
            <person name="Dapena J."/>
            <person name="Carrilho E."/>
            <person name="Duarte A."/>
            <person name="Palacio A.M."/>
            <person name="Nunes V."/>
            <person name="Lavinha J."/>
            <person name="Estivill X."/>
        </authorList>
    </citation>
    <scope>VARIANT CF CYS-1066</scope>
</reference>
<reference key="106">
    <citation type="journal article" date="1997" name="Hum. Mutat.">
        <title>Cystic fibrosis mutation frequencies in upstate New York.</title>
        <authorList>
            <person name="Shrimpton A.E."/>
            <person name="Borowitz D."/>
            <person name="Swender P."/>
        </authorList>
    </citation>
    <scope>VARIANTS CF GLU-85; HIS-117; TYR-287; GLU-455; ASP-551; PRO-1070 AND LYS-1303</scope>
</reference>
<reference key="107">
    <citation type="journal article" date="1998" name="Am. J. Hum. Genet.">
        <title>Cystic fibrosis transmembrane-conductance regulator mutations among African Americans.</title>
        <authorList>
            <person name="Friedman K.J."/>
            <person name="Leigh M.W."/>
            <person name="Czarnecki P."/>
            <person name="Feldman G.L."/>
        </authorList>
    </citation>
    <scope>VARIANT CF PHE-311 DEL</scope>
</reference>
<reference key="108">
    <citation type="journal article" date="1998" name="FEBS Lett.">
        <title>Characterization of mutations located in exon 18 of the CFTR gene.</title>
        <authorList>
            <person name="Vankeerberghen A."/>
            <person name="Wei L."/>
            <person name="Teng H."/>
            <person name="Jaspers M."/>
            <person name="Cassiman J.J."/>
            <person name="Nilius B."/>
            <person name="Cuppens H."/>
        </authorList>
    </citation>
    <scope>CHARACTERIZATION OF VARIANTS CF VAL-1137; MET-1140 DEL AND HIS-1152</scope>
    <scope>MUTAGENESIS OF MET-1137; ILE-1139 AND ASP-1154</scope>
    <scope>SUBCELLULAR LOCATION</scope>
    <scope>FUNCTION</scope>
    <scope>TRANSPORTER ACTIVITY</scope>
</reference>
<reference key="109">
    <citation type="journal article" date="1998" name="Hum. Genet.">
        <title>Analysis of the CFTR gene in Turkish cystic fibrosis patients: identification of three novel mutations (3172delAC, P1013L and M1028I).</title>
        <authorList>
            <person name="Onay T."/>
            <person name="Topaloglu O."/>
            <person name="Zielenski J."/>
            <person name="Gokgoz N."/>
            <person name="Kayserili H."/>
            <person name="Camcioglu Y."/>
            <person name="Cokugras H."/>
            <person name="Akcakaya N."/>
            <person name="Apak M."/>
            <person name="Tsui L.-C."/>
            <person name="Kirdar B."/>
        </authorList>
    </citation>
    <scope>VARIANTS CF GLN-75; HIS-110; SER-571; ILE-952; LEU-1013; ILE-1028 AND LYS-1303</scope>
</reference>
<reference key="110">
    <citation type="journal article" date="1998" name="Hum. Genet.">
        <title>Complete mutational screening of the CFTR gene in 120 patients with pulmonary disease.</title>
        <authorList>
            <person name="Bombieri C."/>
            <person name="Benetazzo M."/>
            <person name="Saccomani A."/>
            <person name="Belpinati F."/>
            <person name="Gile L.S."/>
            <person name="Luisetti M."/>
            <person name="Pignatti P.F."/>
        </authorList>
    </citation>
    <scope>VARIANTS CYS-31; GLN-75; VAL-506 AND CYS-668</scope>
    <scope>VARIANTS CF CYS-301; ASN-651; MET-754 AND LEU-1072</scope>
</reference>
<reference key="111">
    <citation type="journal article" date="1998" name="Hum. Mol. Genet.">
        <title>Characterization of 19 disease-associated missense mutations in the regulatory domain of the cystic fibrosis transmembrane conductance regulator.</title>
        <authorList>
            <person name="Vankeerberghen A."/>
            <person name="Wei L."/>
            <person name="Jaspers M."/>
            <person name="Cassiman J.-J."/>
            <person name="Nilius B."/>
            <person name="Cuppens H."/>
        </authorList>
    </citation>
    <scope>CHARACTERIZATION OF VARIANTS CF PHE-601; SER-610; THR-613; GLY-614; THR-618; SER-619; GLN-620; PRO-620; ARG-628; PRO-633; SER-665; LEU-693 AND LYS-822</scope>
    <scope>CHARACTERIZATION OF VARIANTS CBAVD ASP-622; MET-766; GLY-792; GLY-800 AND MET-807</scope>
    <scope>CHARACTERIZATION OF VARIANT THORACIC SARCOIDOSIS LYS-826</scope>
</reference>
<reference key="112">
    <citation type="journal article" date="1998" name="Hum. Mutat.">
        <title>Detection of five novel mutations of the cystic fibrosis transmembrane regulator (CFTR) gene in Pakistani patients with cystic fibrosis: Y569D, Q98X, 296+12(T&gt;C), 1161delC and 621+2(T&gt;C).</title>
        <authorList>
            <person name="Malone G."/>
            <person name="Haworth A."/>
            <person name="Schwarz M.J."/>
            <person name="Cuppens H."/>
            <person name="Super M."/>
        </authorList>
    </citation>
    <scope>VARIANTS CF SER-560 AND ASP-569</scope>
</reference>
<reference key="113">
    <citation type="journal article" date="1998" name="Hum. Mutat.">
        <title>Identification of a novel mutation (S13F) in the CFTR gene in a CF patient of Sardinian origin.</title>
        <authorList>
            <person name="Leoni G.B."/>
            <person name="Pitzalis S."/>
            <person name="Tonelli R."/>
            <person name="Cao A."/>
        </authorList>
    </citation>
    <scope>VARIANTS CF PHE-13 AND ILE-338</scope>
</reference>
<reference key="114">
    <citation type="journal article" date="1998" name="Hum. Mutat. Suppl.">
        <title>Identification of three novel mutations in the CFTR gene, R117P, deltaD192, and 3121+1G--&gt;A in four French patients.</title>
        <authorList>
            <person name="Feldmann D."/>
            <person name="Sardet A."/>
            <person name="Cougoureux E."/>
            <person name="Plouvier E."/>
            <person name="Fontaine J.-L."/>
            <person name="Tournier G."/>
            <person name="Aymard P."/>
        </authorList>
    </citation>
    <scope>VARIANTS CF PRO-117 AND ASP-192 DEL</scope>
</reference>
<reference key="115">
    <citation type="journal article" date="1998" name="Hum. Mutat. Suppl.">
        <title>Paternal origin of a de novo novel CFTR mutation (L1065R) causing cystic fibrosis.</title>
        <authorList>
            <person name="Casals T."/>
            <person name="Ramos M.D."/>
            <person name="Gimenez J."/>
            <person name="Nadal M."/>
            <person name="Nunes V."/>
            <person name="Estivill X."/>
        </authorList>
    </citation>
    <scope>VARIANT CF ARG-1065</scope>
</reference>
<reference key="116">
    <citation type="journal article" date="1998" name="Hum. Mutat. Suppl.">
        <title>A 2-amino acid insertion mutation (1243insACAAAA) in exon 7 of the CFTR gene.</title>
        <authorList>
            <person name="Shackleton S."/>
            <person name="Harris A."/>
        </authorList>
    </citation>
    <scope>VARIANT CF ASN-LYS-370 INS</scope>
</reference>
<reference key="117">
    <citation type="journal article" date="1998" name="Hum. Mutat.">
        <title>A novel missense mutation D513G in exon 10 of the cystic fibrosis transmembrane conductance regulator (CFTR) gene identified in a French CBAVD patient.</title>
        <authorList>
            <person name="Bienvenu T."/>
            <person name="Bousquet S."/>
            <person name="Vidaud D."/>
            <person name="Hubert D."/>
            <person name="Francoual C."/>
            <person name="Beldjord C."/>
            <person name="Kaplan J.-C."/>
        </authorList>
    </citation>
    <scope>VARIANT CBAVD GLY-513</scope>
    <scope>VARIANT MET-470</scope>
</reference>
<reference key="118">
    <citation type="journal article" date="1998" name="Hum. Mutat.">
        <title>Genetic findings in congenital bilateral aplasia of vas deferens patients and identification of six novel mutations.</title>
        <authorList>
            <person name="de Meeus A."/>
            <person name="Guittard C."/>
            <person name="Desgeorges M."/>
            <person name="Carles S."/>
            <person name="Demaille J."/>
            <person name="Claustres M."/>
        </authorList>
    </citation>
    <scope>VARIANTS CBAVD LEU-111; LYS-244; VAL-544 AND VAL-1364</scope>
</reference>
<reference key="119">
    <citation type="journal article" date="1998" name="J. Med. Genet.">
        <title>P67L: a cystic fibrosis allele with mild effects found at high frequency in the Scottish population.</title>
        <authorList>
            <person name="Gilfillan A."/>
            <person name="Warner J.P."/>
            <person name="Kirk J.M."/>
            <person name="Marshall T."/>
            <person name="Greening A."/>
            <person name="Ho L.P."/>
            <person name="Hargreave T."/>
            <person name="Stack B."/>
            <person name="McIntyre D."/>
            <person name="Davidson R."/>
            <person name="Dean J.C."/>
            <person name="Middleton W."/>
            <person name="Brock D.J."/>
        </authorList>
    </citation>
    <scope>VARIANT CF LEU-67</scope>
</reference>
<reference key="120">
    <citation type="journal article" date="1999" name="Clin. Genet.">
        <title>Analysis of infertile brothers with congenital bilateral absence of vas deferens for mutations in the CFTR gene.</title>
        <authorList>
            <person name="Onay T."/>
            <person name="Kayserili H."/>
            <person name="Apak M.Y."/>
            <person name="Kirdar B."/>
        </authorList>
    </citation>
    <scope>VARIANT CBAVD ASN-307</scope>
</reference>
<reference key="121">
    <citation type="journal article" date="1999" name="Hum. Mutat.">
        <title>Identification of a D579G homozygote cystic fibrosis patient with pancreatic sufficiency and minor lung involvement.</title>
        <authorList>
            <person name="Picci L."/>
            <person name="Cameran M."/>
            <person name="Olante P."/>
            <person name="Zacchello F."/>
            <person name="Scarpa M."/>
        </authorList>
    </citation>
    <scope>VARIANT CF GLY-579</scope>
</reference>
<reference key="122">
    <citation type="journal article" date="2000" name="Am. J. Med. Genet.">
        <title>Is the spectrum of mutations in Indian patients with cystic fibrosis different?</title>
        <authorList>
            <person name="Kabra M."/>
            <person name="Kabra S.K."/>
            <person name="Ghosh M."/>
            <person name="Khanna A."/>
            <person name="Arora S."/>
            <person name="Menon P.S."/>
            <person name="Verma I.C."/>
            <person name="Wallace A."/>
        </authorList>
    </citation>
    <scope>VARIANT CF HIS-569</scope>
</reference>
<reference key="123">
    <citation type="journal article" date="2000" name="Hum. Mutat.">
        <title>Spectrum of CFTR mutations in cystic fibrosis and in congenital absence of the vas deferens in France.</title>
        <authorList>
            <person name="Claustres M."/>
            <person name="Guittard C."/>
            <person name="Bozon D."/>
            <person name="Chevalier F."/>
            <person name="Verlingue C."/>
            <person name="Ferec C."/>
            <person name="Girodon E."/>
            <person name="Cazeneuve C."/>
            <person name="Bienvenu T."/>
            <person name="Lalau G."/>
            <person name="Dumur V."/>
            <person name="Feldmann D."/>
            <person name="Bieth E."/>
            <person name="Blayau M."/>
            <person name="Clavel C."/>
            <person name="Creveaux I."/>
            <person name="Malinge M.C."/>
            <person name="Monnier N."/>
            <person name="Malzac P."/>
            <person name="Mittre H."/>
            <person name="Chomel J.C."/>
            <person name="Bonnefont J.P."/>
            <person name="Iron A."/>
            <person name="Chery M."/>
            <person name="Georges M.D."/>
        </authorList>
    </citation>
    <scope>VARIANT CF HIS-569</scope>
    <scope>REVIEW</scope>
</reference>
<reference key="124">
    <citation type="journal article" date="2001" name="Nature">
        <title>Aberrant CFTR-dependent HCO3- transport in mutations associated with cystic fibrosis.</title>
        <authorList>
            <person name="Choi J.Y."/>
            <person name="Muallem D."/>
            <person name="Kiselyov K."/>
            <person name="Lee M.G."/>
            <person name="Thomas P.J."/>
            <person name="Muallem S."/>
        </authorList>
    </citation>
    <scope>CHARACTERIZATION OF VARIANTS CF HIS-117; THR-148; ARG-178; LYS-193; ASP-551; SER-551; GLN-620; VAL-648; GLY-800; TYR-949; THR-1067; GLN-1070; GLU-1244; PRO-1255 AND ASP-1349</scope>
</reference>
<reference key="125">
    <citation type="journal article" date="2002" name="Genet. Med.">
        <title>The I148T CFTR allele occurs on multiple haplotypes: a complex allele is associated with cystic fibrosis.</title>
        <authorList>
            <person name="Rohlfs E.M."/>
            <person name="Zhou Z."/>
            <person name="Sugarman E.A."/>
            <person name="Heim R.A."/>
            <person name="Pace R.G."/>
            <person name="Knowles M.R."/>
            <person name="Silverman L.M."/>
            <person name="Allitto B.A."/>
        </authorList>
    </citation>
    <scope>VARIANTS CF THR-148; PHE-508 DEL; 890-GLN--LEU-1480 DEL; 1023-ILE-VAL-1024 DEL AND LYS-1303</scope>
</reference>
<reference key="126">
    <citation type="journal article" date="2002" name="N. Engl. J. Med.">
        <title>Variant cystic fibrosis phenotypes in the absence of CFTR mutations.</title>
        <authorList>
            <person name="Groman J.D."/>
            <person name="Meyer M.E."/>
            <person name="Wilmott R.W."/>
            <person name="Zeitlin P.L."/>
            <person name="Cutting G.R."/>
        </authorList>
    </citation>
    <scope>VARIANT CF LEU-693</scope>
</reference>
<reference key="127">
    <citation type="journal article" date="2003" name="J. Biol. Chem.">
        <title>A mutation in the cystic fibrosis transmembrane conductance regulator generates a novel internalization sequence and enhances endocytic rates.</title>
        <authorList>
            <person name="Silvis M.R."/>
            <person name="Picciano J.A."/>
            <person name="Bertrand C."/>
            <person name="Weixel K."/>
            <person name="Bridges R.J."/>
            <person name="Bradbury N.A."/>
        </authorList>
    </citation>
    <scope>CHARACTERIZATION OF VARIANT CF TYR-287 AND PHE-508 DEL</scope>
    <scope>SUBCELLULAR LOCATION</scope>
    <scope>FUNCTION</scope>
    <scope>TRANSPORTER ACTIVITY</scope>
    <scope>GLYCOSYLATION</scope>
</reference>
<reference key="128">
    <citation type="journal article" date="2005" name="Mol. Biol. Cell">
        <title>Characterization of wild-type and deltaF508 cystic fibrosis transmembrane regulator in human respiratory epithelia.</title>
        <authorList>
            <person name="Kreda S.M."/>
            <person name="Mall M."/>
            <person name="Mengos A."/>
            <person name="Rochelle L."/>
            <person name="Yankaskas J."/>
            <person name="Riordan J.R."/>
            <person name="Boucher R.C."/>
        </authorList>
    </citation>
    <scope>CHARACTERIZATION OF VARIANT CF PHE-508 DEL</scope>
    <scope>SUBCELLULAR LOCATION</scope>
    <scope>FUNCTION</scope>
    <scope>TISSUE SPECIFICITY</scope>
</reference>
<reference key="129">
    <citation type="journal article" date="2006" name="Proc. Natl. Acad. Sci. U.S.A.">
        <title>Revertant mutants G550E and 4RK rescue cystic fibrosis mutants in the first nucleotide-binding domain of CFTR by different mechanisms.</title>
        <authorList>
            <person name="Roxo-Rosa M."/>
            <person name="Xu Z."/>
            <person name="Schmidt A."/>
            <person name="Neto M."/>
            <person name="Cai Z."/>
            <person name="Soares C.M."/>
            <person name="Sheppard D.N."/>
            <person name="Amaral M.D."/>
        </authorList>
    </citation>
    <scope>CHARACTERIZATION OF VARIANTS CF PHE-508 DEL; THR-560; GLU-561 AND ILE-562</scope>
</reference>
<reference key="130">
    <citation type="journal article" date="2007" name="Am. J. Physiol.">
        <title>Abnormal regulatory interactions of I148T-CFTR and the epithelial Na+ channel in Xenopus oocytes.</title>
        <authorList>
            <person name="Suaud L."/>
            <person name="Yan W."/>
            <person name="Rubenstein R.C."/>
        </authorList>
    </citation>
    <scope>CHARACTERIZATION OF VARIANT CF THR-148</scope>
</reference>
<reference key="131">
    <citation type="journal article" date="2007" name="Am. J. Physiol.">
        <title>Regulatory interactions of N1303K-CFTR and ENaC in Xenopus oocytes: evidence that chloride transport is not necessary for inhibition of ENaC.</title>
        <authorList>
            <person name="Suaud L."/>
            <person name="Yan W."/>
            <person name="Carattino M.D."/>
            <person name="Robay A."/>
            <person name="Kleyman T.R."/>
            <person name="Rubenstein R.C."/>
        </authorList>
    </citation>
    <scope>CHARACTERIZATION OF VARIANT CF LYS-1303</scope>
    <scope>FUNCTION</scope>
    <scope>TRANSPORTER ACTIVITY</scope>
    <scope>SUBCELLULAR LOCATION</scope>
</reference>
<reference key="132">
    <citation type="journal article" date="2007" name="Hum. Reprod.">
        <title>Detection of cystic fibrosis transmembrane conductance regulator (CFTR) gene rearrangements enriches the mutation spectrum in congenital bilateral absence of the vas deferens and impacts on genetic counselling.</title>
        <authorList>
            <person name="Ratbi I."/>
            <person name="Legendre M."/>
            <person name="Niel F."/>
            <person name="Martin J."/>
            <person name="Soufir J.C."/>
            <person name="Izard V."/>
            <person name="Costes B."/>
            <person name="Costa C."/>
            <person name="Goossens M."/>
            <person name="Girodon E."/>
        </authorList>
    </citation>
    <scope>VARIANTS GLN-75 AND MET-470</scope>
    <scope>VARIANTS CBAVD TRP-74; HIS-110; HIS-117; HIS-170; TRP-206; ASP-232; TRP-334; TYR-443; PHE-508 DEL; VAL-556; ILE-562; ALA-576; ASP-622; CYS-668; GLY-938; ILE-952; VAL-959; PHE-977; PHE-997; CYS-1032; ARG-1069; HIS-1152; GLU-1153; ASN-1270; 1282-TRP--LEU-1480 DEL; HIS-1352 AND 1473-GLU--LEU-1480 DEL</scope>
</reference>
<reference key="133">
    <citation type="journal article" date="2008" name="Nature">
        <title>DNA sequencing of a cytogenetically normal acute myeloid leukaemia genome.</title>
        <authorList>
            <person name="Ley T.J."/>
            <person name="Mardis E.R."/>
            <person name="Ding L."/>
            <person name="Fulton B."/>
            <person name="McLellan M.D."/>
            <person name="Chen K."/>
            <person name="Dooling D."/>
            <person name="Dunford-Shore B.H."/>
            <person name="McGrath S."/>
            <person name="Hickenbotham M."/>
            <person name="Cook L."/>
            <person name="Abbott R."/>
            <person name="Larson D.E."/>
            <person name="Koboldt D.C."/>
            <person name="Pohl C."/>
            <person name="Smith S."/>
            <person name="Hawkins A."/>
            <person name="Abbott S."/>
            <person name="Locke D."/>
            <person name="Hillier L.W."/>
            <person name="Miner T."/>
            <person name="Fulton L."/>
            <person name="Magrini V."/>
            <person name="Wylie T."/>
            <person name="Glasscock J."/>
            <person name="Conyers J."/>
            <person name="Sander N."/>
            <person name="Shi X."/>
            <person name="Osborne J.R."/>
            <person name="Minx P."/>
            <person name="Gordon D."/>
            <person name="Chinwalla A."/>
            <person name="Zhao Y."/>
            <person name="Ries R.E."/>
            <person name="Payton J.E."/>
            <person name="Westervelt P."/>
            <person name="Tomasson M.H."/>
            <person name="Watson M."/>
            <person name="Baty J."/>
            <person name="Ivanovich J."/>
            <person name="Heath S."/>
            <person name="Shannon W.D."/>
            <person name="Nagarajan R."/>
            <person name="Walter M.J."/>
            <person name="Link D.C."/>
            <person name="Graubert T.A."/>
            <person name="DiPersio J.F."/>
            <person name="Wilson R.K."/>
        </authorList>
    </citation>
    <scope>VARIANT [LARGE SCALE ANALYSIS] MET-470</scope>
</reference>
<reference key="134">
    <citation type="journal article" date="2010" name="Clin. Invest. Med.">
        <title>Clinical hallmarks and genetic polymorphisms in the CFTR gene contribute to the disclosure of the A1006E mutation.</title>
        <authorList>
            <person name="Tomaiuolo A.C."/>
            <person name="Alghisi F."/>
            <person name="Petrocchi S."/>
            <person name="Surace C."/>
            <person name="Roberti M.C."/>
            <person name="Bella S."/>
            <person name="Lucidi V."/>
            <person name="Angioni A."/>
        </authorList>
    </citation>
    <scope>VARIANTS CF 220-GLN--LEU-1480 DEL; MET-470; PHE-508 DEL; ILE-562 AND GLU-1006</scope>
</reference>
<reference key="135">
    <citation type="journal article" date="2011" name="Cell">
        <title>Rescue of DeltaF508-CFTR trafficking via a GRASP-dependent unconventional secretion pathway.</title>
        <authorList>
            <person name="Gee H.Y."/>
            <person name="Noh S.H."/>
            <person name="Tang B.L."/>
            <person name="Kim K.H."/>
            <person name="Lee M.G."/>
        </authorList>
    </citation>
    <scope>CHARACTERIZATION OF VARIANT CF PHE-508 DEL</scope>
    <scope>INTERACTION WITH GORASP2</scope>
    <scope>SUBCELLULAR LOCATION</scope>
    <scope>GLYCOSYLATION</scope>
</reference>
<reference key="136">
    <citation type="journal article" date="2016" name="J. Mol. Biol.">
        <title>Rattlesnake phospholipase A2 increases CFTR-chloride channel current and corrects DelF508CFTR dysfunction: impact in cystic fibrosis.</title>
        <authorList>
            <person name="Faure G."/>
            <person name="Bakouh N."/>
            <person name="Lourdel S."/>
            <person name="Odolczyk N."/>
            <person name="Premchandar A."/>
            <person name="Servel N."/>
            <person name="Hatton A."/>
            <person name="Ostrowski M.K."/>
            <person name="Xu H."/>
            <person name="Saul F.A."/>
            <person name="Moquereau C."/>
            <person name="Bitam S."/>
            <person name="Pranke I."/>
            <person name="Planelles G."/>
            <person name="Teulon J."/>
            <person name="Herrmann H."/>
            <person name="Roldan A."/>
            <person name="Zielenkiewicz P."/>
            <person name="Dadlez M."/>
            <person name="Lukacs G.L."/>
            <person name="Sermet-Gaudelus I."/>
            <person name="Ollero M."/>
            <person name="Corringer P.J."/>
            <person name="Edelman A."/>
        </authorList>
    </citation>
    <scope>CHARACTERIZATION OF VARIANT CF PHE-508 DEL</scope>
</reference>
<reference key="137">
    <citation type="journal article" date="2016" name="J. Physiol. (Lond.)">
        <title>On the mechanism of gating defects caused by the R117H mutation in cystic fibrosis transmembrane conductance regulator.</title>
        <authorList>
            <person name="Yu Y.C."/>
            <person name="Sohma Y."/>
            <person name="Hwang T.C."/>
        </authorList>
    </citation>
    <scope>CHARACTERIZATION OF VARIANT CF HIS-117</scope>
    <scope>FUNCTION</scope>
    <scope>TRANSPORTER ACTIVITY</scope>
    <scope>SUBCELLULAR LOCATION</scope>
</reference>
<reference key="138">
    <citation type="journal article" date="2017" name="Biochemistry">
        <title>Direct measurement of trafficking of the cystic fibrosis transmembrane conductance regulator to the cell surface and binding to a chemical chaperone.</title>
        <authorList>
            <person name="Zhang Z."/>
            <person name="Baksh M.M."/>
            <person name="Finn M.G."/>
            <person name="Heidary D.K."/>
            <person name="Richards C.I."/>
        </authorList>
    </citation>
    <scope>CHARACTERIZATION OF VARIANT CF PHE-508 DEL</scope>
    <scope>SUBCELLULAR LOCATION</scope>
    <scope>MUTAGENESIS OF ILE-539</scope>
</reference>
<reference key="139">
    <citation type="journal article" date="2017" name="J. Biol. Chem.">
        <title>Two small molecules restore stability to a sub-population of the cystic fibrosis transmembrane conductance regulator with the predominant disease-causing mutation.</title>
        <authorList>
            <person name="Meng X."/>
            <person name="Wang Y."/>
            <person name="Wang X."/>
            <person name="Wrennall J.A."/>
            <person name="Rimington T.L."/>
            <person name="Li H."/>
            <person name="Cai Z."/>
            <person name="Ford R.C."/>
            <person name="Sheppard D.N."/>
        </authorList>
    </citation>
    <scope>CHARACTERIZATION OF VARIANTS CF PHE-508 DEL AND ASP-551</scope>
    <scope>SUBCELLULAR LOCATION</scope>
    <scope>FUNCTION</scope>
    <scope>TRANSPORTER ACTIVITY</scope>
</reference>
<reference key="140">
    <citation type="journal article" date="2017" name="Sci. Rep.">
        <title>Sec16A is critical for both conventional and unconventional secretion of CFTR.</title>
        <authorList>
            <person name="Piao H."/>
            <person name="Kim J."/>
            <person name="Noh S.H."/>
            <person name="Kweon H.S."/>
            <person name="Kim J.Y."/>
            <person name="Lee M.G."/>
        </authorList>
    </citation>
    <scope>CHARACTERIZATION OF VARIANT CF PHE-508 DEL</scope>
    <scope>SUBCELLULAR LOCATION</scope>
</reference>
<reference key="141">
    <citation type="journal article" date="2020" name="Ann. Saudi Med.">
        <title>Genotype patterns for mutations of the cystic fibrosis transmembrane conductance regulator gene: a retrospective descriptive study from Saudi Arabia.</title>
        <authorList>
            <person name="Banjar H.H."/>
            <person name="Tuleimat L."/>
            <person name="El Seoudi A.A.A."/>
            <person name="Mogarri I."/>
            <person name="Alhaider S."/>
            <person name="Nizami I.Y."/>
            <person name="AlMaghamsi T."/>
            <person name="Alkaf S.A."/>
            <person name="Moghrabi N."/>
        </authorList>
    </citation>
    <scope>VARIANT CF ASN-307</scope>
    <scope>REVIEW</scope>
</reference>
<reference key="142">
    <citation type="journal article" date="2021" name="Genes (Basel)">
        <title>Current Status of Genetic Diagnosis Laboratories and Frequency of Genetic Variants Associated with Cystic Fibrosis through a Newborn-Screening Program in Turkey.</title>
        <authorList>
            <person name="Bozdogan S.T."/>
            <person name="Mujde C."/>
            <person name="Boga I."/>
            <person name="Sonmezler O."/>
            <person name="Hanta A."/>
            <person name="Rencuzogullari C."/>
            <person name="Ozcan D."/>
            <person name="Altintas D.U."/>
            <person name="Bisgin A."/>
        </authorList>
    </citation>
    <scope>VARIANT CF ASN-307</scope>
    <scope>REVIEW</scope>
</reference>
<protein>
    <recommendedName>
        <fullName evidence="136">Cystic fibrosis transmembrane conductance regulator</fullName>
        <shortName>CFTR</shortName>
    </recommendedName>
    <alternativeName>
        <fullName>ATP-binding cassette sub-family C member 7</fullName>
    </alternativeName>
    <alternativeName>
        <fullName>Channel conductance-controlling ATPase</fullName>
        <ecNumber evidence="14 34 70 114">5.6.1.6</ecNumber>
    </alternativeName>
    <alternativeName>
        <fullName>cAMP-dependent chloride channel</fullName>
    </alternativeName>
</protein>
<comment type="function">
    <text evidence="9 14 15 18 19 20 21 22 31 32 34 38 42 46 47 52 53 54 63 69 70 71 72 74 75 78 80 114 131 138">Epithelial ion channel that plays an important role in the regulation of epithelial ion and water transport and fluid homeostasis (PubMed:26823428). Mediates the transport of chloride ions across the cell membrane (PubMed:10792060, PubMed:11524016, PubMed:11707463, PubMed:12519745, PubMed:12529365, PubMed:12588899, PubMed:12727866, PubMed:15010471, PubMed:17036051, PubMed:1712898, PubMed:17182731, PubMed:19398555, PubMed:19621064, PubMed:22178883, PubMed:25330774, PubMed:26846474, PubMed:28087700, PubMed:8910473, PubMed:9804160). Possesses an intrinsic ATPase activity and utilizes ATP to gate its channel; the passive flow of anions through the channel is gated by cycles of ATP binding and hydrolysis by the ATP-binding domains (PubMed:11524016, PubMed:15284228, PubMed:26627831, PubMed:8910473). The ion channel is also permeable to HCO(3)(-); selectivity depends on the extracellular chloride concentration (PubMed:15010471, PubMed:19019741). In vitro, mediates ATP-dependent glutathione flux (PubMed:12727866). Exerts its function also by modulating the activity of other ion channels and transporters (PubMed:12403779, PubMed:22121115, PubMed:22178883, PubMed:27941075). Plays an important role in airway fluid homeostasis (PubMed:16645176, PubMed:19621064, PubMed:26823428). Contributes to the regulation of the pH and the ion content of the airway surface fluid layer and thereby plays an important role in defense against pathogens (PubMed:14668433, PubMed:16645176, PubMed:26823428). Modulates the activity of the epithelial sodium channel (ENaC) complex, in part by regulating the cell surface expression of the ENaC complex (PubMed:17182731, PubMed:17434346, PubMed:27941075). Inhibits the activity of the ENaC channel containing subunits SCNN1A, SCNN1B and SCNN1G (PubMed:17182731). Inhibits the activity of the ENaC channel containing subunits SCNN1D, SCNN1B and SCNN1G, but not of the ENaC channel containing subunits SCNN1A, SCNN1B and SCNN1G (PubMed:17182731, PubMed:27941075). May regulate bicarbonate secretion and salvage in epithelial cells by regulating the transporter SLC4A7 (PubMed:12403779). Can inhibit the chloride channel activity of ANO1 (PubMed:22178883). Plays a role in the chloride and bicarbonate homeostasis during sperm epididymal maturation and capacitation (PubMed:19923167, PubMed:27714810, PubMed:29393851).</text>
</comment>
<comment type="catalytic activity">
    <reaction evidence="14 34 70 114">
        <text>ATP + H2O + closed Cl(-) channel = ADP + phosphate + open Cl(-) channel.</text>
        <dbReference type="EC" id="5.6.1.6"/>
    </reaction>
</comment>
<comment type="catalytic activity">
    <reaction evidence="9 14 15 19 20 21 22 32 42 46 47 53 54 63 69 72 78 114 131">
        <text>chloride(in) = chloride(out)</text>
        <dbReference type="Rhea" id="RHEA:29823"/>
        <dbReference type="ChEBI" id="CHEBI:17996"/>
    </reaction>
</comment>
<comment type="catalytic activity">
    <reaction evidence="32 52">
        <text>hydrogencarbonate(in) = hydrogencarbonate(out)</text>
        <dbReference type="Rhea" id="RHEA:28695"/>
        <dbReference type="ChEBI" id="CHEBI:17544"/>
    </reaction>
</comment>
<comment type="catalytic activity">
    <reaction evidence="14 34 70 114">
        <text>ATP + H2O = ADP + phosphate + H(+)</text>
        <dbReference type="Rhea" id="RHEA:13065"/>
        <dbReference type="ChEBI" id="CHEBI:15377"/>
        <dbReference type="ChEBI" id="CHEBI:15378"/>
        <dbReference type="ChEBI" id="CHEBI:30616"/>
        <dbReference type="ChEBI" id="CHEBI:43474"/>
        <dbReference type="ChEBI" id="CHEBI:456216"/>
    </reaction>
    <physiologicalReaction direction="left-to-right" evidence="114">
        <dbReference type="Rhea" id="RHEA:13066"/>
    </physiologicalReaction>
</comment>
<comment type="biophysicochemical properties">
    <kinetics>
        <KM evidence="22">0.47 mM for glutathione (in the presence of MgAMP-PNP)</KM>
        <Vmax evidence="22">612.0 pmol/h/ug enzyme (in the presence of MgAMP-PNP)</Vmax>
    </kinetics>
</comment>
<comment type="subunit">
    <text evidence="1 2 13 14 15 18 33 37 49 59 60 62 63 66 80">Monomer; does not require oligomerization for channel activity (PubMed:11524016). May form oligomers in the membrane (PubMed:11524016). Interacts with SLC26A3, SLC26A6 and SHANK2 (By similarity). Interacts with NHERF1 and MYO6 (PubMed:11304524, PubMed:12403779, PubMed:15247260). Interacts (via C-terminus) with GOPC (via PDZ domain); this promotes CFTR internalization and thereby decreases channel activity (PubMed:11707463, PubMed:16331976). Interacts with SLC4A7 through NHERF1 (PubMed:12403779). Found in a complex with MYO5B and RAB11A (PubMed:17462998). Interacts with ANO1 (PubMed:22178883). Interacts with SLC26A8 (PubMed:22121115). Interacts with AHCYL1; the interaction increases CFTR activity (By similarity). Interacts with CSE1L (PubMed:20933420). The core-glycosylated form interacts with GORASP2 (via PDZ GRASP-type 1 domain) in respone to ER stress (PubMed:21884936). Interacts with MARCHF2; the interaction leads to CFTR ubiqtuitination and degradation (PubMed:23818989). Interacts with ADGRG2 (PubMed:29393851).</text>
</comment>
<comment type="interaction">
    <interactant intactId="EBI-349854">
        <id>P13569</id>
    </interactant>
    <interactant intactId="EBI-1263451">
        <id>Q6UWZ7</id>
        <label>ABRAXAS1</label>
    </interactant>
    <organismsDiffer>false</organismsDiffer>
    <experiments>3</experiments>
</comment>
<comment type="interaction">
    <interactant intactId="EBI-349854">
        <id>P13569</id>
    </interactant>
    <interactant intactId="EBI-743387">
        <id>Q96QU6</id>
        <label>ACCS</label>
    </interactant>
    <organismsDiffer>false</organismsDiffer>
    <experiments>3</experiments>
</comment>
<comment type="interaction">
    <interactant intactId="EBI-349854">
        <id>P13569</id>
    </interactant>
    <interactant intactId="EBI-1237371">
        <id>O14734</id>
        <label>ACOT8</label>
    </interactant>
    <organismsDiffer>false</organismsDiffer>
    <experiments>3</experiments>
</comment>
<comment type="interaction">
    <interactant intactId="EBI-349854">
        <id>P13569</id>
    </interactant>
    <interactant intactId="EBI-353944">
        <id>P60709</id>
        <label>ACTB</label>
    </interactant>
    <organismsDiffer>false</organismsDiffer>
    <experiments>6</experiments>
</comment>
<comment type="interaction">
    <interactant intactId="EBI-349854">
        <id>P13569</id>
    </interactant>
    <interactant intactId="EBI-2371423">
        <id>O43865</id>
        <label>AHCYL1</label>
    </interactant>
    <organismsDiffer>false</organismsDiffer>
    <experiments>7</experiments>
</comment>
<comment type="interaction">
    <interactant intactId="EBI-349854">
        <id>P13569</id>
    </interactant>
    <interactant intactId="EBI-748869">
        <id>O95154</id>
        <label>AKR7A3</label>
    </interactant>
    <organismsDiffer>false</organismsDiffer>
    <experiments>4</experiments>
</comment>
<comment type="interaction">
    <interactant intactId="EBI-349854">
        <id>P13569</id>
    </interactant>
    <interactant intactId="EBI-2952751">
        <id>P09972</id>
        <label>ALDOC</label>
    </interactant>
    <organismsDiffer>false</organismsDiffer>
    <experiments>8</experiments>
</comment>
<comment type="interaction">
    <interactant intactId="EBI-349854">
        <id>P13569</id>
    </interactant>
    <interactant intactId="EBI-2878075">
        <id>Q9BT30</id>
        <label>ALKBH7</label>
    </interactant>
    <organismsDiffer>false</organismsDiffer>
    <experiments>4</experiments>
</comment>
<comment type="interaction">
    <interactant intactId="EBI-349854">
        <id>P13569</id>
    </interactant>
    <interactant intactId="EBI-2875816">
        <id>Q9NP61</id>
        <label>ARFGAP3</label>
    </interactant>
    <organismsDiffer>false</organismsDiffer>
    <experiments>8</experiments>
</comment>
<comment type="interaction">
    <interactant intactId="EBI-349854">
        <id>P13569</id>
    </interactant>
    <interactant intactId="EBI-11613988">
        <id>P16615-1</id>
        <label>ATP2A2</label>
    </interactant>
    <organismsDiffer>false</organismsDiffer>
    <experiments>6</experiments>
</comment>
<comment type="interaction">
    <interactant intactId="EBI-349854">
        <id>P13569</id>
    </interactant>
    <interactant intactId="EBI-77683">
        <id>P51572</id>
        <label>BCAP31</label>
    </interactant>
    <organismsDiffer>false</organismsDiffer>
    <experiments>9</experiments>
</comment>
<comment type="interaction">
    <interactant intactId="EBI-349854">
        <id>P13569</id>
    </interactant>
    <interactant intactId="EBI-10171799">
        <id>A1A5D9</id>
        <label>BICDL2</label>
    </interactant>
    <organismsDiffer>false</organismsDiffer>
    <experiments>3</experiments>
</comment>
<comment type="interaction">
    <interactant intactId="EBI-349854">
        <id>P13569</id>
    </interactant>
    <interactant intactId="EBI-715389">
        <id>Q9H7E9</id>
        <label>C8orf33</label>
    </interactant>
    <organismsDiffer>false</organismsDiffer>
    <experiments>5</experiments>
</comment>
<comment type="interaction">
    <interactant intactId="EBI-349854">
        <id>P13569</id>
    </interactant>
    <interactant intactId="EBI-397435">
        <id>P62158</id>
        <label>CALM3</label>
    </interactant>
    <organismsDiffer>false</organismsDiffer>
    <experiments>18</experiments>
</comment>
<comment type="interaction">
    <interactant intactId="EBI-349854">
        <id>P13569</id>
    </interactant>
    <interactant intactId="EBI-5280679">
        <id>O43852-1</id>
        <label>CALU</label>
    </interactant>
    <organismsDiffer>false</organismsDiffer>
    <experiments>2</experiments>
</comment>
<comment type="interaction">
    <interactant intactId="EBI-349854">
        <id>P13569</id>
    </interactant>
    <interactant intactId="EBI-355947">
        <id>P27824</id>
        <label>CANX</label>
    </interactant>
    <organismsDiffer>false</organismsDiffer>
    <experiments>26</experiments>
</comment>
<comment type="interaction">
    <interactant intactId="EBI-349854">
        <id>P13569</id>
    </interactant>
    <interactant intactId="EBI-2808398">
        <id>Q01518</id>
        <label>CAP1</label>
    </interactant>
    <organismsDiffer>false</organismsDiffer>
    <experiments>14</experiments>
</comment>
<comment type="interaction">
    <interactant intactId="EBI-349854">
        <id>P13569</id>
    </interactant>
    <interactant intactId="EBI-1542113">
        <id>P07384</id>
        <label>CAPN1</label>
    </interactant>
    <organismsDiffer>false</organismsDiffer>
    <experiments>7</experiments>
</comment>
<comment type="interaction">
    <interactant intactId="EBI-349854">
        <id>P13569</id>
    </interactant>
    <interactant intactId="EBI-353595">
        <id>P47756</id>
        <label>CAPZB</label>
    </interactant>
    <organismsDiffer>false</organismsDiffer>
    <experiments>23</experiments>
</comment>
<comment type="interaction">
    <interactant intactId="EBI-349854">
        <id>P13569</id>
    </interactant>
    <interactant intactId="EBI-1215506">
        <id>O14936</id>
        <label>CASK</label>
    </interactant>
    <organismsDiffer>false</organismsDiffer>
    <experiments>4</experiments>
</comment>
<comment type="interaction">
    <interactant intactId="EBI-349854">
        <id>P13569</id>
    </interactant>
    <interactant intactId="EBI-2557532">
        <id>Q9Y3X0</id>
        <label>CCDC9</label>
    </interactant>
    <organismsDiffer>false</organismsDiffer>
    <experiments>4</experiments>
</comment>
<comment type="interaction">
    <interactant intactId="EBI-349854">
        <id>P13569</id>
    </interactant>
    <interactant intactId="EBI-747776">
        <id>Q53EZ4</id>
        <label>CEP55</label>
    </interactant>
    <organismsDiffer>false</organismsDiffer>
    <experiments>5</experiments>
</comment>
<comment type="interaction">
    <interactant intactId="EBI-349854">
        <id>P13569</id>
    </interactant>
    <interactant intactId="EBI-21717278">
        <id>Q8NCH0</id>
        <label>CHST14</label>
    </interactant>
    <organismsDiffer>false</organismsDiffer>
    <experiments>3</experiments>
</comment>
<comment type="interaction">
    <interactant intactId="EBI-349854">
        <id>P13569</id>
    </interactant>
    <interactant intactId="EBI-25495635">
        <id>P51790-2</id>
        <label>CLCN3</label>
    </interactant>
    <organismsDiffer>false</organismsDiffer>
    <experiments>2</experiments>
</comment>
<comment type="interaction">
    <interactant intactId="EBI-349854">
        <id>P13569</id>
    </interactant>
    <interactant intactId="EBI-347404">
        <id>O00299</id>
        <label>CLIC1</label>
    </interactant>
    <organismsDiffer>false</organismsDiffer>
    <experiments>15</experiments>
</comment>
<comment type="interaction">
    <interactant intactId="EBI-349854">
        <id>P13569</id>
    </interactant>
    <interactant intactId="EBI-745967">
        <id>Q13057</id>
        <label>COASY</label>
    </interactant>
    <organismsDiffer>false</organismsDiffer>
    <experiments>7</experiments>
</comment>
<comment type="interaction">
    <interactant intactId="EBI-349854">
        <id>P13569</id>
    </interactant>
    <interactant intactId="EBI-1049127">
        <id>Q9Y678</id>
        <label>COPG1</label>
    </interactant>
    <organismsDiffer>false</organismsDiffer>
    <experiments>21</experiments>
</comment>
<comment type="interaction">
    <interactant intactId="EBI-349854">
        <id>P13569</id>
    </interactant>
    <interactant intactId="EBI-725950">
        <id>P29762</id>
        <label>CRABP1</label>
    </interactant>
    <organismsDiffer>false</organismsDiffer>
    <experiments>4</experiments>
</comment>
<comment type="interaction">
    <interactant intactId="EBI-349854">
        <id>P13569</id>
    </interactant>
    <interactant intactId="EBI-6942903">
        <id>Q96BA8</id>
        <label>CREB3L1</label>
    </interactant>
    <organismsDiffer>false</organismsDiffer>
    <experiments>3</experiments>
</comment>
<comment type="interaction">
    <interactant intactId="EBI-349854">
        <id>P13569</id>
    </interactant>
    <interactant intactId="EBI-21022791">
        <id>Q14406</id>
        <label>CSHL1</label>
    </interactant>
    <organismsDiffer>false</organismsDiffer>
    <experiments>3</experiments>
</comment>
<comment type="interaction">
    <interactant intactId="EBI-349854">
        <id>P13569</id>
    </interactant>
    <interactant intactId="EBI-359390">
        <id>Q13616</id>
        <label>CUL1</label>
    </interactant>
    <organismsDiffer>false</organismsDiffer>
    <experiments>7</experiments>
</comment>
<comment type="interaction">
    <interactant intactId="EBI-349854">
        <id>P13569</id>
    </interactant>
    <interactant intactId="EBI-12873482">
        <id>Q8N8Q1</id>
        <label>CYB561D1</label>
    </interactant>
    <organismsDiffer>false</organismsDiffer>
    <experiments>3</experiments>
</comment>
<comment type="interaction">
    <interactant intactId="EBI-349854">
        <id>P13569</id>
    </interactant>
    <interactant intactId="EBI-3917045">
        <id>Q6PI48</id>
        <label>DARS2</label>
    </interactant>
    <organismsDiffer>false</organismsDiffer>
    <experiments>5</experiments>
</comment>
<comment type="interaction">
    <interactant intactId="EBI-349854">
        <id>P13569</id>
    </interactant>
    <interactant intactId="EBI-1054024">
        <id>Q96HY6</id>
        <label>DDRGK1</label>
    </interactant>
    <organismsDiffer>false</organismsDiffer>
    <experiments>4</experiments>
</comment>
<comment type="interaction">
    <interactant intactId="EBI-349854">
        <id>P13569</id>
    </interactant>
    <interactant intactId="EBI-740301">
        <id>Q9NUU7</id>
        <label>DDX19A</label>
    </interactant>
    <organismsDiffer>false</organismsDiffer>
    <experiments>9</experiments>
</comment>
<comment type="interaction">
    <interactant intactId="EBI-349854">
        <id>P13569</id>
    </interactant>
    <interactant intactId="EBI-347658">
        <id>Q9UHI6</id>
        <label>DDX20</label>
    </interactant>
    <organismsDiffer>false</organismsDiffer>
    <experiments>5</experiments>
</comment>
<comment type="interaction">
    <interactant intactId="EBI-349854">
        <id>P13569</id>
    </interactant>
    <interactant intactId="EBI-398977">
        <id>Q9BUN8</id>
        <label>DERL1</label>
    </interactant>
    <organismsDiffer>false</organismsDiffer>
    <experiments>8</experiments>
</comment>
<comment type="interaction">
    <interactant intactId="EBI-349854">
        <id>P13569</id>
    </interactant>
    <interactant intactId="EBI-1211456">
        <id>Q7L2E3</id>
        <label>DHX30</label>
    </interactant>
    <organismsDiffer>false</organismsDiffer>
    <experiments>5</experiments>
</comment>
<comment type="interaction">
    <interactant intactId="EBI-349854">
        <id>P13569</id>
    </interactant>
    <interactant intactId="EBI-2689808">
        <id>Q8TBM8</id>
        <label>DNAJB14</label>
    </interactant>
    <organismsDiffer>false</organismsDiffer>
    <experiments>3</experiments>
</comment>
<comment type="interaction">
    <interactant intactId="EBI-349854">
        <id>P13569</id>
    </interactant>
    <interactant intactId="EBI-296550">
        <id>Q96KC8</id>
        <label>DNAJC1</label>
    </interactant>
    <organismsDiffer>false</organismsDiffer>
    <experiments>7</experiments>
</comment>
<comment type="interaction">
    <interactant intactId="EBI-349854">
        <id>P13569</id>
    </interactant>
    <interactant intactId="EBI-719554">
        <id>Q9Y295</id>
        <label>DRG1</label>
    </interactant>
    <organismsDiffer>false</organismsDiffer>
    <experiments>9</experiments>
</comment>
<comment type="interaction">
    <interactant intactId="EBI-349854">
        <id>P13569</id>
    </interactant>
    <interactant intactId="EBI-745191">
        <id>P60981</id>
        <label>DSTN</label>
    </interactant>
    <organismsDiffer>false</organismsDiffer>
    <experiments>16</experiments>
</comment>
<comment type="interaction">
    <interactant intactId="EBI-349854">
        <id>P13569</id>
    </interactant>
    <interactant intactId="EBI-781301">
        <id>O60869</id>
        <label>EDF1</label>
    </interactant>
    <organismsDiffer>false</organismsDiffer>
    <experiments>3</experiments>
</comment>
<comment type="interaction">
    <interactant intactId="EBI-349854">
        <id>P13569</id>
    </interactant>
    <interactant intactId="EBI-6138796">
        <id>P07099</id>
        <label>EPHX1</label>
    </interactant>
    <organismsDiffer>false</organismsDiffer>
    <experiments>5</experiments>
</comment>
<comment type="interaction">
    <interactant intactId="EBI-349854">
        <id>P13569</id>
    </interactant>
    <interactant intactId="EBI-11343491">
        <id>Q6P6B1</id>
        <label>ERICH5</label>
    </interactant>
    <organismsDiffer>false</organismsDiffer>
    <experiments>4</experiments>
</comment>
<comment type="interaction">
    <interactant intactId="EBI-349854">
        <id>P13569</id>
    </interactant>
    <interactant intactId="EBI-1052886">
        <id>P13804</id>
        <label>ETFA</label>
    </interactant>
    <organismsDiffer>false</organismsDiffer>
    <experiments>7</experiments>
</comment>
<comment type="interaction">
    <interactant intactId="EBI-349854">
        <id>P13569</id>
    </interactant>
    <interactant intactId="EBI-2557990">
        <id>Q0VG06</id>
        <label>FAAP100</label>
    </interactant>
    <organismsDiffer>false</organismsDiffer>
    <experiments>4</experiments>
</comment>
<comment type="interaction">
    <interactant intactId="EBI-349854">
        <id>P13569</id>
    </interactant>
    <interactant intactId="EBI-1055752">
        <id>Q9NYY8</id>
        <label>FASTKD2</label>
    </interactant>
    <organismsDiffer>false</organismsDiffer>
    <experiments>5</experiments>
</comment>
<comment type="interaction">
    <interactant intactId="EBI-349854">
        <id>P13569</id>
    </interactant>
    <interactant intactId="EBI-21370828">
        <id>Q14314</id>
        <label>FGL2</label>
    </interactant>
    <organismsDiffer>false</organismsDiffer>
    <experiments>6</experiments>
</comment>
<comment type="interaction">
    <interactant intactId="EBI-349854">
        <id>P13569</id>
    </interactant>
    <interactant intactId="EBI-701903">
        <id>Q14192</id>
        <label>FHL2</label>
    </interactant>
    <organismsDiffer>false</organismsDiffer>
    <experiments>10</experiments>
</comment>
<comment type="interaction">
    <interactant intactId="EBI-349854">
        <id>P13569</id>
    </interactant>
    <interactant intactId="EBI-744771">
        <id>O75344</id>
        <label>FKBP6</label>
    </interactant>
    <organismsDiffer>false</organismsDiffer>
    <experiments>4</experiments>
</comment>
<comment type="interaction">
    <interactant intactId="EBI-349854">
        <id>P13569</id>
    </interactant>
    <interactant intactId="EBI-447141">
        <id>Q9UJY5</id>
        <label>GGA1</label>
    </interactant>
    <organismsDiffer>false</organismsDiffer>
    <experiments>6</experiments>
</comment>
<comment type="interaction">
    <interactant intactId="EBI-349854">
        <id>P13569</id>
    </interactant>
    <interactant intactId="EBI-356942">
        <id>P62879</id>
        <label>GNB2</label>
    </interactant>
    <organismsDiffer>false</organismsDiffer>
    <experiments>12</experiments>
</comment>
<comment type="interaction">
    <interactant intactId="EBI-349854">
        <id>P13569</id>
    </interactant>
    <interactant intactId="EBI-349832">
        <id>Q9HD26</id>
        <label>GOPC</label>
    </interactant>
    <organismsDiffer>false</organismsDiffer>
    <experiments>10</experiments>
</comment>
<comment type="interaction">
    <interactant intactId="EBI-349854">
        <id>P13569</id>
    </interactant>
    <interactant intactId="EBI-739467">
        <id>Q9H8Y8</id>
        <label>GORASP2</label>
    </interactant>
    <organismsDiffer>false</organismsDiffer>
    <experiments>6</experiments>
</comment>
<comment type="interaction">
    <interactant intactId="EBI-349854">
        <id>P13569</id>
    </interactant>
    <interactant intactId="EBI-7209024">
        <id>P07203</id>
        <label>GPX1</label>
    </interactant>
    <organismsDiffer>false</organismsDiffer>
    <experiments>3</experiments>
</comment>
<comment type="interaction">
    <interactant intactId="EBI-349854">
        <id>P13569</id>
    </interactant>
    <interactant intactId="EBI-13572836">
        <id>P0CG30</id>
        <label>GSTT2B</label>
    </interactant>
    <organismsDiffer>false</organismsDiffer>
    <experiments>4</experiments>
</comment>
<comment type="interaction">
    <interactant intactId="EBI-349854">
        <id>P13569</id>
    </interactant>
    <interactant intactId="EBI-359013">
        <id>Q9P035</id>
        <label>HACD3</label>
    </interactant>
    <organismsDiffer>false</organismsDiffer>
    <experiments>15</experiments>
</comment>
<comment type="interaction">
    <interactant intactId="EBI-349854">
        <id>P13569</id>
    </interactant>
    <interactant intactId="EBI-8523143">
        <id>Q9BX68</id>
        <label>HINT2</label>
    </interactant>
    <organismsDiffer>false</organismsDiffer>
    <experiments>3</experiments>
</comment>
<comment type="interaction">
    <interactant intactId="EBI-349854">
        <id>P13569</id>
    </interactant>
    <interactant intactId="EBI-713162">
        <id>P19367</id>
        <label>HK1</label>
    </interactant>
    <organismsDiffer>false</organismsDiffer>
    <experiments>5</experiments>
</comment>
<comment type="interaction">
    <interactant intactId="EBI-349854">
        <id>P13569</id>
    </interactant>
    <interactant intactId="EBI-2556203">
        <id>O75330</id>
        <label>HMMR</label>
    </interactant>
    <organismsDiffer>false</organismsDiffer>
    <experiments>7</experiments>
</comment>
<comment type="interaction">
    <interactant intactId="EBI-349854">
        <id>P13569</id>
    </interactant>
    <interactant intactId="EBI-352528">
        <id>P10809</id>
        <label>HSPD1</label>
    </interactant>
    <organismsDiffer>false</organismsDiffer>
    <experiments>24</experiments>
</comment>
<comment type="interaction">
    <interactant intactId="EBI-349854">
        <id>P13569</id>
    </interactant>
    <interactant intactId="EBI-2924473">
        <id>O15554</id>
        <label>KCNN4</label>
    </interactant>
    <organismsDiffer>false</organismsDiffer>
    <experiments>5</experiments>
</comment>
<comment type="interaction">
    <interactant intactId="EBI-349854">
        <id>P13569</id>
    </interactant>
    <interactant intactId="EBI-2510096">
        <id>O94889</id>
        <label>KLHL18</label>
    </interactant>
    <organismsDiffer>false</organismsDiffer>
    <experiments>3</experiments>
</comment>
<comment type="interaction">
    <interactant intactId="EBI-349854">
        <id>P13569</id>
    </interactant>
    <interactant intactId="EBI-540602">
        <id>O15131</id>
        <label>KPNA5</label>
    </interactant>
    <organismsDiffer>false</organismsDiffer>
    <experiments>4</experiments>
</comment>
<comment type="interaction">
    <interactant intactId="EBI-349854">
        <id>P13569</id>
    </interactant>
    <interactant intactId="EBI-297852">
        <id>P05787</id>
        <label>KRT8</label>
    </interactant>
    <organismsDiffer>false</organismsDiffer>
    <experiments>11</experiments>
</comment>
<comment type="interaction">
    <interactant intactId="EBI-349854">
        <id>P13569</id>
    </interactant>
    <interactant intactId="EBI-354956">
        <id>Q08380</id>
        <label>LGALS3BP</label>
    </interactant>
    <organismsDiffer>false</organismsDiffer>
    <experiments>18</experiments>
</comment>
<comment type="interaction">
    <interactant intactId="EBI-349854">
        <id>P13569</id>
    </interactant>
    <interactant intactId="EBI-765995">
        <id>Q9HBW0</id>
        <label>LPAR2</label>
    </interactant>
    <organismsDiffer>false</organismsDiffer>
    <experiments>3</experiments>
</comment>
<comment type="interaction">
    <interactant intactId="EBI-349854">
        <id>P13569</id>
    </interactant>
    <interactant intactId="EBI-9060697">
        <id>P33241</id>
        <label>LSP1</label>
    </interactant>
    <organismsDiffer>false</organismsDiffer>
    <experiments>4</experiments>
</comment>
<comment type="interaction">
    <interactant intactId="EBI-349854">
        <id>P13569</id>
    </interactant>
    <interactant intactId="EBI-2211296">
        <id>Q9HCC0</id>
        <label>MCCC2</label>
    </interactant>
    <organismsDiffer>false</organismsDiffer>
    <experiments>5</experiments>
</comment>
<comment type="interaction">
    <interactant intactId="EBI-349854">
        <id>P13569</id>
    </interactant>
    <interactant intactId="EBI-7172128">
        <id>P08582</id>
        <label>MELTF</label>
    </interactant>
    <organismsDiffer>false</organismsDiffer>
    <experiments>7</experiments>
</comment>
<comment type="interaction">
    <interactant intactId="EBI-349854">
        <id>P13569</id>
    </interactant>
    <interactant intactId="EBI-2211879">
        <id>Q92552</id>
        <label>MRPS27</label>
    </interactant>
    <organismsDiffer>false</organismsDiffer>
    <experiments>5</experiments>
</comment>
<comment type="interaction">
    <interactant intactId="EBI-349854">
        <id>P13569</id>
    </interactant>
    <interactant intactId="EBI-13301517">
        <id>Q96S97</id>
        <label>MYADM</label>
    </interactant>
    <organismsDiffer>false</organismsDiffer>
    <experiments>3</experiments>
</comment>
<comment type="interaction">
    <interactant intactId="EBI-349854">
        <id>P13569</id>
    </interactant>
    <interactant intactId="EBI-747693">
        <id>P41227</id>
        <label>NAA10</label>
    </interactant>
    <organismsDiffer>false</organismsDiffer>
    <experiments>5</experiments>
</comment>
<comment type="interaction">
    <interactant intactId="EBI-349854">
        <id>P13569</id>
    </interactant>
    <interactant intactId="EBI-349787">
        <id>O14745</id>
        <label>NHERF1</label>
    </interactant>
    <organismsDiffer>false</organismsDiffer>
    <experiments>26</experiments>
</comment>
<comment type="interaction">
    <interactant intactId="EBI-349854">
        <id>P13569</id>
    </interactant>
    <interactant intactId="EBI-1149760">
        <id>Q15599</id>
        <label>NHERF2</label>
    </interactant>
    <organismsDiffer>false</organismsDiffer>
    <experiments>28</experiments>
</comment>
<comment type="interaction">
    <interactant intactId="EBI-349854">
        <id>P13569</id>
    </interactant>
    <interactant intactId="EBI-720156">
        <id>Q9NZM5</id>
        <label>NOP53</label>
    </interactant>
    <organismsDiffer>false</organismsDiffer>
    <experiments>4</experiments>
</comment>
<comment type="interaction">
    <interactant intactId="EBI-349854">
        <id>P13569</id>
    </interactant>
    <interactant intactId="EBI-722092">
        <id>Q9BVG4</id>
        <label>PBDC1</label>
    </interactant>
    <organismsDiffer>false</organismsDiffer>
    <experiments>3</experiments>
</comment>
<comment type="interaction">
    <interactant intactId="EBI-349854">
        <id>P13569</id>
    </interactant>
    <interactant intactId="EBI-715747">
        <id>P08559</id>
        <label>PDHA1</label>
    </interactant>
    <organismsDiffer>false</organismsDiffer>
    <experiments>5</experiments>
</comment>
<comment type="interaction">
    <interactant intactId="EBI-349854">
        <id>P13569</id>
    </interactant>
    <interactant intactId="EBI-979862">
        <id>P30101</id>
        <label>PDIA3</label>
    </interactant>
    <organismsDiffer>false</organismsDiffer>
    <experiments>12</experiments>
</comment>
<comment type="interaction">
    <interactant intactId="EBI-349854">
        <id>P13569</id>
    </interactant>
    <interactant intactId="EBI-349819">
        <id>Q5T2W1</id>
        <label>PDZK1</label>
    </interactant>
    <organismsDiffer>false</organismsDiffer>
    <experiments>3</experiments>
</comment>
<comment type="interaction">
    <interactant intactId="EBI-349854">
        <id>P13569</id>
    </interactant>
    <interactant intactId="EBI-2506064">
        <id>O60831</id>
        <label>PRAF2</label>
    </interactant>
    <organismsDiffer>false</organismsDiffer>
    <experiments>4</experiments>
</comment>
<comment type="interaction">
    <interactant intactId="EBI-349854">
        <id>P13569</id>
    </interactant>
    <interactant intactId="EBI-359318">
        <id>P55036</id>
        <label>PSMD4</label>
    </interactant>
    <organismsDiffer>false</organismsDiffer>
    <experiments>13</experiments>
</comment>
<comment type="interaction">
    <interactant intactId="EBI-349854">
        <id>P13569</id>
    </interactant>
    <interactant intactId="EBI-350540">
        <id>P26599</id>
        <label>PTBP1</label>
    </interactant>
    <organismsDiffer>false</organismsDiffer>
    <experiments>13</experiments>
</comment>
<comment type="interaction">
    <interactant intactId="EBI-349854">
        <id>P13569</id>
    </interactant>
    <interactant intactId="EBI-2560233">
        <id>O75127</id>
        <label>PTCD1</label>
    </interactant>
    <organismsDiffer>false</organismsDiffer>
    <experiments>3</experiments>
</comment>
<comment type="interaction">
    <interactant intactId="EBI-349854">
        <id>P13569</id>
    </interactant>
    <interactant intactId="EBI-954272">
        <id>Q96PK6</id>
        <label>RBM14</label>
    </interactant>
    <organismsDiffer>false</organismsDiffer>
    <experiments>13</experiments>
</comment>
<comment type="interaction">
    <interactant intactId="EBI-349854">
        <id>P13569</id>
    </interactant>
    <interactant intactId="EBI-348482">
        <id>Q99942</id>
        <label>RNF5</label>
    </interactant>
    <organismsDiffer>false</organismsDiffer>
    <experiments>8</experiments>
</comment>
<comment type="interaction">
    <interactant intactId="EBI-349854">
        <id>P13569</id>
    </interactant>
    <interactant intactId="EBI-4311771">
        <id>Q7Z5V6</id>
        <label>SAXO4</label>
    </interactant>
    <organismsDiffer>false</organismsDiffer>
    <experiments>3</experiments>
</comment>
<comment type="interaction">
    <interactant intactId="EBI-349854">
        <id>P13569</id>
    </interactant>
    <interactant intactId="EBI-954338">
        <id>O15126</id>
        <label>SCAMP1</label>
    </interactant>
    <organismsDiffer>false</organismsDiffer>
    <experiments>7</experiments>
</comment>
<comment type="interaction">
    <interactant intactId="EBI-349854">
        <id>P13569</id>
    </interactant>
    <interactant intactId="EBI-1057265">
        <id>P31040</id>
        <label>SDHA</label>
    </interactant>
    <organismsDiffer>false</organismsDiffer>
    <experiments>15</experiments>
</comment>
<comment type="interaction">
    <interactant intactId="EBI-349854">
        <id>P13569</id>
    </interactant>
    <interactant intactId="EBI-1049513">
        <id>Q9P0V3</id>
        <label>SH3BP4</label>
    </interactant>
    <organismsDiffer>false</organismsDiffer>
    <experiments>4</experiments>
</comment>
<comment type="interaction">
    <interactant intactId="EBI-349854">
        <id>P13569</id>
    </interactant>
    <interactant intactId="EBI-78835">
        <id>P29353</id>
        <label>SHC1</label>
    </interactant>
    <organismsDiffer>false</organismsDiffer>
    <experiments>6</experiments>
</comment>
<comment type="interaction">
    <interactant intactId="EBI-349854">
        <id>P13569</id>
    </interactant>
    <interactant intactId="EBI-1792052">
        <id>Q96RN1</id>
        <label>SLC26A8</label>
    </interactant>
    <organismsDiffer>false</organismsDiffer>
    <experiments>2</experiments>
</comment>
<comment type="interaction">
    <interactant intactId="EBI-349854">
        <id>P13569</id>
    </interactant>
    <interactant intactId="EBI-11135403">
        <id>O00400</id>
        <label>SLC33A1</label>
    </interactant>
    <organismsDiffer>false</organismsDiffer>
    <experiments>6</experiments>
</comment>
<comment type="interaction">
    <interactant intactId="EBI-349854">
        <id>P13569</id>
    </interactant>
    <interactant intactId="EBI-712493">
        <id>P63162</id>
        <label>SNRPN</label>
    </interactant>
    <organismsDiffer>false</organismsDiffer>
    <experiments>6</experiments>
</comment>
<comment type="interaction">
    <interactant intactId="EBI-349854">
        <id>P13569</id>
    </interactant>
    <interactant intactId="EBI-1048560">
        <id>Q9UHB9</id>
        <label>SRP68</label>
    </interactant>
    <organismsDiffer>false</organismsDiffer>
    <experiments>7</experiments>
</comment>
<comment type="interaction">
    <interactant intactId="EBI-349854">
        <id>P13569</id>
    </interactant>
    <interactant intactId="EBI-2854712">
        <id>Q9NSC7</id>
        <label>ST6GALNAC1</label>
    </interactant>
    <organismsDiffer>false</organismsDiffer>
    <experiments>5</experiments>
</comment>
<comment type="interaction">
    <interactant intactId="EBI-349854">
        <id>P13569</id>
    </interactant>
    <interactant intactId="EBI-358174">
        <id>O95793</id>
        <label>STAU1</label>
    </interactant>
    <organismsDiffer>false</organismsDiffer>
    <experiments>13</experiments>
</comment>
<comment type="interaction">
    <interactant intactId="EBI-349854">
        <id>P13569</id>
    </interactant>
    <interactant intactId="EBI-618239">
        <id>Q9P289</id>
        <label>STK26</label>
    </interactant>
    <organismsDiffer>false</organismsDiffer>
    <experiments>6</experiments>
</comment>
<comment type="interaction">
    <interactant intactId="EBI-349854">
        <id>P13569</id>
    </interactant>
    <interactant intactId="EBI-357061">
        <id>Q92734</id>
        <label>TFG</label>
    </interactant>
    <organismsDiffer>false</organismsDiffer>
    <experiments>7</experiments>
</comment>
<comment type="interaction">
    <interactant intactId="EBI-349854">
        <id>P13569</id>
    </interactant>
    <interactant intactId="EBI-2602465">
        <id>Q96Q45</id>
        <label>TMEM237</label>
    </interactant>
    <organismsDiffer>false</organismsDiffer>
    <experiments>4</experiments>
</comment>
<comment type="interaction">
    <interactant intactId="EBI-349854">
        <id>P13569</id>
    </interactant>
    <interactant intactId="EBI-39962964">
        <id>Q8WWA1</id>
        <label>TMEM40</label>
    </interactant>
    <organismsDiffer>false</organismsDiffer>
    <experiments>9</experiments>
</comment>
<comment type="interaction">
    <interactant intactId="EBI-349854">
        <id>P13569</id>
    </interactant>
    <interactant intactId="EBI-1396921">
        <id>O14545</id>
        <label>TRAFD1</label>
    </interactant>
    <organismsDiffer>false</organismsDiffer>
    <experiments>9</experiments>
</comment>
<comment type="interaction">
    <interactant intactId="EBI-349854">
        <id>P13569</id>
    </interactant>
    <interactant intactId="EBI-81290">
        <id>P19474</id>
        <label>TRIM21</label>
    </interactant>
    <organismsDiffer>false</organismsDiffer>
    <experiments>24</experiments>
</comment>
<comment type="interaction">
    <interactant intactId="EBI-349854">
        <id>P13569</id>
    </interactant>
    <interactant intactId="EBI-742790">
        <id>Q13049</id>
        <label>TRIM32</label>
    </interactant>
    <organismsDiffer>false</organismsDiffer>
    <experiments>5</experiments>
</comment>
<comment type="interaction">
    <interactant intactId="EBI-349854">
        <id>P13569</id>
    </interactant>
    <interactant intactId="EBI-924214">
        <id>Q9C035</id>
        <label>TRIM5</label>
    </interactant>
    <organismsDiffer>false</organismsDiffer>
    <experiments>3</experiments>
</comment>
<comment type="interaction">
    <interactant intactId="EBI-349854">
        <id>P13569</id>
    </interactant>
    <interactant intactId="EBI-711260">
        <id>Q13432</id>
        <label>UNC119</label>
    </interactant>
    <organismsDiffer>false</organismsDiffer>
    <experiments>4</experiments>
</comment>
<comment type="interaction">
    <interactant intactId="EBI-349854">
        <id>P13569</id>
    </interactant>
    <interactant intactId="EBI-2510389">
        <id>Q14694</id>
        <label>USP10</label>
    </interactant>
    <organismsDiffer>false</organismsDiffer>
    <experiments>7</experiments>
</comment>
<comment type="interaction">
    <interactant intactId="EBI-349854">
        <id>P13569</id>
    </interactant>
    <interactant intactId="EBI-2511895">
        <id>O94966</id>
        <label>USP19</label>
    </interactant>
    <organismsDiffer>false</organismsDiffer>
    <experiments>6</experiments>
</comment>
<comment type="interaction">
    <interactant intactId="EBI-349854">
        <id>P13569</id>
    </interactant>
    <interactant intactId="EBI-1641713">
        <id>Q9BXU7</id>
        <label>USP26</label>
    </interactant>
    <organismsDiffer>false</organismsDiffer>
    <experiments>4</experiments>
</comment>
<comment type="interaction">
    <interactant intactId="EBI-349854">
        <id>P13569</id>
    </interactant>
    <interactant intactId="EBI-1059156">
        <id>Q9P0L0</id>
        <label>VAPA</label>
    </interactant>
    <organismsDiffer>false</organismsDiffer>
    <experiments>13</experiments>
</comment>
<comment type="interaction">
    <interactant intactId="EBI-349854">
        <id>P13569</id>
    </interactant>
    <interactant intactId="EBI-1188298">
        <id>O95292</id>
        <label>VAPB</label>
    </interactant>
    <organismsDiffer>false</organismsDiffer>
    <experiments>12</experiments>
</comment>
<comment type="interaction">
    <interactant intactId="EBI-349854">
        <id>P13569</id>
    </interactant>
    <interactant intactId="EBI-354022">
        <id>P45880</id>
        <label>VDAC2</label>
    </interactant>
    <organismsDiffer>false</organismsDiffer>
    <experiments>10</experiments>
</comment>
<comment type="interaction">
    <interactant intactId="EBI-349854">
        <id>P13569</id>
    </interactant>
    <interactant intactId="EBI-1171942">
        <id>Q9UN37</id>
        <label>VPS4A</label>
    </interactant>
    <organismsDiffer>false</organismsDiffer>
    <experiments>9</experiments>
</comment>
<comment type="interaction">
    <interactant intactId="EBI-349854">
        <id>P13569</id>
    </interactant>
    <interactant intactId="EBI-723716">
        <id>Q9UEU0</id>
        <label>VTI1B</label>
    </interactant>
    <organismsDiffer>false</organismsDiffer>
    <experiments>10</experiments>
</comment>
<comment type="interaction">
    <interactant intactId="EBI-349854">
        <id>P13569</id>
    </interactant>
    <interactant intactId="EBI-743923">
        <id>O00308</id>
        <label>WWP2</label>
    </interactant>
    <organismsDiffer>false</organismsDiffer>
    <experiments>3</experiments>
</comment>
<comment type="interaction">
    <interactant intactId="EBI-349854">
        <id>P13569</id>
    </interactant>
    <interactant intactId="EBI-6448284">
        <id>Q8WTP9</id>
        <label>XAGE3</label>
    </interactant>
    <organismsDiffer>false</organismsDiffer>
    <experiments>4</experiments>
</comment>
<comment type="interaction">
    <interactant intactId="EBI-349854">
        <id>P13569</id>
    </interactant>
    <interactant intactId="EBI-1051237">
        <id>Q9BYJ9</id>
        <label>YTHDF1</label>
    </interactant>
    <organismsDiffer>false</organismsDiffer>
    <experiments>5</experiments>
</comment>
<comment type="interaction">
    <interactant intactId="EBI-349854">
        <id>P13569</id>
    </interactant>
    <interactant intactId="EBI-20803387">
        <id>P17026</id>
        <label>ZNF22</label>
    </interactant>
    <organismsDiffer>false</organismsDiffer>
    <experiments>2</experiments>
</comment>
<comment type="interaction">
    <interactant intactId="EBI-349854">
        <id>P13569</id>
    </interactant>
    <interactant intactId="EBI-907802">
        <id>P19120</id>
        <label>HSPA8</label>
    </interactant>
    <organismsDiffer>true</organismsDiffer>
    <experiments>2</experiments>
</comment>
<comment type="interaction">
    <interactant intactId="EBI-349854">
        <id>P13569</id>
    </interactant>
    <interactant intactId="EBI-397902">
        <id>Q9QX74</id>
        <label>Shank2</label>
    </interactant>
    <organismsDiffer>true</organismsDiffer>
    <experiments>3</experiments>
</comment>
<comment type="subcellular location">
    <subcellularLocation>
        <location evidence="19 20 28 33 36 49 53 54 56 64 79">Apical cell membrane</location>
        <topology evidence="135">Multi-pass membrane protein</topology>
    </subcellularLocation>
    <subcellularLocation>
        <location evidence="53 56">Early endosome membrane</location>
        <topology evidence="135">Multi-pass membrane protein</topology>
    </subcellularLocation>
    <subcellularLocation>
        <location evidence="9 14 15 21 32 42 46 47 52 53 60 63 69 72 76 77 78 79 131 140">Cell membrane</location>
        <topology evidence="135">Multi-pass membrane protein</topology>
    </subcellularLocation>
    <subcellularLocation>
        <location evidence="137">Recycling endosome membrane</location>
        <topology evidence="135">Multi-pass membrane protein</topology>
    </subcellularLocation>
    <subcellularLocation>
        <location evidence="15 69">Endoplasmic reticulum membrane</location>
        <topology evidence="135">Multi-pass membrane protein</topology>
    </subcellularLocation>
    <subcellularLocation>
        <location evidence="2">Nucleus</location>
    </subcellularLocation>
    <text evidence="2 53 56 60 64 137">The channel is internalized from the cell surface into an endosomal recycling compartment, from where it is recycled to the cell membrane (PubMed:17462998, PubMed:19398555, PubMed:20008117). In the oviduct and bronchus, detected on the apical side of epithelial cells, but not associated with cilia (PubMed:22207244). In Sertoli cells, a processed product is detected in the nucleus (By similarity). ER stress induces GORASP2-mediated unconventional (ER/Golgi-independent) trafficking of core-glycosylated CFTR to cell membrane (PubMed:21884936).</text>
</comment>
<comment type="alternative products">
    <event type="alternative splicing"/>
    <isoform>
        <id>P13569-1</id>
        <name>1</name>
        <sequence type="displayed"/>
    </isoform>
    <isoform>
        <id>P13569-2</id>
        <name>2</name>
        <sequence type="described" ref="VSP_022123"/>
    </isoform>
    <isoform>
        <id>P13569-3</id>
        <name>3</name>
        <sequence type="described" ref="VSP_022124 VSP_022125"/>
    </isoform>
</comment>
<comment type="tissue specificity">
    <text evidence="28 36 55 64 79">Expressed in the respiratory airway, including bronchial epithelium, and in the female reproductive tract, including oviduct (at protein level) (PubMed:15716351, PubMed:22207244). Detected in pancreatic intercalated ducts in the exocrine tissue, on epithelial cells in intralobular striated ducts in sublingual salivary glands, on apical membranes of crypt cells throughout the small and large intestine, and on the reabsorptive duct in eccrine sweat glands (PubMed:1284548, PubMed:28130590). Detected on the equatorial segment of the sperm head (at protein level) (PubMed:19923167). Detected in nasal and bronchial superficial epithelium (PubMed:15716351). Expressed by the central cells on the sebaceous glands, dermal adipocytes and, at lower levels, by epithelial cells (PubMed:28130590).</text>
</comment>
<comment type="domain">
    <text evidence="1 34 42">Binds and hydrolyzes ATP via the two cytoplasmic ABC transporter nucleotide-binding domains (PubMed:15284228). The two ATP-binding domains interact with each other, forming a head-to-tail dimer (PubMed:17036051). Normal ATPase activity requires interaction between the two domains (PubMed:15284228). The first ABC transporter nucleotide-binding domain has no ATPase activity by itself (By similarity).</text>
</comment>
<comment type="domain">
    <text evidence="13 15 37">The PDZ-binding motif mediates interactions with GOPC and with the SLC4A7, NHERF1/EBP50 complex.</text>
</comment>
<comment type="domain">
    <text evidence="9 50">The R region is intrinsically disordered (PubMed:10792060, PubMed:17660831). It mediates channel activation when it is phosphorylated, but not in the absence of phosphorylation (PubMed:10792060).</text>
</comment>
<comment type="PTM">
    <text evidence="20 41 56 60 77">N-glycosylated.</text>
</comment>
<comment type="PTM">
    <text evidence="9 19 21 29 42 61 69 114 120">Phosphorylated; cAMP treatment promotes phosphorylation and activates the channel (PubMed:12588899, PubMed:17036051, PubMed:8910473). Dephosphorylation decreases the ATPase activity (in vitro) (PubMed:8910473). Phosphorylation at PKA sites activates the channel (PubMed:10792060, PubMed:12519745, PubMed:12588899, PubMed:25330774). Phosphorylation at PKC sites enhances the response to phosphorylation by PKA (PubMed:12588899). Phosphorylated by AMPK; this inhibits channel activity (PubMed:12519745).</text>
</comment>
<comment type="PTM">
    <text evidence="53 61 66 67">Ubiquitinated, leading to its degradation in the lysosome (PubMed:19398555, PubMed:23818989). Deubiquitination by USP10 in early endosomes enhances its endocytic recycling to the cell membrane (PubMed:19398555). Ubiquitinated by RNF185 during ER stress (PubMed:24019521). Ubiquitinated by MARCHF2 (PubMed:23818989).</text>
</comment>
<comment type="disease" evidence="7 10 11 12 16 17 20 23 24 25 26 28 30 35 36 39 40 41 43 45 46 47 56 57 58 60 65 66 69 72 73 76 77 78 81 82 83 84 85 86 87 88 90 91 92 93 94 96 98 99 100 101 102 103 104 105 106 107 108 109 110 111 112 113 114 115 117 118 119 121 122 123 124 125 126 127 128 129 130 131 132">
    <disease id="DI-01466">
        <name>Cystic fibrosis</name>
        <acronym>CF</acronym>
        <description>A common generalized disorder of the exocrine glands which impairs clearance of secretions in a variety of organs. It is characterized by the triad of chronic bronchopulmonary disease (with recurrent respiratory infections), pancreatic insufficiency (which leads to malabsorption and growth retardation) and elevated sweat electrolytes. It is the most common genetic disease in Caucasians, with a prevalence of about 1 in 2'000 live births. Inheritance is autosomal recessive.</description>
        <dbReference type="MIM" id="219700"/>
    </disease>
    <text evidence="73">The disease is caused by variants affecting the gene represented in this entry. There is some evidence that the functional defect caused by the most common variant Phe-508 DEL can be corrected by the binding to the snake phospholipase A2 crotoxin basic subunit CB. This toxin both disrupts the Phe-508 DEL-cytokeratin 8 complex, allowing for the escape from degradation, and increases the chloride channel current (PubMed:27241308).</text>
</comment>
<comment type="disease" evidence="6 8 48 95 97 116 130 133">
    <disease id="DI-01389">
        <name>Congenital bilateral absence of the vas deferens</name>
        <acronym>CBAVD</acronym>
        <description>An autosomal recessive disease characterized by vas deferens aplasia resulting in azoospermia and male infertility. CBAVD may occur in isolation or as a manifestation of cystic fibrosis.</description>
        <dbReference type="MIM" id="277180"/>
    </disease>
    <text>The disease is caused by variants affecting the gene represented in this entry.</text>
</comment>
<comment type="miscellaneous">
    <molecule>Isoform 2</molecule>
    <text evidence="136">Exon 9 splicing depends upon 2 polymorphic tracts within intron 8, a T(n) tract and TG(n) tract, where the number of T and/or TG repeats affect the extent of correct splicing of exon 9. Low numbers of T residues and high numbers of TG repeats give rise to less efficient splicing. Transcripts that lack exon 9 sequences fail to mature. Causes congenital bilateral absence of the vas deferens (CBAVD).</text>
</comment>
<comment type="miscellaneous">
    <molecule>Isoform 3</molecule>
    <text evidence="136">Alternative acceptor site favored by mutation in an exonic splicing enhancer (ESE). Causes cystic fibrosis (CF).</text>
</comment>
<comment type="similarity">
    <text evidence="136">Belongs to the ABC transporter superfamily. ABCC family. CFTR transporter (TC 3.A.1.202) subfamily.</text>
</comment>
<comment type="online information" name="Wikipedia">
    <link uri="https://en.wikipedia.org/wiki/Cystic_fibrosis_transmembrane_conductance_regulator"/>
    <text>CFTR entry</text>
</comment>
<comment type="online information" name="ABCMdb">
    <link uri="http://abcm2.hegelab.org/search"/>
    <text>Database for mutations in ABC proteins</text>
</comment>
<evidence type="ECO:0000250" key="1">
    <source>
        <dbReference type="UniProtKB" id="P26361"/>
    </source>
</evidence>
<evidence type="ECO:0000250" key="2">
    <source>
        <dbReference type="UniProtKB" id="P34158"/>
    </source>
</evidence>
<evidence type="ECO:0000255" key="3">
    <source>
        <dbReference type="PROSITE-ProRule" id="PRU00434"/>
    </source>
</evidence>
<evidence type="ECO:0000255" key="4">
    <source>
        <dbReference type="PROSITE-ProRule" id="PRU00441"/>
    </source>
</evidence>
<evidence type="ECO:0000256" key="5">
    <source>
        <dbReference type="SAM" id="MobiDB-lite"/>
    </source>
</evidence>
<evidence type="ECO:0000269" key="6">
    <source>
    </source>
</evidence>
<evidence type="ECO:0000269" key="7">
    <source>
    </source>
</evidence>
<evidence type="ECO:0000269" key="8">
    <source>
    </source>
</evidence>
<evidence type="ECO:0000269" key="9">
    <source>
    </source>
</evidence>
<evidence type="ECO:0000269" key="10">
    <source>
    </source>
</evidence>
<evidence type="ECO:0000269" key="11">
    <source>
    </source>
</evidence>
<evidence type="ECO:0000269" key="12">
    <source>
    </source>
</evidence>
<evidence type="ECO:0000269" key="13">
    <source>
    </source>
</evidence>
<evidence type="ECO:0000269" key="14">
    <source>
    </source>
</evidence>
<evidence type="ECO:0000269" key="15">
    <source>
    </source>
</evidence>
<evidence type="ECO:0000269" key="16">
    <source>
    </source>
</evidence>
<evidence type="ECO:0000269" key="17">
    <source>
    </source>
</evidence>
<evidence type="ECO:0000269" key="18">
    <source>
    </source>
</evidence>
<evidence type="ECO:0000269" key="19">
    <source>
    </source>
</evidence>
<evidence type="ECO:0000269" key="20">
    <source>
    </source>
</evidence>
<evidence type="ECO:0000269" key="21">
    <source>
    </source>
</evidence>
<evidence type="ECO:0000269" key="22">
    <source>
    </source>
</evidence>
<evidence type="ECO:0000269" key="23">
    <source>
    </source>
</evidence>
<evidence type="ECO:0000269" key="24">
    <source>
    </source>
</evidence>
<evidence type="ECO:0000269" key="25">
    <source>
    </source>
</evidence>
<evidence type="ECO:0000269" key="26">
    <source>
    </source>
</evidence>
<evidence type="ECO:0000269" key="27">
    <source>
    </source>
</evidence>
<evidence type="ECO:0000269" key="28">
    <source>
    </source>
</evidence>
<evidence type="ECO:0000269" key="29">
    <source>
    </source>
</evidence>
<evidence type="ECO:0000269" key="30">
    <source>
    </source>
</evidence>
<evidence type="ECO:0000269" key="31">
    <source>
    </source>
</evidence>
<evidence type="ECO:0000269" key="32">
    <source>
    </source>
</evidence>
<evidence type="ECO:0000269" key="33">
    <source>
    </source>
</evidence>
<evidence type="ECO:0000269" key="34">
    <source>
    </source>
</evidence>
<evidence type="ECO:0000269" key="35">
    <source>
    </source>
</evidence>
<evidence type="ECO:0000269" key="36">
    <source>
    </source>
</evidence>
<evidence type="ECO:0000269" key="37">
    <source>
    </source>
</evidence>
<evidence type="ECO:0000269" key="38">
    <source>
    </source>
</evidence>
<evidence type="ECO:0000269" key="39">
    <source>
    </source>
</evidence>
<evidence type="ECO:0000269" key="40">
    <source>
    </source>
</evidence>
<evidence type="ECO:0000269" key="41">
    <source>
    </source>
</evidence>
<evidence type="ECO:0000269" key="42">
    <source>
    </source>
</evidence>
<evidence type="ECO:0000269" key="43">
    <source>
    </source>
</evidence>
<evidence type="ECO:0000269" key="44">
    <source>
    </source>
</evidence>
<evidence type="ECO:0000269" key="45">
    <source>
    </source>
</evidence>
<evidence type="ECO:0000269" key="46">
    <source>
    </source>
</evidence>
<evidence type="ECO:0000269" key="47">
    <source>
    </source>
</evidence>
<evidence type="ECO:0000269" key="48">
    <source>
    </source>
</evidence>
<evidence type="ECO:0000269" key="49">
    <source>
    </source>
</evidence>
<evidence type="ECO:0000269" key="50">
    <source>
    </source>
</evidence>
<evidence type="ECO:0000269" key="51">
    <source>
    </source>
</evidence>
<evidence type="ECO:0000269" key="52">
    <source>
    </source>
</evidence>
<evidence type="ECO:0000269" key="53">
    <source>
    </source>
</evidence>
<evidence type="ECO:0000269" key="54">
    <source>
    </source>
</evidence>
<evidence type="ECO:0000269" key="55">
    <source>
    </source>
</evidence>
<evidence type="ECO:0000269" key="56">
    <source>
    </source>
</evidence>
<evidence type="ECO:0000269" key="57">
    <source>
    </source>
</evidence>
<evidence type="ECO:0000269" key="58">
    <source>
    </source>
</evidence>
<evidence type="ECO:0000269" key="59">
    <source>
    </source>
</evidence>
<evidence type="ECO:0000269" key="60">
    <source>
    </source>
</evidence>
<evidence type="ECO:0000269" key="61">
    <source>
    </source>
</evidence>
<evidence type="ECO:0000269" key="62">
    <source>
    </source>
</evidence>
<evidence type="ECO:0000269" key="63">
    <source>
    </source>
</evidence>
<evidence type="ECO:0000269" key="64">
    <source>
    </source>
</evidence>
<evidence type="ECO:0000269" key="65">
    <source>
    </source>
</evidence>
<evidence type="ECO:0000269" key="66">
    <source>
    </source>
</evidence>
<evidence type="ECO:0000269" key="67">
    <source>
    </source>
</evidence>
<evidence type="ECO:0000269" key="68">
    <source>
    </source>
</evidence>
<evidence type="ECO:0000269" key="69">
    <source>
    </source>
</evidence>
<evidence type="ECO:0000269" key="70">
    <source>
    </source>
</evidence>
<evidence type="ECO:0000269" key="71">
    <source>
    </source>
</evidence>
<evidence type="ECO:0000269" key="72">
    <source>
    </source>
</evidence>
<evidence type="ECO:0000269" key="73">
    <source>
    </source>
</evidence>
<evidence type="ECO:0000269" key="74">
    <source>
    </source>
</evidence>
<evidence type="ECO:0000269" key="75">
    <source>
    </source>
</evidence>
<evidence type="ECO:0000269" key="76">
    <source>
    </source>
</evidence>
<evidence type="ECO:0000269" key="77">
    <source>
    </source>
</evidence>
<evidence type="ECO:0000269" key="78">
    <source>
    </source>
</evidence>
<evidence type="ECO:0000269" key="79">
    <source>
    </source>
</evidence>
<evidence type="ECO:0000269" key="80">
    <source>
    </source>
</evidence>
<evidence type="ECO:0000269" key="81">
    <source>
    </source>
</evidence>
<evidence type="ECO:0000269" key="82">
    <source>
    </source>
</evidence>
<evidence type="ECO:0000269" key="83">
    <source>
    </source>
</evidence>
<evidence type="ECO:0000269" key="84">
    <source>
    </source>
</evidence>
<evidence type="ECO:0000269" key="85">
    <source>
    </source>
</evidence>
<evidence type="ECO:0000269" key="86">
    <source>
    </source>
</evidence>
<evidence type="ECO:0000269" key="87">
    <source>
    </source>
</evidence>
<evidence type="ECO:0000269" key="88">
    <source>
    </source>
</evidence>
<evidence type="ECO:0000269" key="89">
    <source>
    </source>
</evidence>
<evidence type="ECO:0000269" key="90">
    <source>
    </source>
</evidence>
<evidence type="ECO:0000269" key="91">
    <source>
    </source>
</evidence>
<evidence type="ECO:0000269" key="92">
    <source>
    </source>
</evidence>
<evidence type="ECO:0000269" key="93">
    <source>
    </source>
</evidence>
<evidence type="ECO:0000269" key="94">
    <source>
    </source>
</evidence>
<evidence type="ECO:0000269" key="95">
    <source>
    </source>
</evidence>
<evidence type="ECO:0000269" key="96">
    <source>
    </source>
</evidence>
<evidence type="ECO:0000269" key="97">
    <source>
    </source>
</evidence>
<evidence type="ECO:0000269" key="98">
    <source>
    </source>
</evidence>
<evidence type="ECO:0000269" key="99">
    <source>
    </source>
</evidence>
<evidence type="ECO:0000269" key="100">
    <source>
    </source>
</evidence>
<evidence type="ECO:0000269" key="101">
    <source>
    </source>
</evidence>
<evidence type="ECO:0000269" key="102">
    <source>
    </source>
</evidence>
<evidence type="ECO:0000269" key="103">
    <source>
    </source>
</evidence>
<evidence type="ECO:0000269" key="104">
    <source>
    </source>
</evidence>
<evidence type="ECO:0000269" key="105">
    <source>
    </source>
</evidence>
<evidence type="ECO:0000269" key="106">
    <source>
    </source>
</evidence>
<evidence type="ECO:0000269" key="107">
    <source>
    </source>
</evidence>
<evidence type="ECO:0000269" key="108">
    <source>
    </source>
</evidence>
<evidence type="ECO:0000269" key="109">
    <source>
    </source>
</evidence>
<evidence type="ECO:0000269" key="110">
    <source>
    </source>
</evidence>
<evidence type="ECO:0000269" key="111">
    <source>
    </source>
</evidence>
<evidence type="ECO:0000269" key="112">
    <source>
    </source>
</evidence>
<evidence type="ECO:0000269" key="113">
    <source>
    </source>
</evidence>
<evidence type="ECO:0000269" key="114">
    <source>
    </source>
</evidence>
<evidence type="ECO:0000269" key="115">
    <source>
    </source>
</evidence>
<evidence type="ECO:0000269" key="116">
    <source>
    </source>
</evidence>
<evidence type="ECO:0000269" key="117">
    <source>
    </source>
</evidence>
<evidence type="ECO:0000269" key="118">
    <source>
    </source>
</evidence>
<evidence type="ECO:0000269" key="119">
    <source>
    </source>
</evidence>
<evidence type="ECO:0000269" key="120">
    <source>
    </source>
</evidence>
<evidence type="ECO:0000269" key="121">
    <source>
    </source>
</evidence>
<evidence type="ECO:0000269" key="122">
    <source>
    </source>
</evidence>
<evidence type="ECO:0000269" key="123">
    <source>
    </source>
</evidence>
<evidence type="ECO:0000269" key="124">
    <source>
    </source>
</evidence>
<evidence type="ECO:0000269" key="125">
    <source>
    </source>
</evidence>
<evidence type="ECO:0000269" key="126">
    <source>
    </source>
</evidence>
<evidence type="ECO:0000269" key="127">
    <source>
    </source>
</evidence>
<evidence type="ECO:0000269" key="128">
    <source>
    </source>
</evidence>
<evidence type="ECO:0000269" key="129">
    <source>
    </source>
</evidence>
<evidence type="ECO:0000269" key="130">
    <source>
    </source>
</evidence>
<evidence type="ECO:0000269" key="131">
    <source>
    </source>
</evidence>
<evidence type="ECO:0000269" key="132">
    <source>
    </source>
</evidence>
<evidence type="ECO:0000269" key="133">
    <source ref="118"/>
</evidence>
<evidence type="ECO:0000269" key="134">
    <source ref="3"/>
</evidence>
<evidence type="ECO:0000269" key="135">
    <source ref="57"/>
</evidence>
<evidence type="ECO:0000305" key="136"/>
<evidence type="ECO:0000305" key="137">
    <source>
    </source>
</evidence>
<evidence type="ECO:0000305" key="138">
    <source>
    </source>
</evidence>
<evidence type="ECO:0000305" key="139">
    <source>
    </source>
</evidence>
<evidence type="ECO:0000305" key="140">
    <source>
    </source>
</evidence>
<evidence type="ECO:0000312" key="141">
    <source>
        <dbReference type="HGNC" id="HGNC:1884"/>
    </source>
</evidence>
<evidence type="ECO:0007744" key="142">
    <source>
        <dbReference type="PDB" id="1XMI"/>
    </source>
</evidence>
<evidence type="ECO:0007744" key="143">
    <source>
        <dbReference type="PDB" id="1XMJ"/>
    </source>
</evidence>
<evidence type="ECO:0007744" key="144">
    <source>
        <dbReference type="PDB" id="2BBO"/>
    </source>
</evidence>
<evidence type="ECO:0007744" key="145">
    <source>
        <dbReference type="PDB" id="2BBS"/>
    </source>
</evidence>
<evidence type="ECO:0007744" key="146">
    <source>
        <dbReference type="PDB" id="2BBT"/>
    </source>
</evidence>
<evidence type="ECO:0007744" key="147">
    <source>
        <dbReference type="PDB" id="2LOB"/>
    </source>
</evidence>
<evidence type="ECO:0007744" key="148">
    <source>
        <dbReference type="PDB" id="2PZE"/>
    </source>
</evidence>
<evidence type="ECO:0007744" key="149">
    <source>
        <dbReference type="PDB" id="2PZF"/>
    </source>
</evidence>
<evidence type="ECO:0007744" key="150">
    <source>
        <dbReference type="PDB" id="2PZG"/>
    </source>
</evidence>
<evidence type="ECO:0007744" key="151">
    <source>
        <dbReference type="PDB" id="3GD7"/>
    </source>
</evidence>
<evidence type="ECO:0007744" key="152">
    <source>
        <dbReference type="PDB" id="4WZ6"/>
    </source>
</evidence>
<evidence type="ECO:0007744" key="153">
    <source>
        <dbReference type="PDB" id="5UAK"/>
    </source>
</evidence>
<evidence type="ECO:0007744" key="154">
    <source>
    </source>
</evidence>
<evidence type="ECO:0007829" key="155">
    <source>
        <dbReference type="PDB" id="1XMI"/>
    </source>
</evidence>
<evidence type="ECO:0007829" key="156">
    <source>
        <dbReference type="PDB" id="2BBS"/>
    </source>
</evidence>
<evidence type="ECO:0007829" key="157">
    <source>
        <dbReference type="PDB" id="2BBT"/>
    </source>
</evidence>
<evidence type="ECO:0007829" key="158">
    <source>
        <dbReference type="PDB" id="2LOB"/>
    </source>
</evidence>
<evidence type="ECO:0007829" key="159">
    <source>
        <dbReference type="PDB" id="2PZE"/>
    </source>
</evidence>
<evidence type="ECO:0007829" key="160">
    <source>
        <dbReference type="PDB" id="2PZF"/>
    </source>
</evidence>
<evidence type="ECO:0007829" key="161">
    <source>
        <dbReference type="PDB" id="2PZG"/>
    </source>
</evidence>
<evidence type="ECO:0007829" key="162">
    <source>
        <dbReference type="PDB" id="3GD7"/>
    </source>
</evidence>
<evidence type="ECO:0007829" key="163">
    <source>
        <dbReference type="PDB" id="5TFJ"/>
    </source>
</evidence>
<evidence type="ECO:0007829" key="164">
    <source>
        <dbReference type="PDB" id="6MSM"/>
    </source>
</evidence>
<evidence type="ECO:0007829" key="165">
    <source>
        <dbReference type="PDB" id="6UK1"/>
    </source>
</evidence>
<evidence type="ECO:0007829" key="166">
    <source>
        <dbReference type="PDB" id="6ZE1"/>
    </source>
</evidence>
<evidence type="ECO:0007829" key="167">
    <source>
        <dbReference type="PDB" id="7SVD"/>
    </source>
</evidence>
<evidence type="ECO:0007829" key="168">
    <source>
        <dbReference type="PDB" id="8EIO"/>
    </source>
</evidence>
<evidence type="ECO:0007829" key="169">
    <source>
        <dbReference type="PDB" id="8UBR"/>
    </source>
</evidence>
<evidence type="ECO:0007829" key="170">
    <source>
        <dbReference type="PDB" id="9DW8"/>
    </source>
</evidence>
<evidence type="ECO:0007829" key="171">
    <source>
        <dbReference type="PDB" id="9DW9"/>
    </source>
</evidence>
<gene>
    <name evidence="141" type="primary">CFTR</name>
    <name type="synonym">ABCC7</name>
</gene>
<name>CFTR_HUMAN</name>
<feature type="chain" id="PRO_0000093419" description="Cystic fibrosis transmembrane conductance regulator">
    <location>
        <begin position="1"/>
        <end position="1480"/>
    </location>
</feature>
<feature type="topological domain" description="Cytoplasmic" evidence="136">
    <location>
        <begin position="1"/>
        <end position="77"/>
    </location>
</feature>
<feature type="transmembrane region" description="Helical; Name=1" evidence="135">
    <location>
        <begin position="78"/>
        <end position="98"/>
    </location>
</feature>
<feature type="topological domain" description="Extracellular" evidence="135">
    <location>
        <begin position="99"/>
        <end position="122"/>
    </location>
</feature>
<feature type="transmembrane region" description="Helical; Name=2" evidence="135">
    <location>
        <begin position="123"/>
        <end position="146"/>
    </location>
</feature>
<feature type="topological domain" description="Cytoplasmic" evidence="135">
    <location>
        <begin position="147"/>
        <end position="195"/>
    </location>
</feature>
<feature type="transmembrane region" description="Helical; Name=3" evidence="135">
    <location>
        <begin position="196"/>
        <end position="216"/>
    </location>
</feature>
<feature type="topological domain" description="Extracellular" evidence="135">
    <location>
        <begin position="217"/>
        <end position="222"/>
    </location>
</feature>
<feature type="transmembrane region" description="Helical; Name=4" evidence="135">
    <location>
        <begin position="223"/>
        <end position="243"/>
    </location>
</feature>
<feature type="topological domain" description="Cytoplasmic" evidence="135">
    <location>
        <begin position="244"/>
        <end position="298"/>
    </location>
</feature>
<feature type="transmembrane region" description="Helical; Name=5" evidence="135">
    <location>
        <begin position="299"/>
        <end position="319"/>
    </location>
</feature>
<feature type="topological domain" description="Extracellular" evidence="135">
    <location>
        <begin position="320"/>
        <end position="339"/>
    </location>
</feature>
<feature type="transmembrane region" description="Helical; Name=6" evidence="135">
    <location>
        <begin position="340"/>
        <end position="358"/>
    </location>
</feature>
<feature type="topological domain" description="Cytoplasmic" evidence="135">
    <location>
        <begin position="359"/>
        <end position="858"/>
    </location>
</feature>
<feature type="transmembrane region" description="Helical; Name=7" evidence="135">
    <location>
        <begin position="859"/>
        <end position="879"/>
    </location>
</feature>
<feature type="topological domain" description="Extracellular" evidence="135">
    <location>
        <begin position="880"/>
        <end position="918"/>
    </location>
</feature>
<feature type="transmembrane region" description="Discontinuously helical; Name=8" evidence="135">
    <location>
        <begin position="919"/>
        <end position="939"/>
    </location>
</feature>
<feature type="topological domain" description="Cytoplasmic" evidence="135">
    <location>
        <begin position="940"/>
        <end position="990"/>
    </location>
</feature>
<feature type="transmembrane region" description="Helical; Name=9" evidence="135">
    <location>
        <begin position="991"/>
        <end position="1011"/>
    </location>
</feature>
<feature type="topological domain" description="Extracellular" evidence="135">
    <location>
        <begin position="1012"/>
        <end position="1013"/>
    </location>
</feature>
<feature type="transmembrane region" description="Helical; Name=10" evidence="135">
    <location>
        <begin position="1014"/>
        <end position="1034"/>
    </location>
</feature>
<feature type="topological domain" description="Cytoplasmic" evidence="135">
    <location>
        <begin position="1035"/>
        <end position="1095"/>
    </location>
</feature>
<feature type="transmembrane region" description="Helical; Name=11" evidence="135">
    <location>
        <begin position="1096"/>
        <end position="1116"/>
    </location>
</feature>
<feature type="topological domain" description="Extracellular" evidence="135">
    <location>
        <begin position="1117"/>
        <end position="1130"/>
    </location>
</feature>
<feature type="transmembrane region" description="Helical; Name=12" evidence="135">
    <location>
        <begin position="1131"/>
        <end position="1151"/>
    </location>
</feature>
<feature type="topological domain" description="Cytoplasmic" evidence="135">
    <location>
        <begin position="1152"/>
        <end position="1480"/>
    </location>
</feature>
<feature type="domain" description="ABC transmembrane type-1 1" evidence="4">
    <location>
        <begin position="81"/>
        <end position="365"/>
    </location>
</feature>
<feature type="domain" description="ABC transporter 1" evidence="3">
    <location>
        <begin position="423"/>
        <end position="646"/>
    </location>
</feature>
<feature type="domain" description="ABC transmembrane type-1 2" evidence="4">
    <location>
        <begin position="859"/>
        <end position="1155"/>
    </location>
</feature>
<feature type="domain" description="ABC transporter 2" evidence="3">
    <location>
        <begin position="1210"/>
        <end position="1443"/>
    </location>
</feature>
<feature type="region of interest" description="Disordered R region" evidence="9">
    <location>
        <begin position="654"/>
        <end position="831"/>
    </location>
</feature>
<feature type="region of interest" description="Interaction with GORASP2" evidence="60">
    <location>
        <begin position="1386"/>
        <end position="1480"/>
    </location>
</feature>
<feature type="region of interest" description="Disordered" evidence="5">
    <location>
        <begin position="1452"/>
        <end position="1480"/>
    </location>
</feature>
<feature type="short sequence motif" description="PDZ-binding" evidence="15 37">
    <location>
        <begin position="1478"/>
        <end position="1480"/>
    </location>
</feature>
<feature type="compositionally biased region" description="Acidic residues" evidence="5">
    <location>
        <begin position="1470"/>
        <end position="1480"/>
    </location>
</feature>
<feature type="binding site" evidence="35 57 142 143 144 145 146 148 149 150">
    <location>
        <position position="401"/>
    </location>
    <ligand>
        <name>ATP</name>
        <dbReference type="ChEBI" id="CHEBI:30616"/>
        <label>1</label>
    </ligand>
</feature>
<feature type="binding site" evidence="57 148 149 150">
    <location>
        <position position="434"/>
    </location>
    <ligand>
        <name>ATP</name>
        <dbReference type="ChEBI" id="CHEBI:30616"/>
        <label>1</label>
    </ligand>
</feature>
<feature type="binding site" evidence="3 35 142 143 144 145 146">
    <location>
        <begin position="458"/>
        <end position="465"/>
    </location>
    <ligand>
        <name>ATP</name>
        <dbReference type="ChEBI" id="CHEBI:30616"/>
        <label>1</label>
    </ligand>
</feature>
<feature type="binding site" evidence="35 142 144 145">
    <location>
        <position position="493"/>
    </location>
    <ligand>
        <name>ATP</name>
        <dbReference type="ChEBI" id="CHEBI:30616"/>
        <label>1</label>
    </ligand>
</feature>
<feature type="binding site" evidence="151">
    <location>
        <position position="1219"/>
    </location>
    <ligand>
        <name>ATP</name>
        <dbReference type="ChEBI" id="CHEBI:30616"/>
        <label>2</label>
    </ligand>
</feature>
<feature type="binding site" evidence="3 151">
    <location>
        <begin position="1244"/>
        <end position="1251"/>
    </location>
    <ligand>
        <name>ATP</name>
        <dbReference type="ChEBI" id="CHEBI:30616"/>
        <label>2</label>
    </ligand>
</feature>
<feature type="modified residue" description="Phosphoserine" evidence="154">
    <location>
        <position position="549"/>
    </location>
</feature>
<feature type="modified residue" description="Phosphoserine; by PKA" evidence="29 61 69 120">
    <location>
        <position position="660"/>
    </location>
</feature>
<feature type="modified residue" description="Phosphoserine; by PKA" evidence="69">
    <location>
        <position position="670"/>
    </location>
</feature>
<feature type="modified residue" description="Phosphoserine; by PKC" evidence="29 61">
    <location>
        <position position="686"/>
    </location>
</feature>
<feature type="modified residue" description="Phosphoserine; by PKA" evidence="29 61 69 120">
    <location>
        <position position="700"/>
    </location>
</feature>
<feature type="modified residue" description="Phosphoserine; by PKA" evidence="61 69 120">
    <location>
        <position position="712"/>
    </location>
</feature>
<feature type="modified residue" description="Phosphothreonine" evidence="61">
    <location>
        <position position="717"/>
    </location>
</feature>
<feature type="modified residue" description="Phosphoserine; by PKA" evidence="29 61 69 120">
    <location>
        <position position="737"/>
    </location>
</feature>
<feature type="modified residue" description="Phosphoserine; by PKA" evidence="69 120">
    <location>
        <position position="753"/>
    </location>
</feature>
<feature type="modified residue" description="Phosphoserine; by PKA" evidence="29 69 120">
    <location>
        <position position="768"/>
    </location>
</feature>
<feature type="modified residue" description="Phosphoserine; by PKC" evidence="29">
    <location>
        <position position="790"/>
    </location>
</feature>
<feature type="modified residue" description="Phosphoserine; by PKA" evidence="29 61 69 120">
    <location>
        <position position="795"/>
    </location>
</feature>
<feature type="modified residue" description="Phosphoserine; by PKA" evidence="29 69 120">
    <location>
        <position position="813"/>
    </location>
</feature>
<feature type="modified residue" description="Phosphoserine" evidence="61">
    <location>
        <position position="1444"/>
    </location>
</feature>
<feature type="modified residue" description="Phosphoserine" evidence="61">
    <location>
        <position position="1456"/>
    </location>
</feature>
<feature type="lipid moiety-binding region" description="S-palmitoyl cysteine" evidence="61">
    <location>
        <position position="524"/>
    </location>
</feature>
<feature type="lipid moiety-binding region" description="S-palmitoyl cysteine" evidence="61">
    <location>
        <position position="1395"/>
    </location>
</feature>
<feature type="glycosylation site" description="N-linked (GlcNAc...) asparagine" evidence="89 139">
    <location>
        <position position="894"/>
    </location>
</feature>
<feature type="glycosylation site" description="N-linked (GlcNAc...) asparagine" evidence="89 139">
    <location>
        <position position="900"/>
    </location>
</feature>
<feature type="cross-link" description="Glycyl lysine isopeptide (Lys-Gly) (interchain with G-Cter in ubiquitin)" evidence="61">
    <location>
        <position position="688"/>
    </location>
</feature>
<feature type="splice variant" id="VSP_022123" description="In isoform 2." evidence="136">
    <location>
        <begin position="404"/>
        <end position="464"/>
    </location>
</feature>
<feature type="splice variant" id="VSP_022124" description="In isoform 3." evidence="136">
    <original>SCVCKLMANKTRILVTS</original>
    <variation>RRRCSCLLDRNKKTIF</variation>
    <location>
        <begin position="589"/>
        <end position="605"/>
    </location>
</feature>
<feature type="splice variant" id="VSP_022125" description="In isoform 3." evidence="136">
    <location>
        <begin position="606"/>
        <end position="1480"/>
    </location>
</feature>
<feature type="sequence variant" id="VAR_000101" description="In CF; dbSNP:rs397508635." evidence="129">
    <original>S</original>
    <variation>F</variation>
    <location>
        <position position="13"/>
    </location>
</feature>
<feature type="sequence variant" id="VAR_000102" description="In dbSNP:rs1800073." evidence="91 132">
    <original>R</original>
    <variation>C</variation>
    <location>
        <position position="31"/>
    </location>
</feature>
<feature type="sequence variant" id="VAR_000103" description="In CF; uncertain significance; dbSNP:rs149353983." evidence="96">
    <original>R</original>
    <variation>L</variation>
    <location>
        <position position="31"/>
    </location>
</feature>
<feature type="sequence variant" id="VAR_000104" description="In CF; dbSNP:rs143456784." evidence="99">
    <original>S</original>
    <variation>F</variation>
    <location>
        <position position="42"/>
    </location>
</feature>
<feature type="sequence variant" id="VAR_000105" description="In CF; uncertain significance; dbSNP:rs1800074." evidence="30">
    <original>D</original>
    <variation>G</variation>
    <location>
        <position position="44"/>
    </location>
</feature>
<feature type="sequence variant" id="VAR_000106" description="In dbSNP:rs1800074." evidence="30">
    <original>D</original>
    <variation>V</variation>
    <location>
        <position position="44"/>
    </location>
</feature>
<feature type="sequence variant" id="VAR_000107" description="In CBAVD; dbSNP:rs397508220." evidence="116">
    <original>S</original>
    <variation>Y</variation>
    <location>
        <position position="50"/>
    </location>
</feature>
<feature type="sequence variant" id="VAR_000108" description="In CF; dbSNP:rs397508272." evidence="101">
    <original>W</original>
    <variation>G</variation>
    <location>
        <position position="57"/>
    </location>
</feature>
<feature type="sequence variant" id="VAR_000109" description="In CF; dbSNP:rs368505753." evidence="127">
    <original>P</original>
    <variation>L</variation>
    <location>
        <position position="67"/>
    </location>
</feature>
<feature type="sequence variant" id="VAR_000110" description="In CF and CBAVD; uncertain significance; dbSNP:rs115545701." evidence="48">
    <original>R</original>
    <variation>W</variation>
    <location>
        <position position="74"/>
    </location>
</feature>
<feature type="sequence variant" id="VAR_000111" description="In CF; dbSNP:rs1800076." evidence="48 128 132">
    <original>R</original>
    <variation>Q</variation>
    <location>
        <position position="75"/>
    </location>
</feature>
<feature type="sequence variant" id="VAR_000112" description="In CF; dbSNP:rs75961395." evidence="121">
    <original>G</original>
    <variation>E</variation>
    <location>
        <position position="85"/>
    </location>
</feature>
<feature type="sequence variant" id="VAR_000113" description="In CF; dbSNP:rs397508403." evidence="107">
    <original>F</original>
    <variation>L</variation>
    <location>
        <position position="87"/>
    </location>
</feature>
<feature type="sequence variant" id="VAR_000114" description="In CF; dbSNP:rs121908750." evidence="27">
    <original>G</original>
    <variation>R</variation>
    <location>
        <position position="91"/>
    </location>
</feature>
<feature type="sequence variant" id="VAR_000115" description="In CF; dbSNP:rs121908751." evidence="25 106">
    <original>E</original>
    <variation>K</variation>
    <location>
        <position position="92"/>
    </location>
</feature>
<feature type="sequence variant" id="VAR_000116" description="In CF; dbSNP:rs397508464." evidence="102">
    <original>Q</original>
    <variation>R</variation>
    <location>
        <position position="98"/>
    </location>
</feature>
<feature type="sequence variant" id="VAR_000118" description="In CF; dbSNP:rs121909031." evidence="92">
    <original>Y</original>
    <variation>C</variation>
    <location>
        <position position="109"/>
    </location>
</feature>
<feature type="sequence variant" id="VAR_000119" description="In CF and CBAVD; dbSNP:rs113993958." evidence="48 128">
    <original>D</original>
    <variation>H</variation>
    <location>
        <position position="110"/>
    </location>
</feature>
<feature type="sequence variant" id="VAR_000120" description="In CBAVD; dbSNP:rs140502196." evidence="133">
    <original>P</original>
    <variation>L</variation>
    <location>
        <position position="111"/>
    </location>
</feature>
<feature type="sequence variant" id="VAR_000121" description="In CF; dbSNP:rs77834169." evidence="25">
    <original>R</original>
    <variation>C</variation>
    <location>
        <position position="117"/>
    </location>
</feature>
<feature type="sequence variant" id="VAR_000122" description="In CF and CBAVD; strong decrease in single channel conductance; promotes rapid return to the closed state of the channel; decrease in bicarbonate transport; dbSNP:rs78655421." evidence="12 48 72 86 121">
    <original>R</original>
    <variation>H</variation>
    <location>
        <position position="117"/>
    </location>
</feature>
<feature type="sequence variant" id="VAR_000123" description="In CF; dbSNP:rs78655421." evidence="99">
    <original>R</original>
    <variation>L</variation>
    <location>
        <position position="117"/>
    </location>
</feature>
<feature type="sequence variant" id="VAR_000124" description="In CF; dbSNP:rs78655421." evidence="123">
    <original>R</original>
    <variation>P</variation>
    <location>
        <position position="117"/>
    </location>
</feature>
<feature type="sequence variant" id="VAR_000125" description="In CF; dbSNP:rs201958172." evidence="88">
    <original>A</original>
    <variation>T</variation>
    <location>
        <position position="120"/>
    </location>
</feature>
<feature type="sequence variant" id="VAR_009895" description="In dbSNP:rs1800078.">
    <original>L</original>
    <variation>P</variation>
    <location>
        <position position="138"/>
    </location>
</feature>
<feature type="sequence variant" id="VAR_000126" description="In CF; dbSNP:rs76371115." evidence="99">
    <original>H</original>
    <variation>R</variation>
    <location>
        <position position="139"/>
    </location>
</feature>
<feature type="sequence variant" id="VAR_000127" description="In CF; dbSNP:rs397508700." evidence="118">
    <original>A</original>
    <variation>D</variation>
    <location>
        <position position="141"/>
    </location>
</feature>
<feature type="sequence variant" id="VAR_000128" description="In CF; uncertain significance; loss of bicarbonate transport; decreased inhibition of epithelial sodium channel (ENaC), when tested in a heterologous system; no effect on protein maturation, subcellular location at the plasma membrane, nor on chloride channel activity; dbSNP:rs35516286." evidence="12 17 39">
    <original>I</original>
    <variation>T</variation>
    <location>
        <position position="148"/>
    </location>
</feature>
<feature type="sequence variant" id="VAR_000129" description="In CBAVD; dbSNP:rs397508718." evidence="95">
    <original>G</original>
    <variation>R</variation>
    <location>
        <position position="149"/>
    </location>
</feature>
<feature type="sequence variant" id="VAR_009896" description="In CBAVD; uncertain significance; dbSNP:rs1800079." evidence="48">
    <original>R</original>
    <variation>H</variation>
    <location>
        <position position="170"/>
    </location>
</feature>
<feature type="sequence variant" id="VAR_000130" description="In CF; loss of bicarbonate transport; no effect on protein maturation, subcellular location at the plasma membrane, nor on chloride channel activity; dbSNP:rs80282562." evidence="12 30">
    <original>G</original>
    <variation>R</variation>
    <location>
        <position position="178"/>
    </location>
</feature>
<feature type="sequence variant" id="VAR_009897" description="In dbSNP:rs1800080.">
    <original>S</original>
    <variation>G</variation>
    <location>
        <position position="182"/>
    </location>
</feature>
<feature type="sequence variant" id="VAR_000131" description="In CF." evidence="123">
    <location>
        <position position="192"/>
    </location>
</feature>
<feature type="sequence variant" id="VAR_000132" description="In CBAVD and CF; decrease in bicarbonate transport; no effect on chloride channel activity; dbSNP:rs397508759." evidence="12 95 101">
    <original>E</original>
    <variation>K</variation>
    <location>
        <position position="193"/>
    </location>
</feature>
<feature type="sequence variant" id="VAR_000133" description="In CF; dbSNP:rs397508765." evidence="27">
    <original>H</original>
    <variation>Q</variation>
    <location>
        <position position="199"/>
    </location>
</feature>
<feature type="sequence variant" id="VAR_000134" description="In CF; dbSNP:rs121908802." evidence="94">
    <original>H</original>
    <variation>Y</variation>
    <location>
        <position position="199"/>
    </location>
</feature>
<feature type="sequence variant" id="VAR_000135" description="In CF; dbSNP:rs121908803." evidence="84">
    <original>P</original>
    <variation>S</variation>
    <location>
        <position position="205"/>
    </location>
</feature>
<feature type="sequence variant" id="VAR_000136" description="In CF and CBAVD; dbSNP:rs121908752." evidence="48 109">
    <original>L</original>
    <variation>W</variation>
    <location>
        <position position="206"/>
    </location>
</feature>
<feature type="sequence variant" id="VAR_080302" description="In CF." evidence="58">
    <location>
        <begin position="220"/>
        <end position="1480"/>
    </location>
</feature>
<feature type="sequence variant" id="VAR_000137" description="In CF; uncertain significance; dbSNP:rs397508780." evidence="30">
    <original>C</original>
    <variation>R</variation>
    <location>
        <position position="225"/>
    </location>
</feature>
<feature type="sequence variant" id="VAR_080303" description="In CBAVD; dbSNP:rs397508783." evidence="48">
    <original>V</original>
    <variation>D</variation>
    <location>
        <position position="232"/>
    </location>
</feature>
<feature type="sequence variant" id="VAR_000138" description="In CBAVD; dbSNP:rs397508790." evidence="133">
    <original>M</original>
    <variation>K</variation>
    <location>
        <position position="244"/>
    </location>
</feature>
<feature type="sequence variant" id="VAR_000139" description="In CBAVD; dbSNP:rs191456345." evidence="95">
    <original>R</original>
    <variation>G</variation>
    <location>
        <position position="258"/>
    </location>
</feature>
<feature type="sequence variant" id="VAR_000140" description="In CF; decreased presence at the cell membrane due to increased internalization from the apical cell membrane; no effect on single channel gating and conductance; dbSNP:rs397508804." evidence="20 121">
    <original>N</original>
    <variation>Y</variation>
    <location>
        <position position="287"/>
    </location>
</feature>
<feature type="sequence variant" id="VAR_000141" description="In CF; dbSNP:rs143486492." evidence="27">
    <original>R</original>
    <variation>Q</variation>
    <location>
        <position position="297"/>
    </location>
</feature>
<feature type="sequence variant" id="VAR_000142" description="In CF; uncertain significance; dbSNP:rs150691494." evidence="132">
    <original>Y</original>
    <variation>C</variation>
    <location>
        <position position="301"/>
    </location>
</feature>
<feature type="sequence variant" id="VAR_000143" description="In CBAVD and CF; dbSNP:rs397508817." evidence="6 81 82">
    <original>S</original>
    <variation>N</variation>
    <location>
        <position position="307"/>
    </location>
</feature>
<feature type="sequence variant" id="VAR_000144" description="In CF; dbSNP:rs121909016." evidence="27">
    <original>F</original>
    <variation>L</variation>
    <location>
        <position position="311"/>
    </location>
</feature>
<feature type="sequence variant" id="VAR_000145" description="In CF." evidence="122">
    <location>
        <position position="311"/>
    </location>
</feature>
<feature type="sequence variant" id="VAR_000146" description="In CF; dbSNP:rs75763344." evidence="27">
    <original>G</original>
    <variation>E</variation>
    <location>
        <position position="314"/>
    </location>
</feature>
<feature type="sequence variant" id="VAR_000147" description="In CF; dbSNP:rs397508819." evidence="113">
    <original>G</original>
    <variation>R</variation>
    <location>
        <position position="314"/>
    </location>
</feature>
<feature type="sequence variant" id="VAR_009898" description="In dbSNP:rs1800085.">
    <original>V</original>
    <variation>M</variation>
    <location>
        <position position="322"/>
    </location>
</feature>
<feature type="sequence variant" id="VAR_000148" description="In CF and CBAVD; mild; does not prevent maturation of glycans; dbSNP:rs121909011." evidence="30 41 48">
    <original>R</original>
    <variation>W</variation>
    <location>
        <position position="334"/>
    </location>
</feature>
<feature type="sequence variant" id="VAR_000150" description="In CF; dbSNP:rs397508139." evidence="86">
    <original>I</original>
    <variation>K</variation>
    <location>
        <position position="336"/>
    </location>
</feature>
<feature type="sequence variant" id="VAR_000151" description="In CF; mild; isolated hypotonic dehydration; dbSNP:rs77409459." evidence="100 129">
    <original>T</original>
    <variation>I</variation>
    <location>
        <position position="338"/>
    </location>
</feature>
<feature type="sequence variant" id="VAR_000152" description="In CF; dominant mutation but mild phenotype; dbSNP:rs397508146." evidence="87">
    <original>L</original>
    <variation>P</variation>
    <location>
        <position position="346"/>
    </location>
</feature>
<feature type="sequence variant" id="VAR_000153" description="In CF; dbSNP:rs77932196." evidence="83">
    <original>R</original>
    <variation>H</variation>
    <location>
        <position position="347"/>
    </location>
</feature>
<feature type="sequence variant" id="VAR_000154" description="In CF; dbSNP:rs77932196." evidence="83">
    <original>R</original>
    <variation>L</variation>
    <location>
        <position position="347"/>
    </location>
</feature>
<feature type="sequence variant" id="VAR_000155" description="In CF; mild; dbSNP:rs77932196." evidence="27">
    <original>R</original>
    <variation>P</variation>
    <location>
        <position position="347"/>
    </location>
</feature>
<feature type="sequence variant" id="VAR_009899" description="In dbSNP:rs1800086.">
    <original>T</original>
    <variation>S</variation>
    <location>
        <position position="351"/>
    </location>
</feature>
<feature type="sequence variant" id="VAR_000156" description="In CF; dbSNP:rs121908753." evidence="83">
    <original>R</original>
    <variation>Q</variation>
    <location>
        <position position="352"/>
    </location>
</feature>
<feature type="sequence variant" id="VAR_009900" description="In dbSNP:rs1800087.">
    <original>Q</original>
    <variation>H</variation>
    <location>
        <position position="353"/>
    </location>
</feature>
<feature type="sequence variant" id="VAR_000158" description="In CF; dbSNP:rs397508152." evidence="27">
    <original>QT</original>
    <variation>KK</variation>
    <location>
        <begin position="359"/>
        <end position="360"/>
    </location>
</feature>
<feature type="sequence variant" id="VAR_000157" description="In CF; dbSNP:rs76879328." evidence="83">
    <original>Q</original>
    <variation>K</variation>
    <location>
        <position position="359"/>
    </location>
</feature>
<feature type="sequence variant" id="VAR_000159" description="In CF." evidence="125">
    <original>K</original>
    <variation>KNK</variation>
    <location>
        <position position="370"/>
    </location>
</feature>
<feature type="sequence variant" id="VAR_080304" description="In CBAVD; uncertain significance; dbSNP:rs147422190." evidence="48">
    <original>D</original>
    <variation>Y</variation>
    <location>
        <position position="443"/>
    </location>
</feature>
<feature type="sequence variant" id="VAR_000160" description="In CF; dbSNP:rs74551128." evidence="65 86 121">
    <original>A</original>
    <variation>E</variation>
    <location>
        <position position="455"/>
    </location>
</feature>
<feature type="sequence variant" id="VAR_000161" description="In CF; dbSNP:rs397508195." evidence="85">
    <original>V</original>
    <variation>F</variation>
    <location>
        <position position="456"/>
    </location>
</feature>
<feature type="sequence variant" id="VAR_000162" description="In CF; dbSNP:rs121909009." evidence="27 86">
    <original>G</original>
    <variation>V</variation>
    <location>
        <position position="458"/>
    </location>
</feature>
<feature type="sequence variant" id="VAR_000163" description="In dbSNP:rs1800089.">
    <original>L</original>
    <variation>F</variation>
    <location>
        <position position="467"/>
    </location>
</feature>
<feature type="sequence variant" id="VAR_000164" description="In dbSNP:rs213950." evidence="8 30 44 48 51 58 68 134">
    <original>V</original>
    <variation>M</variation>
    <location>
        <position position="470"/>
    </location>
</feature>
<feature type="sequence variant" id="VAR_000165" description="In CF; dbSNP:rs79282516." evidence="27">
    <original>G</original>
    <variation>C</variation>
    <location>
        <position position="480"/>
    </location>
</feature>
<feature type="sequence variant" id="VAR_000166" description="In CF; dbSNP:rs121909017." evidence="27">
    <original>S</original>
    <variation>F</variation>
    <location>
        <position position="492"/>
    </location>
</feature>
<feature type="sequence variant" id="VAR_000167" description="In CF; dbSNP:rs397508223." evidence="27">
    <original>E</original>
    <variation>Q</variation>
    <location>
        <position position="504"/>
    </location>
</feature>
<feature type="sequence variant" id="VAR_009901" description="In dbSNP:rs1800092.">
    <original>I</original>
    <variation>M</variation>
    <location>
        <position position="506"/>
    </location>
</feature>
<feature type="sequence variant" id="VAR_000168" description="In dbSNP:rs1800091." evidence="30 132">
    <original>I</original>
    <variation>V</variation>
    <location>
        <position position="506"/>
    </location>
</feature>
<feature type="sequence variant" id="VAR_000169" description="In dbSNP:rs1801178.">
    <original>I</original>
    <variation>V</variation>
    <location>
        <position position="507"/>
    </location>
</feature>
<feature type="sequence variant" id="VAR_000170" description="In CF; impaired maturation of glycan chains; dbSNP:rs121908745." evidence="41 45">
    <location>
        <position position="507"/>
    </location>
</feature>
<feature type="sequence variant" id="VAR_000172" description="In dbSNP:rs74571530." evidence="30">
    <original>F</original>
    <variation>C</variation>
    <location>
        <position position="508"/>
    </location>
</feature>
<feature type="sequence variant" id="VAR_000171" description="In CF and CBAVD; most common mutation in Caucasian CF chromosomes; impairs protein folding and stability; causes local changes to the surface that mediates interactions between domains; decreases frequency of channel opening in vitro; binds to the cytokeratin-8 and through this binding is primed for the degradation pathway that ends in the proteasome, thus impairing trafficking; impairs maturation and trafficking to the cell membrane; impairs recycling to the cell membrane after endocytosis; abolishes MARCHF2-mediated degradation; dbSNP:rs121909001 and dbSNP:rs113993960." evidence="17 20 28 30 35 36 41 43 45 48 56 57 58 60 66 69 73 76 77 78">
    <location>
        <position position="508"/>
    </location>
</feature>
<feature type="sequence variant" id="VAR_000173" description="In CBAVD; dbSNP:rs397508225." evidence="8">
    <original>D</original>
    <variation>G</variation>
    <location>
        <position position="513"/>
    </location>
</feature>
<feature type="sequence variant" id="VAR_000174" description="In CF; dbSNP:rs77646904." evidence="23">
    <original>V</original>
    <variation>F</variation>
    <location>
        <position position="520"/>
    </location>
</feature>
<feature type="sequence variant" id="VAR_048150" description="In dbSNP:rs35032490.">
    <original>K</original>
    <variation>E</variation>
    <location>
        <position position="532"/>
    </location>
</feature>
<feature type="sequence variant" id="VAR_080305" description="In CF." evidence="30">
    <location>
        <begin position="542"/>
        <end position="1480"/>
    </location>
</feature>
<feature type="sequence variant" id="VAR_000175" description="In CBAVD; dbSNP:rs397508241." evidence="133">
    <original>G</original>
    <variation>V</variation>
    <location>
        <position position="544"/>
    </location>
</feature>
<feature type="sequence variant" id="VAR_000177" description="In CF; impaired maturation of glycan chains; dbSNP:rs121908755." evidence="41 46 65">
    <original>S</original>
    <variation>I</variation>
    <location>
        <position position="549"/>
    </location>
</feature>
<feature type="sequence variant" id="VAR_000176" description="In CF; dbSNP:rs121908755." evidence="27 40">
    <original>S</original>
    <variation>N</variation>
    <location>
        <position position="549"/>
    </location>
</feature>
<feature type="sequence variant" id="VAR_000178" description="In CF; impaired maturation of glycan chains; dbSNP:rs121909005." evidence="46 65">
    <original>S</original>
    <variation>R</variation>
    <location>
        <position position="549"/>
    </location>
</feature>
<feature type="sequence variant" id="VAR_000179" description="In CF; decrease in the frequency of channel opening in vitro; decrease in channel activity and ATPase activity; complete loss of bicarbonate transport; no effect on trafficking to the cell membrane, protein stability, nor on the maturation of glycans; dbSNP:rs75527207." evidence="12 28 30 40 41 46 65 78 114 121">
    <original>G</original>
    <variation>D</variation>
    <location>
        <position position="551"/>
    </location>
</feature>
<feature type="sequence variant" id="VAR_000180" description="In CF; decrease in bicarbonate transport; no effect on chloride channel activity; dbSNP:rs121909013." evidence="103">
    <original>G</original>
    <variation>S</variation>
    <location>
        <position position="551"/>
    </location>
</feature>
<feature type="sequence variant" id="VAR_000181" description="In CF; dbSNP:rs121909044." evidence="27">
    <original>R</original>
    <variation>Q</variation>
    <location>
        <position position="553"/>
    </location>
</feature>
<feature type="sequence variant" id="VAR_080306" description="In CBAVD; uncertain significance; dbSNP:rs75789129." evidence="48">
    <original>I</original>
    <variation>V</variation>
    <location>
        <position position="556"/>
    </location>
</feature>
<feature type="sequence variant" id="VAR_000182" description="In CF; dbSNP:rs193922504." evidence="27">
    <original>L</original>
    <variation>S</variation>
    <location>
        <position position="558"/>
    </location>
</feature>
<feature type="sequence variant" id="VAR_000183" description="In CF; impaired maturation of glycan chains; dbSNP:rs75549581." evidence="40 46">
    <original>A</original>
    <variation>T</variation>
    <location>
        <position position="559"/>
    </location>
</feature>
<feature type="sequence variant" id="VAR_000184" description="In CF; dbSNP:rs80055610." evidence="27">
    <original>R</original>
    <variation>K</variation>
    <location>
        <position position="560"/>
    </location>
</feature>
<feature type="sequence variant" id="VAR_000185" description="In CF; dbSNP:rs397508267." evidence="126">
    <original>R</original>
    <variation>S</variation>
    <location>
        <position position="560"/>
    </location>
</feature>
<feature type="sequence variant" id="VAR_000186" description="In CF; impairs maturation and trafficking to the cell membrane; decrease in channel activity; dbSNP:rs80055610." evidence="43 65">
    <original>R</original>
    <variation>T</variation>
    <location>
        <position position="560"/>
    </location>
</feature>
<feature type="sequence variant" id="VAR_080307" description="In CF; impairs maturation and trafficking to the cell membrane; decrease in channel activity; dbSNP:rs121909047." evidence="43">
    <original>A</original>
    <variation>E</variation>
    <location>
        <position position="561"/>
    </location>
</feature>
<feature type="sequence variant" id="VAR_000187" description="In CBAVD and CF; uncertain significance; found in cis of the IVS8 TG11-T5 allele, which affects exon 9 splicing; no effect on protein maturation, trafficking to the cell membrane, nor on channel activity; dbSNP:rs1800097." evidence="30 43 48 58">
    <original>V</original>
    <variation>I</variation>
    <location>
        <position position="562"/>
    </location>
</feature>
<feature type="sequence variant" id="VAR_000188" description="In CF; dbSNP:rs1800097." evidence="115">
    <original>V</original>
    <variation>L</variation>
    <location>
        <position position="562"/>
    </location>
</feature>
<feature type="sequence variant" id="VAR_000189" description="In CF; dbSNP:rs121909006." evidence="27 65">
    <original>Y</original>
    <variation>N</variation>
    <location>
        <position position="563"/>
    </location>
</feature>
<feature type="sequence variant" id="VAR_000190" description="In CF; dbSNP:rs397508277." evidence="110">
    <original>Y</original>
    <variation>C</variation>
    <location>
        <position position="569"/>
    </location>
</feature>
<feature type="sequence variant" id="VAR_000191" description="In CF; dbSNP:rs397508276." evidence="126">
    <original>Y</original>
    <variation>D</variation>
    <location>
        <position position="569"/>
    </location>
</feature>
<feature type="sequence variant" id="VAR_000192" description="In CF; dbSNP:rs397508276." evidence="10 11">
    <original>Y</original>
    <variation>H</variation>
    <location>
        <position position="569"/>
    </location>
</feature>
<feature type="sequence variant" id="VAR_000193" description="In CF; dbSNP:rs397508280." evidence="128">
    <original>L</original>
    <variation>S</variation>
    <location>
        <position position="571"/>
    </location>
</feature>
<feature type="sequence variant" id="VAR_000194" description="In CF; impaired maturation of glycan chains; dbSNP:rs397508282." evidence="46 98">
    <original>D</original>
    <variation>N</variation>
    <location>
        <position position="572"/>
    </location>
</feature>
<feature type="sequence variant" id="VAR_000195" description="In CF; dbSNP:rs121908758." evidence="27 65">
    <original>P</original>
    <variation>H</variation>
    <location>
        <position position="574"/>
    </location>
</feature>
<feature type="sequence variant" id="VAR_000196" description="In CBAVD; uncertain significance; dbSNP:rs1800098." evidence="30 48">
    <original>G</original>
    <variation>A</variation>
    <location>
        <position position="576"/>
    </location>
</feature>
<feature type="sequence variant" id="VAR_000197" description="In CF; dbSNP:rs397508288." evidence="7 101">
    <original>D</original>
    <variation>G</variation>
    <location>
        <position position="579"/>
    </location>
</feature>
<feature type="sequence variant" id="VAR_000198" description="In CF; impaired maturation of glycan chains; dbSNP:rs397508306." evidence="130">
    <original>I</original>
    <variation>F</variation>
    <location>
        <position position="601"/>
    </location>
</feature>
<feature type="sequence variant" id="VAR_048151" description="In dbSNP:rs766874.">
    <original>S</original>
    <variation>F</variation>
    <location>
        <position position="605"/>
    </location>
</feature>
<feature type="sequence variant" id="VAR_000199" description="In CF; impaired maturation of glycan chains; dbSNP:rs397508311." evidence="130">
    <original>L</original>
    <variation>S</variation>
    <location>
        <position position="610"/>
    </location>
</feature>
<feature type="sequence variant" id="VAR_000200" description="In CF; impaired maturation of glycan chains; dbSNP:rs201978662." evidence="130">
    <original>A</original>
    <variation>T</variation>
    <location>
        <position position="613"/>
    </location>
</feature>
<feature type="sequence variant" id="VAR_000201" description="In CF; impaired maturation of glycan chains; dbSNP:rs201124247." evidence="130">
    <original>D</original>
    <variation>G</variation>
    <location>
        <position position="614"/>
    </location>
</feature>
<feature type="sequence variant" id="VAR_000202" description="In CF; impaired maturation of glycan chains; dbSNP:rs139468767." evidence="130">
    <original>I</original>
    <variation>T</variation>
    <location>
        <position position="618"/>
    </location>
</feature>
<feature type="sequence variant" id="VAR_000203" description="In CF; impaired maturation of glycan chains; dbSNP:rs397508313." evidence="94 130">
    <original>L</original>
    <variation>S</variation>
    <location>
        <position position="619"/>
    </location>
</feature>
<feature type="sequence variant" id="VAR_000204" description="In CF; impaired maturation of glycan chains; dbSNP:rs397508314." evidence="130">
    <original>H</original>
    <variation>P</variation>
    <location>
        <position position="620"/>
    </location>
</feature>
<feature type="sequence variant" id="VAR_000205" description="In CF; strong decrease in bicarbonate transport; increase in chloride channel activity in vitro; no effect on glycan maturation; dbSNP:rs397508315." evidence="130">
    <original>H</original>
    <variation>Q</variation>
    <location>
        <position position="620"/>
    </location>
</feature>
<feature type="sequence variant" id="VAR_000206" description="In CBAVD; decreased channel activity; has no effect on glycan maturation; dbSNP:rs121908759." evidence="48 130">
    <original>G</original>
    <variation>D</variation>
    <location>
        <position position="622"/>
    </location>
</feature>
<feature type="sequence variant" id="VAR_000207" description="In CF; impaired maturation of glycan chains; dbSNP:rs397508316." evidence="30 86 130">
    <original>G</original>
    <variation>R</variation>
    <location>
        <position position="628"/>
    </location>
</feature>
<feature type="sequence variant" id="VAR_000208" description="In CF; impaired maturation of glycan chains; dbSNP:rs397508318." evidence="130">
    <original>L</original>
    <variation>P</variation>
    <location>
        <position position="633"/>
    </location>
</feature>
<feature type="sequence variant" id="VAR_000209" description="In CF; decrease in bicarbonate transport; no effect chloride channel activity; dbSNP:rs121909033." evidence="12">
    <original>D</original>
    <variation>V</variation>
    <location>
        <position position="648"/>
    </location>
</feature>
<feature type="sequence variant" id="VAR_000210" description="In CF; dbSNP:rs780526529." evidence="132">
    <original>D</original>
    <variation>N</variation>
    <location>
        <position position="651"/>
    </location>
</feature>
<feature type="sequence variant" id="VAR_009902" description="In dbSNP:rs1800099.">
    <original>S</original>
    <variation>G</variation>
    <location>
        <position position="654"/>
    </location>
</feature>
<feature type="sequence variant" id="VAR_000211" description="In CF; uncertain significance; no effect on glycan maturation and channel activity; dbSNP:rs1177201180." evidence="112 130">
    <original>T</original>
    <variation>S</variation>
    <location>
        <position position="665"/>
    </location>
</feature>
<feature type="sequence variant" id="VAR_000212" description="In CBAVD; uncertain significance; dbSNP:rs1800100." evidence="30 48 132">
    <original>R</original>
    <variation>C</variation>
    <location>
        <position position="668"/>
    </location>
</feature>
<feature type="sequence variant" id="VAR_000213" description="In CF; uncertain significance; no effect on glycan maturation; no effect on channel activity; dbSNP:rs145540754 and dbSNP:rs397508338." evidence="16 108 130">
    <original>F</original>
    <variation>L</variation>
    <location>
        <position position="693"/>
    </location>
</feature>
<feature type="sequence variant" id="VAR_080308" description="In CF." evidence="30">
    <location>
        <begin position="710"/>
        <end position="1480"/>
    </location>
</feature>
<feature type="sequence variant" id="VAR_000214" description="In CF; uncertain significance; dbSNP:rs150157202." evidence="132">
    <original>V</original>
    <variation>M</variation>
    <location>
        <position position="754"/>
    </location>
</feature>
<feature type="sequence variant" id="VAR_000215" description="In CBAVD; uncertain significance; no effect on glycan maturation; no effect on channel activity; dbSNP:rs397508363." evidence="130">
    <original>R</original>
    <variation>M</variation>
    <location>
        <position position="766"/>
    </location>
</feature>
<feature type="sequence variant" id="VAR_000216" description="In CBAVD; no effect on glycan maturation but decreased channel activity; dbSNP:rs145449046." evidence="130">
    <original>R</original>
    <variation>G</variation>
    <location>
        <position position="792"/>
    </location>
</feature>
<feature type="sequence variant" id="VAR_000217" description="In CBAVD; small decrease in bicarbonate transport; increase in chloride channel activity in vitro; no effect on glycan maturation; dbSNP:rs397508373." evidence="12 95 130">
    <original>A</original>
    <variation>G</variation>
    <location>
        <position position="800"/>
    </location>
</feature>
<feature type="sequence variant" id="VAR_000218" description="In CBAVD; uncertain significance; no effect on glycan maturation; no effect on channel activity; dbSNP:rs1800103." evidence="130">
    <original>I</original>
    <variation>M</variation>
    <location>
        <position position="807"/>
    </location>
</feature>
<feature type="sequence variant" id="VAR_000219" description="In CF; no effect on glycan maturation but decreased channel activity; dbSNP:rs397508378." evidence="130">
    <original>E</original>
    <variation>K</variation>
    <location>
        <position position="822"/>
    </location>
</feature>
<feature type="sequence variant" id="VAR_000220" description="In thoracic sarcoidosis; uncertain significance; no effect on glycan maturation and channel activity; dbSNP:rs397508381." evidence="130">
    <original>E</original>
    <variation>K</variation>
    <location>
        <position position="826"/>
    </location>
</feature>
<feature type="sequence variant" id="VAR_080309" description="In CF." evidence="30">
    <location>
        <begin position="846"/>
        <end position="1480"/>
    </location>
</feature>
<feature type="sequence variant" id="VAR_000221" description="In CF; dbSNP:rs193922506." evidence="27">
    <original>C</original>
    <variation>Y</variation>
    <location>
        <position position="866"/>
    </location>
</feature>
<feature type="sequence variant" id="VAR_080310" description="In CF." evidence="17 91">
    <location>
        <begin position="890"/>
        <end position="1480"/>
    </location>
</feature>
<feature type="sequence variant" id="VAR_009903" description="In dbSNP:rs1800106.">
    <original>Y</original>
    <variation>H</variation>
    <location>
        <position position="903"/>
    </location>
</feature>
<feature type="sequence variant" id="VAR_009904" description="In dbSNP:rs1800107.">
    <original>S</original>
    <variation>I</variation>
    <location>
        <position position="909"/>
    </location>
</feature>
<feature type="sequence variant" id="VAR_000222" description="In CF; uncertain significance; dbSNP:rs121909034." evidence="91">
    <original>S</original>
    <variation>L</variation>
    <location>
        <position position="912"/>
    </location>
</feature>
<feature type="sequence variant" id="VAR_000223" description="In CF; dbSNP:rs121909008." evidence="30">
    <original>Y</original>
    <variation>C</variation>
    <location>
        <position position="913"/>
    </location>
</feature>
<feature type="sequence variant" id="VAR_000224" description="In CF; dbSNP:rs397508428.">
    <original>Y</original>
    <variation>C</variation>
    <location>
        <position position="917"/>
    </location>
</feature>
<feature type="sequence variant" id="VAR_080311" description="In CBAVD; uncertain significance; dbSNP:rs193922511." evidence="48">
    <original>V</original>
    <variation>G</variation>
    <location>
        <position position="938"/>
    </location>
</feature>
<feature type="sequence variant" id="VAR_000225" description="In CF; decrease in bicarbonate transport; no effect on chloride channel activity; dbSNP:rs121909035." evidence="12 91">
    <original>H</original>
    <variation>Y</variation>
    <location>
        <position position="949"/>
    </location>
</feature>
<feature type="sequence variant" id="VAR_000226" description="In CF and CBAVD; uncertain significance; dbSNP:rs151048781." evidence="48 128">
    <original>M</original>
    <variation>I</variation>
    <location>
        <position position="952"/>
    </location>
</feature>
<feature type="sequence variant" id="VAR_080312" description="In CBAVD; uncertain significance; dbSNP:rs397508448." evidence="48">
    <original>A</original>
    <variation>V</variation>
    <location>
        <position position="959"/>
    </location>
</feature>
<feature type="sequence variant" id="VAR_009905" description="In dbSNP:rs1800110.">
    <original>L</original>
    <variation>S</variation>
    <location>
        <position position="967"/>
    </location>
</feature>
<feature type="sequence variant" id="VAR_080313" description="In CBAVD; dbSNP:rs141033578." evidence="48">
    <original>S</original>
    <variation>F</variation>
    <location>
        <position position="977"/>
    </location>
</feature>
<feature type="sequence variant" id="VAR_000227" description="In CF and CBAVD; uncertain significance; dbSNP:rs1800111." evidence="48">
    <original>L</original>
    <variation>F</variation>
    <location>
        <position position="997"/>
    </location>
</feature>
<feature type="sequence variant" id="VAR_000228" description="In CF; dbSNP:rs397508479." evidence="94">
    <original>I</original>
    <variation>R</variation>
    <location>
        <position position="1005"/>
    </location>
</feature>
<feature type="sequence variant" id="VAR_000229" description="In CF; dbSNP:rs397508480." evidence="58 99">
    <original>A</original>
    <variation>E</variation>
    <location>
        <position position="1006"/>
    </location>
</feature>
<feature type="sequence variant" id="VAR_000230" description="In CF; dbSNP:rs193922516." evidence="128">
    <original>P</original>
    <variation>L</variation>
    <location>
        <position position="1013"/>
    </location>
</feature>
<feature type="sequence variant" id="VAR_080314" description="In CF; uncertain significance." evidence="17">
    <location>
        <begin position="1023"/>
        <end position="1024"/>
    </location>
</feature>
<feature type="sequence variant" id="VAR_080315" description="In dbSNP:rs1800112." evidence="30">
    <original>I</original>
    <variation>T</variation>
    <location>
        <position position="1027"/>
    </location>
</feature>
<feature type="sequence variant" id="VAR_000231" description="In CF; dbSNP:rs200553511." evidence="128">
    <original>M</original>
    <variation>I</variation>
    <location>
        <position position="1028"/>
    </location>
</feature>
<feature type="sequence variant" id="VAR_080316" description="In CBAVD; uncertain significance; dbSNP:rs144055758." evidence="48">
    <original>Y</original>
    <variation>C</variation>
    <location>
        <position position="1032"/>
    </location>
</feature>
<feature type="sequence variant" id="VAR_000232" description="In CF; dbSNP:rs150212784." evidence="105">
    <original>F</original>
    <variation>V</variation>
    <location>
        <position position="1052"/>
    </location>
</feature>
<feature type="sequence variant" id="VAR_000233" description="In CF; dbSNP:rs142394380." evidence="105 111">
    <original>G</original>
    <variation>R</variation>
    <location>
        <position position="1061"/>
    </location>
</feature>
<feature type="sequence variant" id="VAR_080317" description="In CF." evidence="30">
    <location>
        <begin position="1063"/>
        <end position="1480"/>
    </location>
</feature>
<feature type="sequence variant" id="VAR_000234" description="In CF; dbSNP:rs121909036." evidence="91">
    <original>L</original>
    <variation>P</variation>
    <location>
        <position position="1065"/>
    </location>
</feature>
<feature type="sequence variant" id="VAR_000235" description="In CF; dbSNP:rs121909036." evidence="124">
    <original>L</original>
    <variation>R</variation>
    <location>
        <position position="1065"/>
    </location>
</feature>
<feature type="sequence variant" id="VAR_000236" description="In CF; dbSNP:rs78194216." evidence="30 119">
    <original>R</original>
    <variation>C</variation>
    <location>
        <position position="1066"/>
    </location>
</feature>
<feature type="sequence variant" id="VAR_000237" description="In CF; dbSNP:rs121909019." evidence="27">
    <original>R</original>
    <variation>H</variation>
    <location>
        <position position="1066"/>
    </location>
</feature>
<feature type="sequence variant" id="VAR_000238" description="In CF; dbSNP:rs121909019." evidence="105">
    <original>R</original>
    <variation>L</variation>
    <location>
        <position position="1066"/>
    </location>
</feature>
<feature type="sequence variant" id="VAR_000239" description="In CF; loss of bicarbonate transport; no effect on protein maturation, subcellular location at the plasma membrane, nor on chloride channel activity; dbSNP:rs121909020." evidence="12">
    <original>A</original>
    <variation>T</variation>
    <location>
        <position position="1067"/>
    </location>
</feature>
<feature type="sequence variant" id="VAR_000240" description="In dbSNP:rs1800114." evidence="97">
    <original>A</original>
    <variation>V</variation>
    <location>
        <position position="1067"/>
    </location>
</feature>
<feature type="sequence variant" id="VAR_080318" description="In CBAVD; uncertain significance; dbSNP:rs200321110." evidence="48">
    <original>G</original>
    <variation>R</variation>
    <location>
        <position position="1069"/>
    </location>
</feature>
<feature type="sequence variant" id="VAR_000242" description="In CF; dbSNP:rs78769542." evidence="121">
    <original>R</original>
    <variation>P</variation>
    <location>
        <position position="1070"/>
    </location>
</feature>
<feature type="sequence variant" id="VAR_000241" description="In CF; decrease in bicarbonate transport; no effect on chloride channel activity; dbSNP:rs78769542." evidence="12 105">
    <original>R</original>
    <variation>Q</variation>
    <location>
        <position position="1070"/>
    </location>
</feature>
<feature type="sequence variant" id="VAR_011564" description="In CBAVD; dbSNP:rs202179988." evidence="97">
    <original>R</original>
    <variation>W</variation>
    <location>
        <position position="1070"/>
    </location>
</feature>
<feature type="sequence variant" id="VAR_000243" description="In CF; dbSNP:rs121909037." evidence="91">
    <original>Q</original>
    <variation>P</variation>
    <location>
        <position position="1071"/>
    </location>
</feature>
<feature type="sequence variant" id="VAR_000244" description="In CF; uncertain significance." evidence="132">
    <original>P</original>
    <variation>L</variation>
    <location>
        <position position="1072"/>
    </location>
</feature>
<feature type="sequence variant" id="VAR_000245" description="In CF; dbSNP:rs139304906." evidence="27">
    <original>L</original>
    <variation>P</variation>
    <location>
        <position position="1077"/>
    </location>
</feature>
<feature type="sequence variant" id="VAR_000246" description="In CF; dbSNP:rs79635528." evidence="105">
    <original>H</original>
    <variation>R</variation>
    <location>
        <position position="1085"/>
    </location>
</feature>
<feature type="sequence variant" id="VAR_080319" description="In CF." evidence="30">
    <location>
        <begin position="1092"/>
        <end position="1480"/>
    </location>
</feature>
<feature type="sequence variant" id="VAR_000247" description="In CF; dbSNP:rs397508531." evidence="96">
    <original>W</original>
    <variation>R</variation>
    <location>
        <position position="1098"/>
    </location>
</feature>
<feature type="sequence variant" id="VAR_000248" description="In CF; dbSNP:rs36210737." evidence="104">
    <original>M</original>
    <variation>K</variation>
    <location>
        <position position="1101"/>
    </location>
</feature>
<feature type="sequence variant" id="VAR_011565" description="In CF; dbSNP:rs36210737." evidence="105">
    <original>M</original>
    <variation>R</variation>
    <location>
        <position position="1101"/>
    </location>
</feature>
<feature type="sequence variant" id="VAR_000249" description="In CF; decreases channel activity; no visible effect on protein maturation; dbSNP:rs397508553." evidence="131">
    <original>M</original>
    <variation>V</variation>
    <location>
        <position position="1137"/>
    </location>
</feature>
<feature type="sequence variant" id="VAR_000250" description="In CF; abolishes channel activity; no visible effect on protein maturation; dbSNP:rs397508557." evidence="117 131">
    <location>
        <position position="1140"/>
    </location>
</feature>
<feature type="sequence variant" id="VAR_000251" description="In CF and CBAVD; decreases channel activity; no visible effect on protein maturation; dbSNP:rs75541969." evidence="48 131">
    <original>D</original>
    <variation>H</variation>
    <location>
        <position position="1152"/>
    </location>
</feature>
<feature type="sequence variant" id="VAR_080320" description="In CBAVD; uncertain significance; dbSNP:rs397508567." evidence="48">
    <original>V</original>
    <variation>E</variation>
    <location>
        <position position="1153"/>
    </location>
</feature>
<feature type="sequence variant" id="VAR_080321" description="In CF." evidence="30">
    <location>
        <begin position="1162"/>
        <end position="1480"/>
    </location>
</feature>
<feature type="sequence variant" id="VAR_000252" description="In dbSNP:rs1800120." evidence="30">
    <original>R</original>
    <variation>L</variation>
    <location>
        <position position="1162"/>
    </location>
</feature>
<feature type="sequence variant" id="VAR_080322" description="In CF; uncertain significance." evidence="30">
    <original>K</original>
    <variation>E</variation>
    <location>
        <position position="1200"/>
    </location>
</feature>
<feature type="sequence variant" id="VAR_080323" description="In CF." evidence="91">
    <location>
        <begin position="1204"/>
        <end position="1480"/>
    </location>
</feature>
<feature type="sequence variant" id="VAR_000253" description="In dbSNP:rs1800123." evidence="91">
    <original>T</original>
    <variation>I</variation>
    <location>
        <position position="1220"/>
    </location>
</feature>
<feature type="sequence variant" id="VAR_000254" description="In CF; dbSNP:rs75389940." evidence="27">
    <original>I</original>
    <variation>V</variation>
    <location>
        <position position="1234"/>
    </location>
</feature>
<feature type="sequence variant" id="VAR_000255" description="In CF; dbSNP:rs34911792." evidence="86">
    <original>S</original>
    <variation>R</variation>
    <location>
        <position position="1235"/>
    </location>
</feature>
<feature type="sequence variant" id="VAR_000256" description="In CF; loss of bicarbonate transport; no effect on protein maturation, subcellular location at the plasma membrane, nor on chloride channel activity; dbSNP:rs267606723." evidence="12">
    <original>G</original>
    <variation>E</variation>
    <location>
        <position position="1244"/>
    </location>
</feature>
<feature type="sequence variant" id="VAR_000257" description="In CF; dbSNP:rs121909040." evidence="90">
    <original>G</original>
    <variation>E</variation>
    <location>
        <position position="1249"/>
    </location>
</feature>
<feature type="sequence variant" id="VAR_000258" description="In CF; dbSNP:rs74503330." evidence="27 86">
    <original>S</original>
    <variation>N</variation>
    <location>
        <position position="1251"/>
    </location>
</feature>
<feature type="sequence variant" id="VAR_000259" description="In CF; loss of bicarbonate transport; no effect on protein maturation, subcellular location at the plasma membrane, nor on chloride channel activity; dbSNP:rs121909041." evidence="12 26">
    <original>S</original>
    <variation>P</variation>
    <location>
        <position position="1255"/>
    </location>
</feature>
<feature type="sequence variant" id="VAR_000260" description="In CF and CBAVD; dbSNP:rs11971167." evidence="48">
    <original>D</original>
    <variation>N</variation>
    <location>
        <position position="1270"/>
    </location>
</feature>
<feature type="sequence variant" id="VAR_080324" description="In CF and CBAVD." evidence="30 48">
    <location>
        <begin position="1282"/>
        <end position="1480"/>
    </location>
</feature>
<feature type="sequence variant" id="VAR_000261" description="In CF; dbSNP:rs397508616." evidence="27">
    <original>W</original>
    <variation>R</variation>
    <location>
        <position position="1282"/>
    </location>
</feature>
<feature type="sequence variant" id="VAR_000262" description="In CF; dbSNP:rs77902683." evidence="24">
    <original>R</original>
    <variation>M</variation>
    <location>
        <position position="1283"/>
    </location>
</feature>
<feature type="sequence variant" id="VAR_000263" description="In CF; dbSNP:rs121909028." evidence="27">
    <original>F</original>
    <variation>S</variation>
    <location>
        <position position="1286"/>
    </location>
</feature>
<feature type="sequence variant" id="VAR_000264" description="In CF; dbSNP:rs121909015." evidence="23">
    <original>Q</original>
    <variation>H</variation>
    <location>
        <position position="1291"/>
    </location>
</feature>
<feature type="sequence variant" id="VAR_000265" description="In CF; dbSNP:rs397508621." evidence="94">
    <original>Q</original>
    <variation>R</variation>
    <location>
        <position position="1291"/>
    </location>
</feature>
<feature type="sequence variant" id="VAR_000266" description="In CF; dbSNP:rs121909042." evidence="27">
    <original>N</original>
    <variation>H</variation>
    <location>
        <position position="1303"/>
    </location>
</feature>
<feature type="sequence variant" id="VAR_000267" description="In CF; impaired maturation of glycan chains; has low in vitro channel activity at low temperature; dbSNP:rs80034486." evidence="17 30 46 47 86 121 128">
    <original>N</original>
    <variation>K</variation>
    <location>
        <position position="1303"/>
    </location>
</feature>
<feature type="sequence variant" id="VAR_000268" description="In CF; loss of bicarbonate transport; no effect on protein maturation, subcellular location at the plasma membrane, nor on chloride channel activity; dbSNP:rs193922525." evidence="12 46">
    <original>G</original>
    <variation>D</variation>
    <location>
        <position position="1349"/>
    </location>
</feature>
<feature type="sequence variant" id="VAR_080325" description="In CBAVD; uncertain significance; dbSNP:rs113857788." evidence="48">
    <original>Q</original>
    <variation>H</variation>
    <location>
        <position position="1352"/>
    </location>
</feature>
<feature type="sequence variant" id="VAR_000269" description="In CBAVD; dbSNP:rs397508670." evidence="133">
    <original>A</original>
    <variation>V</variation>
    <location>
        <position position="1364"/>
    </location>
</feature>
<feature type="sequence variant" id="VAR_000270" description="In CF; dbSNP:rs397508691." evidence="93">
    <original>V</original>
    <variation>E</variation>
    <location>
        <position position="1397"/>
    </location>
</feature>
<feature type="sequence variant" id="VAR_048152" description="In dbSNP:rs4148725." evidence="134">
    <original>R</original>
    <variation>W</variation>
    <location>
        <position position="1453"/>
    </location>
</feature>
<feature type="sequence variant" id="VAR_080326" description="In CBAVD; uncertain significance." evidence="48">
    <location>
        <begin position="1473"/>
        <end position="1480"/>
    </location>
</feature>
<feature type="mutagenesis site" description="Decreases glutathione uptake. Increases affinity for glutathione." evidence="22">
    <original>R</original>
    <variation>D</variation>
    <location>
        <position position="347"/>
    </location>
</feature>
<feature type="mutagenesis site" description="Decreases glutathione uptake." evidence="22">
    <original>K</original>
    <variation>A</variation>
    <location>
        <position position="464"/>
    </location>
</feature>
<feature type="mutagenesis site" description="Impaired maturation of glycan chains indicating impaired trafficking from the endoplasmic reticulum to the cell membrane." evidence="41">
    <original>K</original>
    <variation>M</variation>
    <location>
        <position position="464"/>
    </location>
</feature>
<feature type="mutagenesis site" description="Impaired maturation of glycan chains indicating impaired trafficking from the endoplasmic reticulum to the cell membrane." evidence="41 46">
    <original>F</original>
    <variation>R</variation>
    <location>
        <position position="508"/>
    </location>
</feature>
<feature type="mutagenesis site" description="Enhances trafficking from the endoplasmic reticulum to the cell membrane." evidence="76">
    <original>I</original>
    <variation>T</variation>
    <location>
        <position position="539"/>
    </location>
</feature>
<feature type="mutagenesis site" description="Abolishes N-glycosylation, enhances endocytosis and impairs subsequent recycling to the cell surface; when associated with D-900." evidence="56">
    <original>N</original>
    <variation>D</variation>
    <location>
        <position position="894"/>
    </location>
</feature>
<feature type="mutagenesis site" description="Abolishes N-glycosylation, enhances endocytosis and impairs subsequent recycling to the cell surface; when associated with D-894." evidence="56">
    <original>N</original>
    <variation>D</variation>
    <location>
        <position position="900"/>
    </location>
</feature>
<feature type="mutagenesis site" description="Abolishes channel activity. Impairs protein maturation, suggesting the protein is retained in the endoplasmic reticulum." evidence="131">
    <original>M</original>
    <variation>R</variation>
    <location>
        <position position="1137"/>
    </location>
</feature>
<feature type="mutagenesis site" description="Decreases channel activity, no visible effect on protein maturation." evidence="131">
    <original>I</original>
    <variation>V</variation>
    <location>
        <position position="1139"/>
    </location>
</feature>
<feature type="mutagenesis site" description="Decreases channel activity, no visible effect on protein maturation." evidence="131">
    <original>D</original>
    <variation>G</variation>
    <location>
        <position position="1154"/>
    </location>
</feature>
<feature type="mutagenesis site" description="Decreases glutathione uptake." evidence="22">
    <original>K</original>
    <variation>A</variation>
    <location>
        <position position="1250"/>
    </location>
</feature>
<feature type="mutagenesis site" description="No effect on maturation of glycans, suggesting that trafficking to the plasma membrane is not altered." evidence="41">
    <original>K</original>
    <variation>M</variation>
    <location>
        <position position="1250"/>
    </location>
</feature>
<feature type="mutagenesis site" description="Reduces interaction with MARCHF2 and abolishes subsequent MARCHF2-mediated degradation. No effect on localization to the Golgi." evidence="66">
    <location>
        <begin position="1478"/>
        <end position="1480"/>
    </location>
</feature>
<feature type="sequence conflict" description="In Ref. 1; AAA35680." evidence="136" ref="1">
    <original>H</original>
    <variation>N</variation>
    <location>
        <position position="620"/>
    </location>
</feature>
<feature type="sequence conflict" description="In Ref. 1; AAA35680." evidence="136" ref="1">
    <original>F</original>
    <variation>L</variation>
    <location>
        <position position="833"/>
    </location>
</feature>
<feature type="helix" evidence="169">
    <location>
        <begin position="5"/>
        <end position="8"/>
    </location>
</feature>
<feature type="helix" evidence="167">
    <location>
        <begin position="11"/>
        <end position="16"/>
    </location>
</feature>
<feature type="helix" evidence="167">
    <location>
        <begin position="18"/>
        <end position="20"/>
    </location>
</feature>
<feature type="helix" evidence="167">
    <location>
        <begin position="21"/>
        <end position="27"/>
    </location>
</feature>
<feature type="helix" evidence="167">
    <location>
        <begin position="34"/>
        <end position="36"/>
    </location>
</feature>
<feature type="helix" evidence="167">
    <location>
        <begin position="42"/>
        <end position="44"/>
    </location>
</feature>
<feature type="helix" evidence="167">
    <location>
        <begin position="46"/>
        <end position="63"/>
    </location>
</feature>
<feature type="helix" evidence="167">
    <location>
        <begin position="70"/>
        <end position="97"/>
    </location>
</feature>
<feature type="helix" evidence="167">
    <location>
        <begin position="99"/>
        <end position="107"/>
    </location>
</feature>
<feature type="helix" evidence="168">
    <location>
        <begin position="114"/>
        <end position="118"/>
    </location>
</feature>
<feature type="helix" evidence="167">
    <location>
        <begin position="120"/>
        <end position="164"/>
    </location>
</feature>
<feature type="turn" evidence="167">
    <location>
        <begin position="169"/>
        <end position="173"/>
    </location>
</feature>
<feature type="helix" evidence="167">
    <location>
        <begin position="177"/>
        <end position="185"/>
    </location>
</feature>
<feature type="turn" evidence="170">
    <location>
        <begin position="186"/>
        <end position="189"/>
    </location>
</feature>
<feature type="helix" evidence="167">
    <location>
        <begin position="190"/>
        <end position="193"/>
    </location>
</feature>
<feature type="helix" evidence="167">
    <location>
        <begin position="194"/>
        <end position="196"/>
    </location>
</feature>
<feature type="helix" evidence="167">
    <location>
        <begin position="200"/>
        <end position="216"/>
    </location>
</feature>
<feature type="turn" evidence="167">
    <location>
        <begin position="220"/>
        <end position="222"/>
    </location>
</feature>
<feature type="helix" evidence="167">
    <location>
        <begin position="223"/>
        <end position="249"/>
    </location>
</feature>
<feature type="helix" evidence="167">
    <location>
        <begin position="252"/>
        <end position="266"/>
    </location>
</feature>
<feature type="helix" evidence="167">
    <location>
        <begin position="269"/>
        <end position="275"/>
    </location>
</feature>
<feature type="helix" evidence="167">
    <location>
        <begin position="278"/>
        <end position="312"/>
    </location>
</feature>
<feature type="helix" evidence="167">
    <location>
        <begin position="314"/>
        <end position="328"/>
    </location>
</feature>
<feature type="helix" evidence="167">
    <location>
        <begin position="333"/>
        <end position="351"/>
    </location>
</feature>
<feature type="helix" evidence="167">
    <location>
        <begin position="354"/>
        <end position="375"/>
    </location>
</feature>
<feature type="strand" evidence="169">
    <location>
        <begin position="386"/>
        <end position="388"/>
    </location>
</feature>
<feature type="strand" evidence="159">
    <location>
        <begin position="390"/>
        <end position="399"/>
    </location>
</feature>
<feature type="helix" evidence="156">
    <location>
        <begin position="403"/>
        <end position="411"/>
    </location>
</feature>
<feature type="helix" evidence="157">
    <location>
        <begin position="414"/>
        <end position="417"/>
    </location>
</feature>
<feature type="helix" evidence="155">
    <location>
        <begin position="433"/>
        <end position="436"/>
    </location>
</feature>
<feature type="strand" evidence="159">
    <location>
        <begin position="440"/>
        <end position="449"/>
    </location>
</feature>
<feature type="strand" evidence="164">
    <location>
        <begin position="450"/>
        <end position="452"/>
    </location>
</feature>
<feature type="strand" evidence="159">
    <location>
        <begin position="453"/>
        <end position="457"/>
    </location>
</feature>
<feature type="helix" evidence="166">
    <location>
        <begin position="460"/>
        <end position="462"/>
    </location>
</feature>
<feature type="helix" evidence="159">
    <location>
        <begin position="464"/>
        <end position="471"/>
    </location>
</feature>
<feature type="strand" evidence="159">
    <location>
        <begin position="478"/>
        <end position="484"/>
    </location>
</feature>
<feature type="strand" evidence="159">
    <location>
        <begin position="488"/>
        <end position="491"/>
    </location>
</feature>
<feature type="strand" evidence="161">
    <location>
        <begin position="499"/>
        <end position="501"/>
    </location>
</feature>
<feature type="helix" evidence="159">
    <location>
        <begin position="502"/>
        <end position="507"/>
    </location>
</feature>
<feature type="helix" evidence="159">
    <location>
        <begin position="514"/>
        <end position="523"/>
    </location>
</feature>
<feature type="helix" evidence="159">
    <location>
        <begin position="527"/>
        <end position="530"/>
    </location>
</feature>
<feature type="strand" evidence="160">
    <location>
        <begin position="533"/>
        <end position="535"/>
    </location>
</feature>
<feature type="helix" evidence="159">
    <location>
        <begin position="536"/>
        <end position="538"/>
    </location>
</feature>
<feature type="strand" evidence="163">
    <location>
        <begin position="540"/>
        <end position="545"/>
    </location>
</feature>
<feature type="helix" evidence="159">
    <location>
        <begin position="550"/>
        <end position="563"/>
    </location>
</feature>
<feature type="strand" evidence="159">
    <location>
        <begin position="567"/>
        <end position="573"/>
    </location>
</feature>
<feature type="turn" evidence="159">
    <location>
        <begin position="574"/>
        <end position="577"/>
    </location>
</feature>
<feature type="helix" evidence="159">
    <location>
        <begin position="580"/>
        <end position="589"/>
    </location>
</feature>
<feature type="helix" evidence="159">
    <location>
        <begin position="590"/>
        <end position="594"/>
    </location>
</feature>
<feature type="turn" evidence="159">
    <location>
        <begin position="595"/>
        <end position="597"/>
    </location>
</feature>
<feature type="strand" evidence="159">
    <location>
        <begin position="598"/>
        <end position="603"/>
    </location>
</feature>
<feature type="helix" evidence="159">
    <location>
        <begin position="607"/>
        <end position="612"/>
    </location>
</feature>
<feature type="strand" evidence="159">
    <location>
        <begin position="614"/>
        <end position="620"/>
    </location>
</feature>
<feature type="strand" evidence="159">
    <location>
        <begin position="623"/>
        <end position="628"/>
    </location>
</feature>
<feature type="helix" evidence="159">
    <location>
        <begin position="630"/>
        <end position="634"/>
    </location>
</feature>
<feature type="helix" evidence="159">
    <location>
        <begin position="640"/>
        <end position="644"/>
    </location>
</feature>
<feature type="helix" evidence="156">
    <location>
        <begin position="650"/>
        <end position="652"/>
    </location>
</feature>
<feature type="helix" evidence="156">
    <location>
        <begin position="655"/>
        <end position="669"/>
    </location>
</feature>
<feature type="helix" evidence="171">
    <location>
        <begin position="826"/>
        <end position="829"/>
    </location>
</feature>
<feature type="turn" evidence="171">
    <location>
        <begin position="830"/>
        <end position="832"/>
    </location>
</feature>
<feature type="helix" evidence="167">
    <location>
        <begin position="849"/>
        <end position="853"/>
    </location>
</feature>
<feature type="helix" evidence="167">
    <location>
        <begin position="857"/>
        <end position="882"/>
    </location>
</feature>
<feature type="turn" evidence="167">
    <location>
        <begin position="883"/>
        <end position="886"/>
    </location>
</feature>
<feature type="strand" evidence="167">
    <location>
        <begin position="904"/>
        <end position="906"/>
    </location>
</feature>
<feature type="turn" evidence="167">
    <location>
        <begin position="910"/>
        <end position="913"/>
    </location>
</feature>
<feature type="helix" evidence="167">
    <location>
        <begin position="914"/>
        <end position="926"/>
    </location>
</feature>
<feature type="helix" evidence="167">
    <location>
        <begin position="931"/>
        <end position="956"/>
    </location>
</feature>
<feature type="helix" evidence="167">
    <location>
        <begin position="961"/>
        <end position="965"/>
    </location>
</feature>
<feature type="helix" evidence="167">
    <location>
        <begin position="969"/>
        <end position="1011"/>
    </location>
</feature>
<feature type="helix" evidence="167">
    <location>
        <begin position="1015"/>
        <end position="1046"/>
    </location>
</feature>
<feature type="helix" evidence="167">
    <location>
        <begin position="1049"/>
        <end position="1060"/>
    </location>
</feature>
<feature type="helix" evidence="167">
    <location>
        <begin position="1062"/>
        <end position="1068"/>
    </location>
</feature>
<feature type="helix" evidence="167">
    <location>
        <begin position="1071"/>
        <end position="1121"/>
    </location>
</feature>
<feature type="strand" evidence="170">
    <location>
        <begin position="1123"/>
        <end position="1125"/>
    </location>
</feature>
<feature type="helix" evidence="167">
    <location>
        <begin position="1128"/>
        <end position="1136"/>
    </location>
</feature>
<feature type="turn" evidence="167">
    <location>
        <begin position="1137"/>
        <end position="1139"/>
    </location>
</feature>
<feature type="helix" evidence="167">
    <location>
        <begin position="1140"/>
        <end position="1167"/>
    </location>
</feature>
<feature type="strand" evidence="162">
    <location>
        <begin position="1204"/>
        <end position="1207"/>
    </location>
</feature>
<feature type="strand" evidence="165">
    <location>
        <begin position="1210"/>
        <end position="1220"/>
    </location>
</feature>
<feature type="strand" evidence="165">
    <location>
        <begin position="1226"/>
        <end position="1234"/>
    </location>
</feature>
<feature type="strand" evidence="165">
    <location>
        <begin position="1239"/>
        <end position="1243"/>
    </location>
</feature>
<feature type="helix" evidence="165">
    <location>
        <begin position="1250"/>
        <end position="1257"/>
    </location>
</feature>
<feature type="strand" evidence="165">
    <location>
        <begin position="1261"/>
        <end position="1269"/>
    </location>
</feature>
<feature type="helix" evidence="167">
    <location>
        <begin position="1274"/>
        <end position="1276"/>
    </location>
</feature>
<feature type="helix" evidence="165">
    <location>
        <begin position="1279"/>
        <end position="1283"/>
    </location>
</feature>
<feature type="strand" evidence="165">
    <location>
        <begin position="1286"/>
        <end position="1290"/>
    </location>
</feature>
<feature type="strand" evidence="165">
    <location>
        <begin position="1297"/>
        <end position="1299"/>
    </location>
</feature>
<feature type="helix" evidence="165">
    <location>
        <begin position="1300"/>
        <end position="1304"/>
    </location>
</feature>
<feature type="helix" evidence="165">
    <location>
        <begin position="1312"/>
        <end position="1321"/>
    </location>
</feature>
<feature type="helix" evidence="165">
    <location>
        <begin position="1325"/>
        <end position="1329"/>
    </location>
</feature>
<feature type="strand" evidence="167">
    <location>
        <begin position="1331"/>
        <end position="1333"/>
    </location>
</feature>
<feature type="helix" evidence="165">
    <location>
        <begin position="1334"/>
        <end position="1336"/>
    </location>
</feature>
<feature type="turn" evidence="165">
    <location>
        <begin position="1341"/>
        <end position="1345"/>
    </location>
</feature>
<feature type="helix" evidence="165">
    <location>
        <begin position="1348"/>
        <end position="1361"/>
    </location>
</feature>
<feature type="strand" evidence="165">
    <location>
        <begin position="1365"/>
        <end position="1371"/>
    </location>
</feature>
<feature type="helix" evidence="165">
    <location>
        <begin position="1372"/>
        <end position="1375"/>
    </location>
</feature>
<feature type="helix" evidence="165">
    <location>
        <begin position="1378"/>
        <end position="1387"/>
    </location>
</feature>
<feature type="turn" evidence="165">
    <location>
        <begin position="1388"/>
        <end position="1394"/>
    </location>
</feature>
<feature type="strand" evidence="165">
    <location>
        <begin position="1395"/>
        <end position="1403"/>
    </location>
</feature>
<feature type="helix" evidence="165">
    <location>
        <begin position="1404"/>
        <end position="1406"/>
    </location>
</feature>
<feature type="strand" evidence="165">
    <location>
        <begin position="1411"/>
        <end position="1415"/>
    </location>
</feature>
<feature type="strand" evidence="165">
    <location>
        <begin position="1422"/>
        <end position="1427"/>
    </location>
</feature>
<feature type="helix" evidence="167">
    <location>
        <begin position="1435"/>
        <end position="1439"/>
    </location>
</feature>
<feature type="helix" evidence="167">
    <location>
        <begin position="1443"/>
        <end position="1449"/>
    </location>
</feature>
<feature type="strand" evidence="158">
    <location>
        <begin position="1478"/>
        <end position="1480"/>
    </location>
</feature>
<accession>P13569</accession>
<accession>Q20BG8</accession>
<accession>Q20BH2</accession>
<accession>Q2I0A1</accession>
<accession>Q2I102</accession>
<proteinExistence type="evidence at protein level"/>
<keyword id="KW-0002">3D-structure</keyword>
<keyword id="KW-0025">Alternative splicing</keyword>
<keyword id="KW-0067">ATP-binding</keyword>
<keyword id="KW-1003">Cell membrane</keyword>
<keyword id="KW-0868">Chloride</keyword>
<keyword id="KW-0869">Chloride channel</keyword>
<keyword id="KW-0225">Disease variant</keyword>
<keyword id="KW-0256">Endoplasmic reticulum</keyword>
<keyword id="KW-0967">Endosome</keyword>
<keyword id="KW-0325">Glycoprotein</keyword>
<keyword id="KW-0407">Ion channel</keyword>
<keyword id="KW-0406">Ion transport</keyword>
<keyword id="KW-0413">Isomerase</keyword>
<keyword id="KW-1017">Isopeptide bond</keyword>
<keyword id="KW-0449">Lipoprotein</keyword>
<keyword id="KW-0472">Membrane</keyword>
<keyword id="KW-0547">Nucleotide-binding</keyword>
<keyword id="KW-0539">Nucleus</keyword>
<keyword id="KW-0564">Palmitate</keyword>
<keyword id="KW-0597">Phosphoprotein</keyword>
<keyword id="KW-1267">Proteomics identification</keyword>
<keyword id="KW-1185">Reference proteome</keyword>
<keyword id="KW-0677">Repeat</keyword>
<keyword id="KW-0812">Transmembrane</keyword>
<keyword id="KW-1133">Transmembrane helix</keyword>
<keyword id="KW-0813">Transport</keyword>
<keyword id="KW-0832">Ubl conjugation</keyword>
<organism>
    <name type="scientific">Homo sapiens</name>
    <name type="common">Human</name>
    <dbReference type="NCBI Taxonomy" id="9606"/>
    <lineage>
        <taxon>Eukaryota</taxon>
        <taxon>Metazoa</taxon>
        <taxon>Chordata</taxon>
        <taxon>Craniata</taxon>
        <taxon>Vertebrata</taxon>
        <taxon>Euteleostomi</taxon>
        <taxon>Mammalia</taxon>
        <taxon>Eutheria</taxon>
        <taxon>Euarchontoglires</taxon>
        <taxon>Primates</taxon>
        <taxon>Haplorrhini</taxon>
        <taxon>Catarrhini</taxon>
        <taxon>Hominidae</taxon>
        <taxon>Homo</taxon>
    </lineage>
</organism>
<sequence length="1480" mass="168142">MQRSPLEKASVVSKLFFSWTRPILRKGYRQRLELSDIYQIPSVDSADNLSEKLEREWDRELASKKNPKLINALRRCFFWRFMFYGIFLYLGEVTKAVQPLLLGRIIASYDPDNKEERSIAIYLGIGLCLLFIVRTLLLHPAIFGLHHIGMQMRIAMFSLIYKKTLKLSSRVLDKISIGQLVSLLSNNLNKFDEGLALAHFVWIAPLQVALLMGLIWELLQASAFCGLGFLIVLALFQAGLGRMMMKYRDQRAGKISERLVITSEMIENIQSVKAYCWEEAMEKMIENLRQTELKLTRKAAYVRYFNSSAFFFSGFFVVFLSVLPYALIKGIILRKIFTTISFCIVLRMAVTRQFPWAVQTWYDSLGAINKIQDFLQKQEYKTLEYNLTTTEVVMENVTAFWEEGFGELFEKAKQNNNNRKTSNGDDSLFFSNFSLLGTPVLKDINFKIERGQLLAVAGSTGAGKTSLLMVIMGELEPSEGKIKHSGRISFCSQFSWIMPGTIKENIIFGVSYDEYRYRSVIKACQLEEDISKFAEKDNIVLGEGGITLSGGQRARISLARAVYKDADLYLLDSPFGYLDVLTEKEIFESCVCKLMANKTRILVTSKMEHLKKADKILILHEGSSYFYGTFSELQNLQPDFSSKLMGCDSFDQFSAERRNSILTETLHRFSLEGDAPVSWTETKKQSFKQTGEFGEKRKNSILNPINSIRKFSIVQKTPLQMNGIEEDSDEPLERRLSLVPDSEQGEAILPRISVISTGPTLQARRRQSVLNLMTHSVNQGQNIHRKTTASTRKVSLAPQANLTELDIYSRRLSQETGLEISEEINEEDLKECFFDDMESIPAVTTWNTYLRYITVHKSLIFVLIWCLVIFLAEVAASLVVLWLLGNTPLQDKGNSTHSRNNSYAVIITSTSSYYVFYIYVGVADTLLAMGFFRGLPLVHTLITVSKILHHKMLHSVLQAPMSTLNTLKAGGILNRFSKDIAILDDLLPLTIFDFIQLLLIVIGAIAVVAVLQPYIFVATVPVIVAFIMLRAYFLQTSQQLKQLESEGRSPIFTHLVTSLKGLWTLRAFGRQPYFETLFHKALNLHTANWFLYLSTLRWFQMRIEMIFVIFFIAVTFISILTTGEGEGRVGIILTLAMNIMSTLQWAVNSSIDVDSLMRSVSRVFKFIDMPTEGKPTKSTKPYKNGQLSKVMIIENSHVKKDDIWPSGGQMTVKDLTAKYTEGGNAILENISFSISPGQRVGLLGRTGSGKSTLLSAFLRLLNTEGEIQIDGVSWDSITLQQWRKAFGVIPQKVFIFSGTFRKNLDPYEQWSDQEIWKVADEVGLRSVIEQFPGKLDFVLVDGGCVLSHGHKQLMCLARSVLSKAKILLLDEPSAHLDPVTYQIIRRTLKQAFADCTVILCEHRIEAMLECQQFLVIEENKVRQYDSIQKLLNERSLFRQAISPSDRVKLFPHRNSSKCKSKPQIAALKEETEEEVQDTRL</sequence>
<dbReference type="EC" id="5.6.1.6" evidence="14 34 70 114"/>
<dbReference type="EMBL" id="M28668">
    <property type="protein sequence ID" value="AAA35680.1"/>
    <property type="molecule type" value="mRNA"/>
</dbReference>
<dbReference type="EMBL" id="M55131">
    <property type="protein sequence ID" value="AAC13657.1"/>
    <property type="molecule type" value="Genomic_DNA"/>
</dbReference>
<dbReference type="EMBL" id="M55106">
    <property type="protein sequence ID" value="AAC13657.1"/>
    <property type="status" value="JOINED"/>
    <property type="molecule type" value="Genomic_DNA"/>
</dbReference>
<dbReference type="EMBL" id="M55107">
    <property type="protein sequence ID" value="AAC13657.1"/>
    <property type="status" value="JOINED"/>
    <property type="molecule type" value="Genomic_DNA"/>
</dbReference>
<dbReference type="EMBL" id="M55108">
    <property type="protein sequence ID" value="AAC13657.1"/>
    <property type="status" value="JOINED"/>
    <property type="molecule type" value="Genomic_DNA"/>
</dbReference>
<dbReference type="EMBL" id="M55110">
    <property type="protein sequence ID" value="AAC13657.1"/>
    <property type="status" value="JOINED"/>
    <property type="molecule type" value="Genomic_DNA"/>
</dbReference>
<dbReference type="EMBL" id="M55111">
    <property type="protein sequence ID" value="AAC13657.1"/>
    <property type="status" value="JOINED"/>
    <property type="molecule type" value="Genomic_DNA"/>
</dbReference>
<dbReference type="EMBL" id="M55112">
    <property type="protein sequence ID" value="AAC13657.1"/>
    <property type="status" value="JOINED"/>
    <property type="molecule type" value="Genomic_DNA"/>
</dbReference>
<dbReference type="EMBL" id="M55113">
    <property type="protein sequence ID" value="AAC13657.1"/>
    <property type="status" value="JOINED"/>
    <property type="molecule type" value="Genomic_DNA"/>
</dbReference>
<dbReference type="EMBL" id="M55114">
    <property type="protein sequence ID" value="AAC13657.1"/>
    <property type="status" value="JOINED"/>
    <property type="molecule type" value="Genomic_DNA"/>
</dbReference>
<dbReference type="EMBL" id="M55115">
    <property type="protein sequence ID" value="AAC13657.1"/>
    <property type="status" value="JOINED"/>
    <property type="molecule type" value="Genomic_DNA"/>
</dbReference>
<dbReference type="EMBL" id="M55116">
    <property type="protein sequence ID" value="AAC13657.1"/>
    <property type="status" value="JOINED"/>
    <property type="molecule type" value="Genomic_DNA"/>
</dbReference>
<dbReference type="EMBL" id="M55117">
    <property type="protein sequence ID" value="AAC13657.1"/>
    <property type="status" value="JOINED"/>
    <property type="molecule type" value="Genomic_DNA"/>
</dbReference>
<dbReference type="EMBL" id="M55118">
    <property type="protein sequence ID" value="AAC13657.1"/>
    <property type="status" value="JOINED"/>
    <property type="molecule type" value="Genomic_DNA"/>
</dbReference>
<dbReference type="EMBL" id="M55119">
    <property type="protein sequence ID" value="AAC13657.1"/>
    <property type="status" value="JOINED"/>
    <property type="molecule type" value="Genomic_DNA"/>
</dbReference>
<dbReference type="EMBL" id="M55120">
    <property type="protein sequence ID" value="AAC13657.1"/>
    <property type="status" value="JOINED"/>
    <property type="molecule type" value="Genomic_DNA"/>
</dbReference>
<dbReference type="EMBL" id="M55121">
    <property type="protein sequence ID" value="AAC13657.1"/>
    <property type="status" value="JOINED"/>
    <property type="molecule type" value="Genomic_DNA"/>
</dbReference>
<dbReference type="EMBL" id="M55122">
    <property type="protein sequence ID" value="AAC13657.1"/>
    <property type="status" value="JOINED"/>
    <property type="molecule type" value="Genomic_DNA"/>
</dbReference>
<dbReference type="EMBL" id="M55123">
    <property type="protein sequence ID" value="AAC13657.1"/>
    <property type="status" value="JOINED"/>
    <property type="molecule type" value="Genomic_DNA"/>
</dbReference>
<dbReference type="EMBL" id="M55124">
    <property type="protein sequence ID" value="AAC13657.1"/>
    <property type="status" value="JOINED"/>
    <property type="molecule type" value="Genomic_DNA"/>
</dbReference>
<dbReference type="EMBL" id="M55125">
    <property type="protein sequence ID" value="AAC13657.1"/>
    <property type="status" value="JOINED"/>
    <property type="molecule type" value="Genomic_DNA"/>
</dbReference>
<dbReference type="EMBL" id="M55126">
    <property type="protein sequence ID" value="AAC13657.1"/>
    <property type="status" value="JOINED"/>
    <property type="molecule type" value="Genomic_DNA"/>
</dbReference>
<dbReference type="EMBL" id="M55127">
    <property type="protein sequence ID" value="AAC13657.1"/>
    <property type="status" value="JOINED"/>
    <property type="molecule type" value="Genomic_DNA"/>
</dbReference>
<dbReference type="EMBL" id="M55128">
    <property type="protein sequence ID" value="AAC13657.1"/>
    <property type="status" value="JOINED"/>
    <property type="molecule type" value="Genomic_DNA"/>
</dbReference>
<dbReference type="EMBL" id="M55129">
    <property type="protein sequence ID" value="AAC13657.1"/>
    <property type="status" value="JOINED"/>
    <property type="molecule type" value="Genomic_DNA"/>
</dbReference>
<dbReference type="EMBL" id="M55130">
    <property type="protein sequence ID" value="AAC13657.1"/>
    <property type="status" value="JOINED"/>
    <property type="molecule type" value="Genomic_DNA"/>
</dbReference>
<dbReference type="EMBL" id="DQ354388">
    <property type="protein sequence ID" value="ABC79050.1"/>
    <property type="molecule type" value="Genomic_DNA"/>
</dbReference>
<dbReference type="EMBL" id="DQ354389">
    <property type="protein sequence ID" value="ABC79052.1"/>
    <property type="molecule type" value="Genomic_DNA"/>
</dbReference>
<dbReference type="EMBL" id="DQ354390">
    <property type="protein sequence ID" value="ABC79054.1"/>
    <property type="molecule type" value="Genomic_DNA"/>
</dbReference>
<dbReference type="EMBL" id="DQ354391">
    <property type="protein sequence ID" value="ABC79056.1"/>
    <property type="molecule type" value="Genomic_DNA"/>
</dbReference>
<dbReference type="EMBL" id="DQ356258">
    <property type="protein sequence ID" value="ABC87055.1"/>
    <property type="molecule type" value="Genomic_DNA"/>
</dbReference>
<dbReference type="EMBL" id="DQ356259">
    <property type="protein sequence ID" value="ABC87057.1"/>
    <property type="molecule type" value="Genomic_DNA"/>
</dbReference>
<dbReference type="EMBL" id="DQ356261">
    <property type="protein sequence ID" value="ABC87061.1"/>
    <property type="molecule type" value="Genomic_DNA"/>
</dbReference>
<dbReference type="EMBL" id="DQ356262">
    <property type="protein sequence ID" value="ABC87063.1"/>
    <property type="molecule type" value="Genomic_DNA"/>
</dbReference>
<dbReference type="EMBL" id="DQ356263">
    <property type="protein sequence ID" value="ABC87065.1"/>
    <property type="molecule type" value="Genomic_DNA"/>
</dbReference>
<dbReference type="EMBL" id="DQ356264">
    <property type="protein sequence ID" value="ABC87067.1"/>
    <property type="molecule type" value="Genomic_DNA"/>
</dbReference>
<dbReference type="EMBL" id="DQ388128">
    <property type="protein sequence ID" value="ABD72183.1"/>
    <property type="molecule type" value="Genomic_DNA"/>
</dbReference>
<dbReference type="EMBL" id="DQ388129">
    <property type="protein sequence ID" value="ABD72185.1"/>
    <property type="molecule type" value="Genomic_DNA"/>
</dbReference>
<dbReference type="EMBL" id="DQ388131">
    <property type="protein sequence ID" value="ABD72189.1"/>
    <property type="molecule type" value="Genomic_DNA"/>
</dbReference>
<dbReference type="EMBL" id="DQ388132">
    <property type="protein sequence ID" value="ABD72191.1"/>
    <property type="molecule type" value="Genomic_DNA"/>
</dbReference>
<dbReference type="EMBL" id="DQ388133">
    <property type="protein sequence ID" value="ABD72193.1"/>
    <property type="molecule type" value="Genomic_DNA"/>
</dbReference>
<dbReference type="EMBL" id="DQ388134">
    <property type="protein sequence ID" value="ABD72195.1"/>
    <property type="molecule type" value="Genomic_DNA"/>
</dbReference>
<dbReference type="EMBL" id="DQ388135">
    <property type="protein sequence ID" value="ABD72197.1"/>
    <property type="molecule type" value="Genomic_DNA"/>
</dbReference>
<dbReference type="EMBL" id="DQ388138">
    <property type="protein sequence ID" value="ABD72203.1"/>
    <property type="molecule type" value="Genomic_DNA"/>
</dbReference>
<dbReference type="EMBL" id="DQ388139">
    <property type="protein sequence ID" value="ABD72205.1"/>
    <property type="molecule type" value="Genomic_DNA"/>
</dbReference>
<dbReference type="EMBL" id="DQ388140">
    <property type="protein sequence ID" value="ABD72207.1"/>
    <property type="molecule type" value="Genomic_DNA"/>
</dbReference>
<dbReference type="EMBL" id="DQ388141">
    <property type="protein sequence ID" value="ABD72209.1"/>
    <property type="molecule type" value="Genomic_DNA"/>
</dbReference>
<dbReference type="EMBL" id="DQ388142">
    <property type="protein sequence ID" value="ABD72211.1"/>
    <property type="molecule type" value="Genomic_DNA"/>
</dbReference>
<dbReference type="EMBL" id="DQ388143">
    <property type="protein sequence ID" value="ABD72213.1"/>
    <property type="molecule type" value="Genomic_DNA"/>
</dbReference>
<dbReference type="EMBL" id="DQ388145">
    <property type="protein sequence ID" value="ABD72217.1"/>
    <property type="molecule type" value="Genomic_DNA"/>
</dbReference>
<dbReference type="EMBL" id="AC000061">
    <property type="status" value="NOT_ANNOTATED_CDS"/>
    <property type="molecule type" value="Genomic_DNA"/>
</dbReference>
<dbReference type="EMBL" id="AC000111">
    <property type="status" value="NOT_ANNOTATED_CDS"/>
    <property type="molecule type" value="Genomic_DNA"/>
</dbReference>
<dbReference type="EMBL" id="CH236947">
    <property type="protein sequence ID" value="EAL24353.1"/>
    <property type="molecule type" value="Genomic_DNA"/>
</dbReference>
<dbReference type="EMBL" id="M65196">
    <property type="protein sequence ID" value="AAA51979.1"/>
    <property type="molecule type" value="Genomic_DNA"/>
</dbReference>
<dbReference type="EMBL" id="M65197">
    <property type="protein sequence ID" value="AAA51980.1"/>
    <property type="molecule type" value="Genomic_DNA"/>
</dbReference>
<dbReference type="CCDS" id="CCDS5773.1">
    <molecule id="P13569-1"/>
</dbReference>
<dbReference type="PIR" id="A39069">
    <property type="entry name" value="DVHUCF"/>
</dbReference>
<dbReference type="RefSeq" id="NP_000483.3">
    <molecule id="P13569-1"/>
    <property type="nucleotide sequence ID" value="NM_000492.3"/>
</dbReference>
<dbReference type="PDB" id="1XMI">
    <property type="method" value="X-ray"/>
    <property type="resolution" value="2.25 A"/>
    <property type="chains" value="A/B/C/D/E=389-678"/>
</dbReference>
<dbReference type="PDB" id="1XMJ">
    <property type="method" value="X-ray"/>
    <property type="resolution" value="2.30 A"/>
    <property type="chains" value="A=389-677"/>
</dbReference>
<dbReference type="PDB" id="2BBO">
    <property type="method" value="X-ray"/>
    <property type="resolution" value="2.55 A"/>
    <property type="chains" value="A=389-678"/>
</dbReference>
<dbReference type="PDB" id="2BBS">
    <property type="method" value="X-ray"/>
    <property type="resolution" value="2.05 A"/>
    <property type="chains" value="A/B=389-677"/>
</dbReference>
<dbReference type="PDB" id="2BBT">
    <property type="method" value="X-ray"/>
    <property type="resolution" value="2.30 A"/>
    <property type="chains" value="A/B=389-678"/>
</dbReference>
<dbReference type="PDB" id="2LOB">
    <property type="method" value="NMR"/>
    <property type="chains" value="B=1473-1480"/>
</dbReference>
<dbReference type="PDB" id="2PZE">
    <property type="method" value="X-ray"/>
    <property type="resolution" value="1.70 A"/>
    <property type="chains" value="A/B=387-646"/>
</dbReference>
<dbReference type="PDB" id="2PZF">
    <property type="method" value="X-ray"/>
    <property type="resolution" value="2.00 A"/>
    <property type="chains" value="A/B=387-646"/>
</dbReference>
<dbReference type="PDB" id="2PZG">
    <property type="method" value="X-ray"/>
    <property type="resolution" value="1.80 A"/>
    <property type="chains" value="A/B=375-646"/>
</dbReference>
<dbReference type="PDB" id="3GD7">
    <property type="method" value="X-ray"/>
    <property type="resolution" value="2.70 A"/>
    <property type="chains" value="A/B/C/D=1193-1427"/>
</dbReference>
<dbReference type="PDB" id="3ISW">
    <property type="method" value="X-ray"/>
    <property type="resolution" value="2.80 A"/>
    <property type="chains" value="C=5-20"/>
</dbReference>
<dbReference type="PDB" id="4WZ6">
    <property type="method" value="X-ray"/>
    <property type="resolution" value="2.05 A"/>
    <property type="chains" value="A=389-678"/>
</dbReference>
<dbReference type="PDB" id="5D2D">
    <property type="method" value="X-ray"/>
    <property type="resolution" value="2.10 A"/>
    <property type="chains" value="C=747-774"/>
</dbReference>
<dbReference type="PDB" id="5D3E">
    <property type="method" value="X-ray"/>
    <property type="resolution" value="2.75 A"/>
    <property type="chains" value="C/G/K=762-801"/>
</dbReference>
<dbReference type="PDB" id="5D3F">
    <property type="method" value="X-ray"/>
    <property type="resolution" value="2.74 A"/>
    <property type="chains" value="C=747-774"/>
</dbReference>
<dbReference type="PDB" id="5TF7">
    <property type="method" value="X-ray"/>
    <property type="resolution" value="1.93 A"/>
    <property type="chains" value="A=387-646"/>
</dbReference>
<dbReference type="PDB" id="5TF8">
    <property type="method" value="X-ray"/>
    <property type="resolution" value="1.86 A"/>
    <property type="chains" value="A=387-646"/>
</dbReference>
<dbReference type="PDB" id="5TFA">
    <property type="method" value="X-ray"/>
    <property type="resolution" value="1.87 A"/>
    <property type="chains" value="A=387-646"/>
</dbReference>
<dbReference type="PDB" id="5TFB">
    <property type="method" value="X-ray"/>
    <property type="resolution" value="1.87 A"/>
    <property type="chains" value="A=387-646"/>
</dbReference>
<dbReference type="PDB" id="5TFC">
    <property type="method" value="X-ray"/>
    <property type="resolution" value="1.92 A"/>
    <property type="chains" value="A=387-646"/>
</dbReference>
<dbReference type="PDB" id="5TFD">
    <property type="method" value="X-ray"/>
    <property type="resolution" value="1.89 A"/>
    <property type="chains" value="A=387-646"/>
</dbReference>
<dbReference type="PDB" id="5TFF">
    <property type="method" value="X-ray"/>
    <property type="resolution" value="1.89 A"/>
    <property type="chains" value="A=387-646"/>
</dbReference>
<dbReference type="PDB" id="5TFG">
    <property type="method" value="X-ray"/>
    <property type="resolution" value="1.91 A"/>
    <property type="chains" value="A=387-646"/>
</dbReference>
<dbReference type="PDB" id="5TFI">
    <property type="method" value="X-ray"/>
    <property type="resolution" value="1.89 A"/>
    <property type="chains" value="A=387-646"/>
</dbReference>
<dbReference type="PDB" id="5TFJ">
    <property type="method" value="X-ray"/>
    <property type="resolution" value="1.85 A"/>
    <property type="chains" value="A=387-646"/>
</dbReference>
<dbReference type="PDB" id="5TGK">
    <property type="method" value="X-ray"/>
    <property type="resolution" value="1.91 A"/>
    <property type="chains" value="A=387-646"/>
</dbReference>
<dbReference type="PDB" id="5UAK">
    <property type="method" value="EM"/>
    <property type="resolution" value="3.87 A"/>
    <property type="chains" value="A=1-1480"/>
</dbReference>
<dbReference type="PDB" id="6GJQ">
    <property type="method" value="X-ray"/>
    <property type="resolution" value="2.49 A"/>
    <property type="chains" value="A/C/E/G=387-646"/>
</dbReference>
<dbReference type="PDB" id="6GJS">
    <property type="method" value="X-ray"/>
    <property type="resolution" value="1.95 A"/>
    <property type="chains" value="A=387-646"/>
</dbReference>
<dbReference type="PDB" id="6GJU">
    <property type="method" value="X-ray"/>
    <property type="resolution" value="2.60 A"/>
    <property type="chains" value="A=387-646"/>
</dbReference>
<dbReference type="PDB" id="6GK4">
    <property type="method" value="X-ray"/>
    <property type="resolution" value="2.91 A"/>
    <property type="chains" value="A/D=387-646"/>
</dbReference>
<dbReference type="PDB" id="6GKD">
    <property type="method" value="X-ray"/>
    <property type="resolution" value="2.99 A"/>
    <property type="chains" value="A/F/I/L/O/R=387-646"/>
</dbReference>
<dbReference type="PDB" id="6HEP">
    <property type="method" value="X-ray"/>
    <property type="resolution" value="1.86 A"/>
    <property type="chains" value="E/F=747-774"/>
</dbReference>
<dbReference type="PDB" id="6MSM">
    <property type="method" value="EM"/>
    <property type="resolution" value="3.20 A"/>
    <property type="chains" value="A=1-1480"/>
</dbReference>
<dbReference type="PDB" id="6O1V">
    <property type="method" value="EM"/>
    <property type="resolution" value="3.20 A"/>
    <property type="chains" value="A=1-1480"/>
</dbReference>
<dbReference type="PDB" id="6O2P">
    <property type="method" value="EM"/>
    <property type="resolution" value="3.30 A"/>
    <property type="chains" value="A=1-1480"/>
</dbReference>
<dbReference type="PDB" id="6UK1">
    <property type="method" value="X-ray"/>
    <property type="resolution" value="2.69 A"/>
    <property type="chains" value="A/B/C/D=1202-1430"/>
</dbReference>
<dbReference type="PDB" id="6WBS">
    <property type="method" value="X-ray"/>
    <property type="resolution" value="1.86 A"/>
    <property type="chains" value="A/B=388-646"/>
</dbReference>
<dbReference type="PDB" id="6ZE1">
    <property type="method" value="X-ray"/>
    <property type="resolution" value="2.71 A"/>
    <property type="chains" value="A=387-646"/>
</dbReference>
<dbReference type="PDB" id="7QI1">
    <property type="method" value="X-ray"/>
    <property type="resolution" value="1.76 A"/>
    <property type="chains" value="E/F=747-774"/>
</dbReference>
<dbReference type="PDB" id="7SV7">
    <property type="method" value="EM"/>
    <property type="resolution" value="3.80 A"/>
    <property type="chains" value="A=1-1480"/>
</dbReference>
<dbReference type="PDB" id="7SVD">
    <property type="method" value="EM"/>
    <property type="resolution" value="2.70 A"/>
    <property type="chains" value="A=1-1480"/>
</dbReference>
<dbReference type="PDB" id="7SVR">
    <property type="method" value="EM"/>
    <property type="resolution" value="3.90 A"/>
    <property type="chains" value="A=1-1480"/>
</dbReference>
<dbReference type="PDB" id="8EIG">
    <property type="method" value="EM"/>
    <property type="resolution" value="3.60 A"/>
    <property type="chains" value="A=1-1480"/>
</dbReference>
<dbReference type="PDB" id="8EIO">
    <property type="method" value="EM"/>
    <property type="resolution" value="2.80 A"/>
    <property type="chains" value="A=1-1480"/>
</dbReference>
<dbReference type="PDB" id="8EIQ">
    <property type="method" value="EM"/>
    <property type="resolution" value="3.00 A"/>
    <property type="chains" value="A=1-1480"/>
</dbReference>
<dbReference type="PDB" id="8EJ1">
    <property type="method" value="EM"/>
    <property type="resolution" value="6.90 A"/>
    <property type="chains" value="A=1-1480"/>
</dbReference>
<dbReference type="PDB" id="8FZQ">
    <property type="method" value="EM"/>
    <property type="resolution" value="4.30 A"/>
    <property type="chains" value="A=1-1480"/>
</dbReference>
<dbReference type="PDB" id="8GLS">
    <property type="method" value="EM"/>
    <property type="resolution" value="3.80 A"/>
    <property type="chains" value="A=1-1480"/>
</dbReference>
<dbReference type="PDB" id="8UBR">
    <property type="method" value="EM"/>
    <property type="resolution" value="2.70 A"/>
    <property type="chains" value="A=1-1480"/>
</dbReference>
<dbReference type="PDB" id="8V7Z">
    <property type="method" value="EM"/>
    <property type="resolution" value="3.40 A"/>
    <property type="chains" value="A=11-1431"/>
</dbReference>
<dbReference type="PDB" id="8V81">
    <property type="method" value="EM"/>
    <property type="resolution" value="3.60 A"/>
    <property type="chains" value="A=3-1440"/>
</dbReference>
<dbReference type="PDB" id="9DW4">
    <property type="method" value="EM"/>
    <property type="resolution" value="9.00 A"/>
    <property type="chains" value="A=1-1480"/>
</dbReference>
<dbReference type="PDB" id="9DW5">
    <property type="method" value="EM"/>
    <property type="resolution" value="3.80 A"/>
    <property type="chains" value="A=1-1480"/>
</dbReference>
<dbReference type="PDB" id="9DW7">
    <property type="method" value="EM"/>
    <property type="resolution" value="6.00 A"/>
    <property type="chains" value="A=1-1480"/>
</dbReference>
<dbReference type="PDB" id="9DW8">
    <property type="method" value="EM"/>
    <property type="resolution" value="3.50 A"/>
    <property type="chains" value="A=1-1480"/>
</dbReference>
<dbReference type="PDB" id="9DW9">
    <property type="method" value="EM"/>
    <property type="resolution" value="2.80 A"/>
    <property type="chains" value="A=1-1480"/>
</dbReference>
<dbReference type="PDBsum" id="1XMI"/>
<dbReference type="PDBsum" id="1XMJ"/>
<dbReference type="PDBsum" id="2BBO"/>
<dbReference type="PDBsum" id="2BBS"/>
<dbReference type="PDBsum" id="2BBT"/>
<dbReference type="PDBsum" id="2LOB"/>
<dbReference type="PDBsum" id="2PZE"/>
<dbReference type="PDBsum" id="2PZF"/>
<dbReference type="PDBsum" id="2PZG"/>
<dbReference type="PDBsum" id="3GD7"/>
<dbReference type="PDBsum" id="3ISW"/>
<dbReference type="PDBsum" id="4WZ6"/>
<dbReference type="PDBsum" id="5D2D"/>
<dbReference type="PDBsum" id="5D3E"/>
<dbReference type="PDBsum" id="5D3F"/>
<dbReference type="PDBsum" id="5TF7"/>
<dbReference type="PDBsum" id="5TF8"/>
<dbReference type="PDBsum" id="5TFA"/>
<dbReference type="PDBsum" id="5TFB"/>
<dbReference type="PDBsum" id="5TFC"/>
<dbReference type="PDBsum" id="5TFD"/>
<dbReference type="PDBsum" id="5TFF"/>
<dbReference type="PDBsum" id="5TFG"/>
<dbReference type="PDBsum" id="5TFI"/>
<dbReference type="PDBsum" id="5TFJ"/>
<dbReference type="PDBsum" id="5TGK"/>
<dbReference type="PDBsum" id="5UAK"/>
<dbReference type="PDBsum" id="6GJQ"/>
<dbReference type="PDBsum" id="6GJS"/>
<dbReference type="PDBsum" id="6GJU"/>
<dbReference type="PDBsum" id="6GK4"/>
<dbReference type="PDBsum" id="6GKD"/>
<dbReference type="PDBsum" id="6HEP"/>
<dbReference type="PDBsum" id="6MSM"/>
<dbReference type="PDBsum" id="6O1V"/>
<dbReference type="PDBsum" id="6O2P"/>
<dbReference type="PDBsum" id="6UK1"/>
<dbReference type="PDBsum" id="6WBS"/>
<dbReference type="PDBsum" id="6ZE1"/>
<dbReference type="PDBsum" id="7QI1"/>
<dbReference type="PDBsum" id="7SV7"/>
<dbReference type="PDBsum" id="7SVD"/>
<dbReference type="PDBsum" id="7SVR"/>
<dbReference type="PDBsum" id="8EIG"/>
<dbReference type="PDBsum" id="8EIO"/>
<dbReference type="PDBsum" id="8EIQ"/>
<dbReference type="PDBsum" id="8EJ1"/>
<dbReference type="PDBsum" id="8FZQ"/>
<dbReference type="PDBsum" id="8GLS"/>
<dbReference type="PDBsum" id="8UBR"/>
<dbReference type="PDBsum" id="8V7Z"/>
<dbReference type="PDBsum" id="8V81"/>
<dbReference type="PDBsum" id="9DW4"/>
<dbReference type="PDBsum" id="9DW5"/>
<dbReference type="PDBsum" id="9DW7"/>
<dbReference type="PDBsum" id="9DW8"/>
<dbReference type="PDBsum" id="9DW9"/>
<dbReference type="BMRB" id="P13569"/>
<dbReference type="EMDB" id="EMD-0606"/>
<dbReference type="EMDB" id="EMD-0611"/>
<dbReference type="EMDB" id="EMD-25445"/>
<dbReference type="EMDB" id="EMD-25447"/>
<dbReference type="EMDB" id="EMD-25452"/>
<dbReference type="EMDB" id="EMD-28155"/>
<dbReference type="EMDB" id="EMD-28160"/>
<dbReference type="EMDB" id="EMD-28161"/>
<dbReference type="EMDB" id="EMD-28172"/>
<dbReference type="EMDB" id="EMD-29637"/>
<dbReference type="EMDB" id="EMD-40207"/>
<dbReference type="EMDB" id="EMD-41717"/>
<dbReference type="EMDB" id="EMD-41719"/>
<dbReference type="EMDB" id="EMD-41722"/>
<dbReference type="EMDB" id="EMD-41723"/>
<dbReference type="EMDB" id="EMD-41724"/>
<dbReference type="EMDB" id="EMD-41726"/>
<dbReference type="EMDB" id="EMD-41895"/>
<dbReference type="EMDB" id="EMD-41896"/>
<dbReference type="EMDB" id="EMD-41898"/>
<dbReference type="EMDB" id="EMD-41900"/>
<dbReference type="EMDB" id="EMD-41901"/>
<dbReference type="EMDB" id="EMD-41902"/>
<dbReference type="EMDB" id="EMD-41980"/>
<dbReference type="EMDB" id="EMD-41981"/>
<dbReference type="EMDB" id="EMD-42101"/>
<dbReference type="EMDB" id="EMD-42177"/>
<dbReference type="EMDB" id="EMD-42178"/>
<dbReference type="EMDB" id="EMD-42179"/>
<dbReference type="EMDB" id="EMD-42180"/>
<dbReference type="EMDB" id="EMD-43011"/>
<dbReference type="EMDB" id="EMD-43014"/>
<dbReference type="EMDB" id="EMD-47235"/>
<dbReference type="EMDB" id="EMD-47236"/>
<dbReference type="EMDB" id="EMD-47237"/>
<dbReference type="EMDB" id="EMD-47238"/>
<dbReference type="EMDB" id="EMD-47239"/>
<dbReference type="EMDB" id="EMD-8516"/>
<dbReference type="EMDB" id="EMD-9230"/>
<dbReference type="SMR" id="P13569"/>
<dbReference type="BioGRID" id="107506">
    <property type="interactions" value="1559"/>
</dbReference>
<dbReference type="CORUM" id="P13569"/>
<dbReference type="DIP" id="DIP-32788N"/>
<dbReference type="FunCoup" id="P13569">
    <property type="interactions" value="563"/>
</dbReference>
<dbReference type="IntAct" id="P13569">
    <property type="interactions" value="3494"/>
</dbReference>
<dbReference type="MINT" id="P13569"/>
<dbReference type="STRING" id="9606.ENSP00000003084"/>
<dbReference type="BindingDB" id="P13569"/>
<dbReference type="ChEMBL" id="CHEMBL4051"/>
<dbReference type="DrugBank" id="DB00171">
    <property type="generic name" value="ATP"/>
</dbReference>
<dbReference type="DrugBank" id="DB00887">
    <property type="generic name" value="Bumetanide"/>
</dbReference>
<dbReference type="DrugBank" id="DB02587">
    <property type="generic name" value="Colforsin"/>
</dbReference>
<dbReference type="DrugBank" id="DB04941">
    <property type="generic name" value="Crofelemer"/>
</dbReference>
<dbReference type="DrugBank" id="DB04522">
    <property type="generic name" value="Dexfosfoserine"/>
</dbReference>
<dbReference type="DrugBank" id="DB09213">
    <property type="generic name" value="Dexibuprofen"/>
</dbReference>
<dbReference type="DrugBank" id="DB15444">
    <property type="generic name" value="Elexacaftor"/>
</dbReference>
<dbReference type="DrugBank" id="DB14894">
    <property type="generic name" value="Galicaftor"/>
</dbReference>
<dbReference type="DrugBank" id="DB01645">
    <property type="generic name" value="Genistein"/>
</dbReference>
<dbReference type="DrugBank" id="DB01016">
    <property type="generic name" value="Glyburide"/>
</dbReference>
<dbReference type="DrugBank" id="DB01050">
    <property type="generic name" value="Ibuprofen"/>
</dbReference>
<dbReference type="DrugBank" id="DB12959">
    <property type="generic name" value="IOWH-032"/>
</dbReference>
<dbReference type="DrugBank" id="DB08820">
    <property type="generic name" value="Ivacaftor"/>
</dbReference>
<dbReference type="DrugBank" id="DB06266">
    <property type="generic name" value="Lonidamine"/>
</dbReference>
<dbReference type="DrugBank" id="DB09280">
    <property type="generic name" value="Lumacaftor"/>
</dbReference>
<dbReference type="DrugBank" id="DB04395">
    <property type="generic name" value="Phosphoaminophosphonic Acid-Adenylate Ester"/>
</dbReference>
<dbReference type="DrugBank" id="DB11712">
    <property type="generic name" value="Tezacaftor"/>
</dbReference>
<dbReference type="DrugCentral" id="P13569"/>
<dbReference type="GuidetoPHARMACOLOGY" id="707"/>
<dbReference type="MoonProt" id="P13569"/>
<dbReference type="TCDB" id="3.A.1.202.1">
    <property type="family name" value="the atp-binding cassette (abc) superfamily"/>
</dbReference>
<dbReference type="GlyCosmos" id="P13569">
    <property type="glycosylation" value="2 sites, No reported glycans"/>
</dbReference>
<dbReference type="GlyGen" id="P13569">
    <property type="glycosylation" value="13 sites"/>
</dbReference>
<dbReference type="iPTMnet" id="P13569"/>
<dbReference type="PhosphoSitePlus" id="P13569"/>
<dbReference type="SwissPalm" id="P13569"/>
<dbReference type="BioMuta" id="CFTR"/>
<dbReference type="DMDM" id="147744553"/>
<dbReference type="jPOST" id="P13569"/>
<dbReference type="MassIVE" id="P13569"/>
<dbReference type="PaxDb" id="9606-ENSP00000003084"/>
<dbReference type="PeptideAtlas" id="P13569"/>
<dbReference type="ProteomicsDB" id="52926">
    <molecule id="P13569-1"/>
</dbReference>
<dbReference type="ProteomicsDB" id="52927">
    <molecule id="P13569-2"/>
</dbReference>
<dbReference type="ProteomicsDB" id="52928">
    <molecule id="P13569-3"/>
</dbReference>
<dbReference type="ABCD" id="P13569">
    <property type="antibodies" value="10 sequenced antibodies"/>
</dbReference>
<dbReference type="Antibodypedia" id="4530">
    <property type="antibodies" value="1170 antibodies from 41 providers"/>
</dbReference>
<dbReference type="DNASU" id="1080"/>
<dbReference type="Ensembl" id="ENST00000003084.11">
    <molecule id="P13569-1"/>
    <property type="protein sequence ID" value="ENSP00000003084.6"/>
    <property type="gene ID" value="ENSG00000001626.18"/>
</dbReference>
<dbReference type="Ensembl" id="ENST00000649781.2">
    <molecule id="P13569-2"/>
    <property type="protein sequence ID" value="ENSP00000497203.1"/>
    <property type="gene ID" value="ENSG00000001626.18"/>
</dbReference>
<dbReference type="GeneID" id="1080"/>
<dbReference type="KEGG" id="hsa:1080"/>
<dbReference type="MANE-Select" id="ENST00000003084.11">
    <property type="protein sequence ID" value="ENSP00000003084.6"/>
    <property type="RefSeq nucleotide sequence ID" value="NM_000492.4"/>
    <property type="RefSeq protein sequence ID" value="NP_000483.3"/>
</dbReference>
<dbReference type="UCSC" id="uc003vjd.4">
    <molecule id="P13569-1"/>
    <property type="organism name" value="human"/>
</dbReference>
<dbReference type="AGR" id="HGNC:1884"/>
<dbReference type="CTD" id="1080"/>
<dbReference type="DisGeNET" id="1080"/>
<dbReference type="GeneCards" id="CFTR"/>
<dbReference type="GeneReviews" id="CFTR"/>
<dbReference type="HGNC" id="HGNC:1884">
    <property type="gene designation" value="CFTR"/>
</dbReference>
<dbReference type="HPA" id="ENSG00000001626">
    <property type="expression patterns" value="Tissue enhanced (gallbladder, intestine, pancreas)"/>
</dbReference>
<dbReference type="MalaCards" id="CFTR"/>
<dbReference type="MIM" id="219700">
    <property type="type" value="phenotype"/>
</dbReference>
<dbReference type="MIM" id="277180">
    <property type="type" value="phenotype"/>
</dbReference>
<dbReference type="MIM" id="602421">
    <property type="type" value="gene"/>
</dbReference>
<dbReference type="neXtProt" id="NX_P13569"/>
<dbReference type="OpenTargets" id="ENSG00000001626"/>
<dbReference type="Orphanet" id="498359">
    <property type="disease" value="Aquagenic palmoplantar keratoderma"/>
</dbReference>
<dbReference type="Orphanet" id="48">
    <property type="disease" value="Congenital bilateral absence of vas deferens"/>
</dbReference>
<dbReference type="Orphanet" id="586">
    <property type="disease" value="Cystic fibrosis"/>
</dbReference>
<dbReference type="Orphanet" id="676">
    <property type="disease" value="Hereditary chronic pancreatitis"/>
</dbReference>
<dbReference type="Orphanet" id="60033">
    <property type="disease" value="Idiopathic bronchiectasis"/>
</dbReference>
<dbReference type="Orphanet" id="399805">
    <property type="disease" value="Male infertility with azoospermia or oligozoospermia due to single gene mutation"/>
</dbReference>
<dbReference type="PharmGKB" id="PA109"/>
<dbReference type="VEuPathDB" id="HostDB:ENSG00000001626"/>
<dbReference type="eggNOG" id="KOG0054">
    <property type="taxonomic scope" value="Eukaryota"/>
</dbReference>
<dbReference type="GeneTree" id="ENSGT00940000158567"/>
<dbReference type="InParanoid" id="P13569"/>
<dbReference type="OMA" id="CQRYLVI"/>
<dbReference type="OrthoDB" id="6500128at2759"/>
<dbReference type="PAN-GO" id="P13569">
    <property type="GO annotations" value="6 GO annotations based on evolutionary models"/>
</dbReference>
<dbReference type="PhylomeDB" id="P13569"/>
<dbReference type="TreeFam" id="TF105200"/>
<dbReference type="BioCyc" id="MetaCyc:HS00075-MONOMER"/>
<dbReference type="BRENDA" id="2.7.4.3">
    <property type="organism ID" value="2681"/>
</dbReference>
<dbReference type="BRENDA" id="5.6.1.6">
    <property type="organism ID" value="2681"/>
</dbReference>
<dbReference type="PathwayCommons" id="P13569"/>
<dbReference type="Reactome" id="R-HSA-382556">
    <property type="pathway name" value="ABC-family proteins mediated transport"/>
</dbReference>
<dbReference type="Reactome" id="R-HSA-5627083">
    <property type="pathway name" value="RHO GTPases regulate CFTR trafficking"/>
</dbReference>
<dbReference type="Reactome" id="R-HSA-5678895">
    <property type="pathway name" value="Defective CFTR causes cystic fibrosis"/>
</dbReference>
<dbReference type="Reactome" id="R-HSA-5689880">
    <property type="pathway name" value="Ub-specific processing proteases"/>
</dbReference>
<dbReference type="Reactome" id="R-HSA-8856825">
    <property type="pathway name" value="Cargo recognition for clathrin-mediated endocytosis"/>
</dbReference>
<dbReference type="Reactome" id="R-HSA-8856828">
    <property type="pathway name" value="Clathrin-mediated endocytosis"/>
</dbReference>
<dbReference type="Reactome" id="R-HSA-9013406">
    <property type="pathway name" value="RHOQ GTPase cycle"/>
</dbReference>
<dbReference type="Reactome" id="R-HSA-9613829">
    <property type="pathway name" value="Chaperone Mediated Autophagy"/>
</dbReference>
<dbReference type="Reactome" id="R-HSA-9615710">
    <property type="pathway name" value="Late endosomal microautophagy"/>
</dbReference>
<dbReference type="Reactome" id="R-HSA-9646399">
    <property type="pathway name" value="Aggrephagy"/>
</dbReference>
<dbReference type="SignaLink" id="P13569"/>
<dbReference type="SIGNOR" id="P13569"/>
<dbReference type="BioGRID-ORCS" id="1080">
    <property type="hits" value="8 hits in 1161 CRISPR screens"/>
</dbReference>
<dbReference type="ChiTaRS" id="CFTR">
    <property type="organism name" value="human"/>
</dbReference>
<dbReference type="EvolutionaryTrace" id="P13569"/>
<dbReference type="GenomeRNAi" id="1080"/>
<dbReference type="Pharos" id="P13569">
    <property type="development level" value="Tclin"/>
</dbReference>
<dbReference type="PRO" id="PR:P13569"/>
<dbReference type="Proteomes" id="UP000005640">
    <property type="component" value="Chromosome 7"/>
</dbReference>
<dbReference type="RNAct" id="P13569">
    <property type="molecule type" value="protein"/>
</dbReference>
<dbReference type="Bgee" id="ENSG00000001626">
    <property type="expression patterns" value="Expressed in body of pancreas and 118 other cell types or tissues"/>
</dbReference>
<dbReference type="ExpressionAtlas" id="P13569">
    <property type="expression patterns" value="baseline and differential"/>
</dbReference>
<dbReference type="GO" id="GO:0016324">
    <property type="term" value="C:apical plasma membrane"/>
    <property type="evidence" value="ECO:0000314"/>
    <property type="project" value="UniProtKB"/>
</dbReference>
<dbReference type="GO" id="GO:0009986">
    <property type="term" value="C:cell surface"/>
    <property type="evidence" value="ECO:0000314"/>
    <property type="project" value="UniProtKB"/>
</dbReference>
<dbReference type="GO" id="GO:0034707">
    <property type="term" value="C:chloride channel complex"/>
    <property type="evidence" value="ECO:0007669"/>
    <property type="project" value="UniProtKB-KW"/>
</dbReference>
<dbReference type="GO" id="GO:0030669">
    <property type="term" value="C:clathrin-coated endocytic vesicle membrane"/>
    <property type="evidence" value="ECO:0000304"/>
    <property type="project" value="Reactome"/>
</dbReference>
<dbReference type="GO" id="GO:0005737">
    <property type="term" value="C:cytoplasm"/>
    <property type="evidence" value="ECO:0000314"/>
    <property type="project" value="UniProtKB"/>
</dbReference>
<dbReference type="GO" id="GO:0005829">
    <property type="term" value="C:cytosol"/>
    <property type="evidence" value="ECO:0000314"/>
    <property type="project" value="UniProtKB"/>
</dbReference>
<dbReference type="GO" id="GO:0005769">
    <property type="term" value="C:early endosome"/>
    <property type="evidence" value="ECO:0000314"/>
    <property type="project" value="UniProtKB"/>
</dbReference>
<dbReference type="GO" id="GO:0031901">
    <property type="term" value="C:early endosome membrane"/>
    <property type="evidence" value="ECO:0007669"/>
    <property type="project" value="UniProtKB-SubCell"/>
</dbReference>
<dbReference type="GO" id="GO:0005789">
    <property type="term" value="C:endoplasmic reticulum membrane"/>
    <property type="evidence" value="ECO:0000314"/>
    <property type="project" value="UniProtKB"/>
</dbReference>
<dbReference type="GO" id="GO:0010008">
    <property type="term" value="C:endosome membrane"/>
    <property type="evidence" value="ECO:0000304"/>
    <property type="project" value="Reactome"/>
</dbReference>
<dbReference type="GO" id="GO:0030660">
    <property type="term" value="C:Golgi-associated vesicle membrane"/>
    <property type="evidence" value="ECO:0000304"/>
    <property type="project" value="Reactome"/>
</dbReference>
<dbReference type="GO" id="GO:0005765">
    <property type="term" value="C:lysosomal membrane"/>
    <property type="evidence" value="ECO:0000304"/>
    <property type="project" value="Reactome"/>
</dbReference>
<dbReference type="GO" id="GO:0016020">
    <property type="term" value="C:membrane"/>
    <property type="evidence" value="ECO:0000314"/>
    <property type="project" value="UniProtKB"/>
</dbReference>
<dbReference type="GO" id="GO:0005634">
    <property type="term" value="C:nucleus"/>
    <property type="evidence" value="ECO:0000250"/>
    <property type="project" value="UniProtKB"/>
</dbReference>
<dbReference type="GO" id="GO:0005886">
    <property type="term" value="C:plasma membrane"/>
    <property type="evidence" value="ECO:0000314"/>
    <property type="project" value="UniProtKB"/>
</dbReference>
<dbReference type="GO" id="GO:0032991">
    <property type="term" value="C:protein-containing complex"/>
    <property type="evidence" value="ECO:0000314"/>
    <property type="project" value="UniProtKB"/>
</dbReference>
<dbReference type="GO" id="GO:0055037">
    <property type="term" value="C:recycling endosome"/>
    <property type="evidence" value="ECO:0000314"/>
    <property type="project" value="UniProtKB"/>
</dbReference>
<dbReference type="GO" id="GO:0055038">
    <property type="term" value="C:recycling endosome membrane"/>
    <property type="evidence" value="ECO:0007669"/>
    <property type="project" value="UniProtKB-SubCell"/>
</dbReference>
<dbReference type="GO" id="GO:0071889">
    <property type="term" value="F:14-3-3 protein binding"/>
    <property type="evidence" value="ECO:0000315"/>
    <property type="project" value="DisProt"/>
</dbReference>
<dbReference type="GO" id="GO:0140359">
    <property type="term" value="F:ABC-type transporter activity"/>
    <property type="evidence" value="ECO:0007669"/>
    <property type="project" value="InterPro"/>
</dbReference>
<dbReference type="GO" id="GO:0005524">
    <property type="term" value="F:ATP binding"/>
    <property type="evidence" value="ECO:0000304"/>
    <property type="project" value="ProtInc"/>
</dbReference>
<dbReference type="GO" id="GO:0016887">
    <property type="term" value="F:ATP hydrolysis activity"/>
    <property type="evidence" value="ECO:0000314"/>
    <property type="project" value="UniProtKB"/>
</dbReference>
<dbReference type="GO" id="GO:0043225">
    <property type="term" value="F:ATPase-coupled inorganic anion transmembrane transporter activity"/>
    <property type="evidence" value="ECO:0000304"/>
    <property type="project" value="Reactome"/>
</dbReference>
<dbReference type="GO" id="GO:0042626">
    <property type="term" value="F:ATPase-coupled transmembrane transporter activity"/>
    <property type="evidence" value="ECO:0000318"/>
    <property type="project" value="GO_Central"/>
</dbReference>
<dbReference type="GO" id="GO:0015106">
    <property type="term" value="F:bicarbonate transmembrane transporter activity"/>
    <property type="evidence" value="ECO:0000314"/>
    <property type="project" value="UniProtKB"/>
</dbReference>
<dbReference type="GO" id="GO:0005254">
    <property type="term" value="F:chloride channel activity"/>
    <property type="evidence" value="ECO:0000314"/>
    <property type="project" value="UniProtKB"/>
</dbReference>
<dbReference type="GO" id="GO:0019869">
    <property type="term" value="F:chloride channel inhibitor activity"/>
    <property type="evidence" value="ECO:0000314"/>
    <property type="project" value="UniProtKB"/>
</dbReference>
<dbReference type="GO" id="GO:0017081">
    <property type="term" value="F:chloride channel regulator activity"/>
    <property type="evidence" value="ECO:0000304"/>
    <property type="project" value="Reactome"/>
</dbReference>
<dbReference type="GO" id="GO:0015108">
    <property type="term" value="F:chloride transmembrane transporter activity"/>
    <property type="evidence" value="ECO:0000250"/>
    <property type="project" value="UniProtKB"/>
</dbReference>
<dbReference type="GO" id="GO:0019899">
    <property type="term" value="F:enzyme binding"/>
    <property type="evidence" value="ECO:0000353"/>
    <property type="project" value="UniProtKB"/>
</dbReference>
<dbReference type="GO" id="GO:0005260">
    <property type="term" value="F:intracellularly ATP-gated chloride channel activity"/>
    <property type="evidence" value="ECO:0000315"/>
    <property type="project" value="UniProtKB"/>
</dbReference>
<dbReference type="GO" id="GO:0030165">
    <property type="term" value="F:PDZ domain binding"/>
    <property type="evidence" value="ECO:0000314"/>
    <property type="project" value="UniProtKB"/>
</dbReference>
<dbReference type="GO" id="GO:0051087">
    <property type="term" value="F:protein-folding chaperone binding"/>
    <property type="evidence" value="ECO:0000353"/>
    <property type="project" value="ARUK-UCL"/>
</dbReference>
<dbReference type="GO" id="GO:0106138">
    <property type="term" value="F:Sec61 translocon complex binding"/>
    <property type="evidence" value="ECO:0000314"/>
    <property type="project" value="UniProtKB"/>
</dbReference>
<dbReference type="GO" id="GO:0097186">
    <property type="term" value="P:amelogenesis"/>
    <property type="evidence" value="ECO:0000250"/>
    <property type="project" value="ARUK-UCL"/>
</dbReference>
<dbReference type="GO" id="GO:0015701">
    <property type="term" value="P:bicarbonate transport"/>
    <property type="evidence" value="ECO:0000314"/>
    <property type="project" value="UniProtKB"/>
</dbReference>
<dbReference type="GO" id="GO:0071320">
    <property type="term" value="P:cellular response to cAMP"/>
    <property type="evidence" value="ECO:0000250"/>
    <property type="project" value="UniProtKB"/>
</dbReference>
<dbReference type="GO" id="GO:1904322">
    <property type="term" value="P:cellular response to forskolin"/>
    <property type="evidence" value="ECO:0000314"/>
    <property type="project" value="UniProtKB"/>
</dbReference>
<dbReference type="GO" id="GO:1902476">
    <property type="term" value="P:chloride transmembrane transport"/>
    <property type="evidence" value="ECO:0000314"/>
    <property type="project" value="UniProtKB"/>
</dbReference>
<dbReference type="GO" id="GO:0006695">
    <property type="term" value="P:cholesterol biosynthetic process"/>
    <property type="evidence" value="ECO:0007669"/>
    <property type="project" value="Ensembl"/>
</dbReference>
<dbReference type="GO" id="GO:0030301">
    <property type="term" value="P:cholesterol transport"/>
    <property type="evidence" value="ECO:0007669"/>
    <property type="project" value="Ensembl"/>
</dbReference>
<dbReference type="GO" id="GO:0051649">
    <property type="term" value="P:establishment of localization in cell"/>
    <property type="evidence" value="ECO:0007669"/>
    <property type="project" value="Ensembl"/>
</dbReference>
<dbReference type="GO" id="GO:0051454">
    <property type="term" value="P:intracellular pH elevation"/>
    <property type="evidence" value="ECO:0000250"/>
    <property type="project" value="UniProtKB"/>
</dbReference>
<dbReference type="GO" id="GO:0060081">
    <property type="term" value="P:membrane hyperpolarization"/>
    <property type="evidence" value="ECO:0000250"/>
    <property type="project" value="UniProtKB"/>
</dbReference>
<dbReference type="GO" id="GO:0050891">
    <property type="term" value="P:multicellular organismal-level water homeostasis"/>
    <property type="evidence" value="ECO:0000315"/>
    <property type="project" value="UniProtKB"/>
</dbReference>
<dbReference type="GO" id="GO:1902161">
    <property type="term" value="P:positive regulation of cyclic nucleotide-gated ion channel activity"/>
    <property type="evidence" value="ECO:0000315"/>
    <property type="project" value="UniProtKB"/>
</dbReference>
<dbReference type="GO" id="GO:0070175">
    <property type="term" value="P:positive regulation of enamel mineralization"/>
    <property type="evidence" value="ECO:0000250"/>
    <property type="project" value="ARUK-UCL"/>
</dbReference>
<dbReference type="GO" id="GO:0045921">
    <property type="term" value="P:positive regulation of exocytosis"/>
    <property type="evidence" value="ECO:0000315"/>
    <property type="project" value="UniProtKB"/>
</dbReference>
<dbReference type="GO" id="GO:0035774">
    <property type="term" value="P:positive regulation of insulin secretion involved in cellular response to glucose stimulus"/>
    <property type="evidence" value="ECO:0000315"/>
    <property type="project" value="UniProtKB"/>
</dbReference>
<dbReference type="GO" id="GO:1902943">
    <property type="term" value="P:positive regulation of voltage-gated chloride channel activity"/>
    <property type="evidence" value="ECO:0000314"/>
    <property type="project" value="UniProtKB"/>
</dbReference>
<dbReference type="GO" id="GO:0034976">
    <property type="term" value="P:response to endoplasmic reticulum stress"/>
    <property type="evidence" value="ECO:0000314"/>
    <property type="project" value="UniProtKB"/>
</dbReference>
<dbReference type="GO" id="GO:0048240">
    <property type="term" value="P:sperm capacitation"/>
    <property type="evidence" value="ECO:0000250"/>
    <property type="project" value="UniProtKB"/>
</dbReference>
<dbReference type="GO" id="GO:0035377">
    <property type="term" value="P:transepithelial water transport"/>
    <property type="evidence" value="ECO:0000315"/>
    <property type="project" value="UniProtKB"/>
</dbReference>
<dbReference type="GO" id="GO:0055085">
    <property type="term" value="P:transmembrane transport"/>
    <property type="evidence" value="ECO:0000304"/>
    <property type="project" value="Reactome"/>
</dbReference>
<dbReference type="GO" id="GO:0006904">
    <property type="term" value="P:vesicle docking involved in exocytosis"/>
    <property type="evidence" value="ECO:0007669"/>
    <property type="project" value="Ensembl"/>
</dbReference>
<dbReference type="CDD" id="cd18594">
    <property type="entry name" value="ABC_6TM_CFTR_D1"/>
    <property type="match status" value="1"/>
</dbReference>
<dbReference type="CDD" id="cd18600">
    <property type="entry name" value="ABC_6TM_CFTR_D2"/>
    <property type="match status" value="1"/>
</dbReference>
<dbReference type="CDD" id="cd03291">
    <property type="entry name" value="ABCC_CFTR1"/>
    <property type="match status" value="1"/>
</dbReference>
<dbReference type="CDD" id="cd03289">
    <property type="entry name" value="ABCC_CFTR2"/>
    <property type="match status" value="1"/>
</dbReference>
<dbReference type="DisProt" id="DP00012"/>
<dbReference type="FunFam" id="1.20.1560.10:FF:000017">
    <property type="entry name" value="Cystic fibrosis transmembrane conductance regulator"/>
    <property type="match status" value="1"/>
</dbReference>
<dbReference type="FunFam" id="1.20.1560.10:FF:000019">
    <property type="entry name" value="Cystic fibrosis transmembrane conductance regulator"/>
    <property type="match status" value="1"/>
</dbReference>
<dbReference type="FunFam" id="3.40.50.300:FF:000581">
    <property type="entry name" value="Cystic fibrosis transmembrane conductance regulator"/>
    <property type="match status" value="1"/>
</dbReference>
<dbReference type="FunFam" id="3.40.50.300:FF:000591">
    <property type="entry name" value="Cystic fibrosis transmembrane conductance regulator"/>
    <property type="match status" value="1"/>
</dbReference>
<dbReference type="Gene3D" id="1.20.1560.10">
    <property type="entry name" value="ABC transporter type 1, transmembrane domain"/>
    <property type="match status" value="2"/>
</dbReference>
<dbReference type="Gene3D" id="3.40.50.300">
    <property type="entry name" value="P-loop containing nucleotide triphosphate hydrolases"/>
    <property type="match status" value="2"/>
</dbReference>
<dbReference type="IDEAL" id="IID00540"/>
<dbReference type="InterPro" id="IPR003593">
    <property type="entry name" value="AAA+_ATPase"/>
</dbReference>
<dbReference type="InterPro" id="IPR011527">
    <property type="entry name" value="ABC1_TM_dom"/>
</dbReference>
<dbReference type="InterPro" id="IPR036640">
    <property type="entry name" value="ABC1_TM_sf"/>
</dbReference>
<dbReference type="InterPro" id="IPR003439">
    <property type="entry name" value="ABC_transporter-like_ATP-bd"/>
</dbReference>
<dbReference type="InterPro" id="IPR017871">
    <property type="entry name" value="ABC_transporter-like_CS"/>
</dbReference>
<dbReference type="InterPro" id="IPR050173">
    <property type="entry name" value="ABC_transporter_C-like"/>
</dbReference>
<dbReference type="InterPro" id="IPR009147">
    <property type="entry name" value="CFTR/ABCC7"/>
</dbReference>
<dbReference type="InterPro" id="IPR047082">
    <property type="entry name" value="CFTR1_ATP-bd_dom1"/>
</dbReference>
<dbReference type="InterPro" id="IPR025837">
    <property type="entry name" value="CFTR_reg_dom"/>
</dbReference>
<dbReference type="InterPro" id="IPR027417">
    <property type="entry name" value="P-loop_NTPase"/>
</dbReference>
<dbReference type="NCBIfam" id="TIGR01271">
    <property type="entry name" value="CFTR_protein"/>
    <property type="match status" value="1"/>
</dbReference>
<dbReference type="PANTHER" id="PTHR24223">
    <property type="entry name" value="ATP-BINDING CASSETTE SUB-FAMILY C"/>
    <property type="match status" value="1"/>
</dbReference>
<dbReference type="PANTHER" id="PTHR24223:SF19">
    <property type="entry name" value="CYSTIC FIBROSIS TRANSMEMBRANE CONDUCTANCE REGULATOR"/>
    <property type="match status" value="1"/>
</dbReference>
<dbReference type="Pfam" id="PF00664">
    <property type="entry name" value="ABC_membrane"/>
    <property type="match status" value="2"/>
</dbReference>
<dbReference type="Pfam" id="PF00005">
    <property type="entry name" value="ABC_tran"/>
    <property type="match status" value="2"/>
</dbReference>
<dbReference type="Pfam" id="PF14396">
    <property type="entry name" value="CFTR_R"/>
    <property type="match status" value="1"/>
</dbReference>
<dbReference type="PRINTS" id="PR01851">
    <property type="entry name" value="CYSFIBREGLTR"/>
</dbReference>
<dbReference type="SMART" id="SM00382">
    <property type="entry name" value="AAA"/>
    <property type="match status" value="2"/>
</dbReference>
<dbReference type="SUPFAM" id="SSF90123">
    <property type="entry name" value="ABC transporter transmembrane region"/>
    <property type="match status" value="2"/>
</dbReference>
<dbReference type="SUPFAM" id="SSF52540">
    <property type="entry name" value="P-loop containing nucleoside triphosphate hydrolases"/>
    <property type="match status" value="2"/>
</dbReference>
<dbReference type="PROSITE" id="PS50929">
    <property type="entry name" value="ABC_TM1F"/>
    <property type="match status" value="2"/>
</dbReference>
<dbReference type="PROSITE" id="PS00211">
    <property type="entry name" value="ABC_TRANSPORTER_1"/>
    <property type="match status" value="1"/>
</dbReference>
<dbReference type="PROSITE" id="PS50893">
    <property type="entry name" value="ABC_TRANSPORTER_2"/>
    <property type="match status" value="2"/>
</dbReference>